<dbReference type="EMBL" id="U03698">
    <property type="protein sequence ID" value="AAA03719.1"/>
    <property type="molecule type" value="mRNA"/>
</dbReference>
<dbReference type="EMBL" id="M32317">
    <property type="protein sequence ID" value="AAA36230.1"/>
    <property type="molecule type" value="mRNA"/>
</dbReference>
<dbReference type="EMBL" id="M32320">
    <property type="protein sequence ID" value="AAA36233.1"/>
    <property type="molecule type" value="mRNA"/>
</dbReference>
<dbReference type="EMBL" id="M32319">
    <property type="protein sequence ID" value="AAA36232.1"/>
    <property type="molecule type" value="mRNA"/>
</dbReference>
<dbReference type="EMBL" id="M32318">
    <property type="protein sequence ID" value="AAA36231.1"/>
    <property type="molecule type" value="mRNA"/>
</dbReference>
<dbReference type="EMBL" id="M77774">
    <property type="protein sequence ID" value="AAA03686.1"/>
    <property type="molecule type" value="mRNA"/>
</dbReference>
<dbReference type="EMBL" id="M77778">
    <property type="protein sequence ID" value="AAA03687.1"/>
    <property type="molecule type" value="mRNA"/>
</dbReference>
<dbReference type="EMBL" id="M77776">
    <property type="protein sequence ID" value="AAA03689.1"/>
    <property type="molecule type" value="mRNA"/>
</dbReference>
<dbReference type="EMBL" id="X61710">
    <property type="protein sequence ID" value="CAA43879.1"/>
    <property type="molecule type" value="mRNA"/>
</dbReference>
<dbReference type="EMBL" id="X61706">
    <property type="protein sequence ID" value="CAA43875.1"/>
    <property type="molecule type" value="mRNA"/>
</dbReference>
<dbReference type="EMBL" id="X61708">
    <property type="protein sequence ID" value="CAA43877.1"/>
    <property type="molecule type" value="mRNA"/>
</dbReference>
<dbReference type="EMBL" id="M24037">
    <property type="protein sequence ID" value="AAA02950.1"/>
    <property type="molecule type" value="mRNA"/>
</dbReference>
<dbReference type="EMBL" id="M84380">
    <property type="protein sequence ID" value="AAA59629.1"/>
    <property type="molecule type" value="mRNA"/>
</dbReference>
<dbReference type="EMBL" id="L09736">
    <property type="protein sequence ID" value="AAA36224.1"/>
    <property type="molecule type" value="mRNA"/>
</dbReference>
<dbReference type="EMBL" id="D14343">
    <property type="protein sequence ID" value="BAA03277.1"/>
    <property type="molecule type" value="mRNA"/>
</dbReference>
<dbReference type="EMBL" id="M83193">
    <property type="protein sequence ID" value="AAA58628.1"/>
    <property type="molecule type" value="mRNA"/>
</dbReference>
<dbReference type="EMBL" id="L07743">
    <property type="protein sequence ID" value="AAA59621.1"/>
    <property type="molecule type" value="mRNA"/>
</dbReference>
<dbReference type="EMBL" id="X77658">
    <property type="protein sequence ID" value="CAA54739.1"/>
    <property type="molecule type" value="mRNA"/>
</dbReference>
<dbReference type="EMBL" id="U03859">
    <property type="protein sequence ID" value="AAA03601.1"/>
    <property type="molecule type" value="mRNA"/>
</dbReference>
<dbReference type="EMBL" id="U04787">
    <property type="protein sequence ID" value="AAA53175.1"/>
    <property type="molecule type" value="mRNA"/>
</dbReference>
<dbReference type="EMBL" id="L24373">
    <property type="protein sequence ID" value="AAA96733.1"/>
    <property type="molecule type" value="mRNA"/>
</dbReference>
<dbReference type="EMBL" id="D50291">
    <property type="protein sequence ID" value="BAA08822.1"/>
    <property type="molecule type" value="mRNA"/>
</dbReference>
<dbReference type="EMBL" id="L37880">
    <property type="protein sequence ID" value="AAC41941.1"/>
    <property type="molecule type" value="mRNA"/>
</dbReference>
<dbReference type="EMBL" id="L36591">
    <property type="protein sequence ID" value="AAA73509.1"/>
    <property type="molecule type" value="mRNA"/>
</dbReference>
<dbReference type="EMBL" id="U04243">
    <property type="protein sequence ID" value="AAA87396.1"/>
    <property type="molecule type" value="mRNA"/>
</dbReference>
<dbReference type="EMBL" id="X90390">
    <property type="protein sequence ID" value="CAA62035.1"/>
    <property type="molecule type" value="mRNA"/>
</dbReference>
<dbReference type="EMBL" id="U36492">
    <property type="protein sequence ID" value="AAB18369.1"/>
    <property type="molecule type" value="mRNA"/>
</dbReference>
<dbReference type="EMBL" id="D50292">
    <property type="protein sequence ID" value="BAA08823.1"/>
    <property type="molecule type" value="mRNA"/>
</dbReference>
<dbReference type="EMBL" id="AB008102">
    <property type="protein sequence ID" value="BAA22916.1"/>
    <property type="molecule type" value="mRNA"/>
</dbReference>
<dbReference type="EMBL" id="M11799">
    <property type="protein sequence ID" value="AAA59628.1"/>
    <property type="molecule type" value="Genomic_DNA"/>
</dbReference>
<dbReference type="EMBL" id="X03665">
    <property type="protein sequence ID" value="CAA27302.1"/>
    <property type="molecule type" value="Genomic_DNA"/>
</dbReference>
<dbReference type="EMBL" id="X03666">
    <property type="protein sequence ID" value="CAA27302.1"/>
    <property type="status" value="JOINED"/>
    <property type="molecule type" value="Genomic_DNA"/>
</dbReference>
<dbReference type="EMBL" id="M14013">
    <property type="protein sequence ID" value="AAA59643.1"/>
    <property type="molecule type" value="Genomic_DNA"/>
</dbReference>
<dbReference type="EMBL" id="M19757">
    <property type="protein sequence ID" value="AAA52657.1"/>
    <property type="molecule type" value="Genomic_DNA"/>
</dbReference>
<dbReference type="EMBL" id="M19756">
    <property type="protein sequence ID" value="AAA52664.1"/>
    <property type="molecule type" value="Genomic_DNA"/>
</dbReference>
<dbReference type="EMBL" id="M28115">
    <property type="protein sequence ID" value="AAA59617.1"/>
    <property type="molecule type" value="Genomic_DNA"/>
</dbReference>
<dbReference type="EMBL" id="M28109">
    <property type="protein sequence ID" value="AAA59617.1"/>
    <property type="status" value="JOINED"/>
    <property type="molecule type" value="Genomic_DNA"/>
</dbReference>
<dbReference type="EMBL" id="M28110">
    <property type="protein sequence ID" value="AAA59617.1"/>
    <property type="status" value="JOINED"/>
    <property type="molecule type" value="Genomic_DNA"/>
</dbReference>
<dbReference type="EMBL" id="M28111">
    <property type="protein sequence ID" value="AAA59617.1"/>
    <property type="status" value="JOINED"/>
    <property type="molecule type" value="Genomic_DNA"/>
</dbReference>
<dbReference type="EMBL" id="M28112">
    <property type="protein sequence ID" value="AAA59617.1"/>
    <property type="status" value="JOINED"/>
    <property type="molecule type" value="Genomic_DNA"/>
</dbReference>
<dbReference type="EMBL" id="M28113">
    <property type="protein sequence ID" value="AAA59617.1"/>
    <property type="status" value="JOINED"/>
    <property type="molecule type" value="Genomic_DNA"/>
</dbReference>
<dbReference type="EMBL" id="M28114">
    <property type="protein sequence ID" value="AAA59617.1"/>
    <property type="status" value="JOINED"/>
    <property type="molecule type" value="Genomic_DNA"/>
</dbReference>
<dbReference type="EMBL" id="L41087">
    <property type="protein sequence ID" value="AAA64513.1"/>
    <property type="molecule type" value="Genomic_DNA"/>
</dbReference>
<dbReference type="EMBL" id="L41086">
    <property type="protein sequence ID" value="AAA64513.1"/>
    <property type="status" value="JOINED"/>
    <property type="molecule type" value="Genomic_DNA"/>
</dbReference>
<dbReference type="EMBL" id="M24036">
    <property type="protein sequence ID" value="AAA52662.1"/>
    <property type="molecule type" value="Genomic_DNA"/>
</dbReference>
<dbReference type="EMBL" id="M24041">
    <property type="protein sequence ID" value="AAA59660.1"/>
    <property type="molecule type" value="Genomic_DNA"/>
</dbReference>
<dbReference type="EMBL" id="M24040">
    <property type="protein sequence ID" value="AAA59661.1"/>
    <property type="molecule type" value="Genomic_DNA"/>
</dbReference>
<dbReference type="EMBL" id="M24035">
    <property type="protein sequence ID" value="AAA59666.1"/>
    <property type="molecule type" value="Genomic_DNA"/>
</dbReference>
<dbReference type="EMBL" id="M24039">
    <property type="protein sequence ID" value="AAA59662.1"/>
    <property type="molecule type" value="Genomic_DNA"/>
</dbReference>
<dbReference type="EMBL" id="M24034">
    <property type="protein sequence ID" value="AAA59667.1"/>
    <property type="molecule type" value="Genomic_DNA"/>
</dbReference>
<dbReference type="EMBL" id="M24038">
    <property type="protein sequence ID" value="AAA59663.1"/>
    <property type="molecule type" value="Genomic_DNA"/>
</dbReference>
<dbReference type="EMBL" id="M24033">
    <property type="protein sequence ID" value="AAA59665.1"/>
    <property type="molecule type" value="mRNA"/>
</dbReference>
<dbReference type="EMBL" id="M58636">
    <property type="protein sequence ID" value="AAA36228.1"/>
    <property type="molecule type" value="Genomic_DNA"/>
</dbReference>
<dbReference type="EMBL" id="M33573">
    <property type="protein sequence ID" value="AAA59644.1"/>
    <property type="molecule type" value="Genomic_DNA"/>
</dbReference>
<dbReference type="EMBL" id="X55711">
    <property type="protein sequence ID" value="CAA39244.1"/>
    <property type="molecule type" value="Genomic_DNA"/>
</dbReference>
<dbReference type="EMBL" id="M94053">
    <property type="protein sequence ID" value="AAA52659.1"/>
    <property type="molecule type" value="Genomic_DNA"/>
</dbReference>
<dbReference type="EMBL" id="L41628">
    <property type="protein sequence ID" value="AAA65040.1"/>
    <property type="molecule type" value="Genomic_DNA"/>
</dbReference>
<dbReference type="EMBL" id="L17005">
    <property type="protein sequence ID" value="AAC37548.1"/>
    <property type="molecule type" value="mRNA"/>
</dbReference>
<dbReference type="EMBL" id="AJ292075">
    <property type="protein sequence ID" value="CAC33440.1"/>
    <property type="molecule type" value="Genomic_DNA"/>
</dbReference>
<dbReference type="EMBL" id="AJ295294">
    <property type="protein sequence ID" value="CAC18876.1"/>
    <property type="molecule type" value="Genomic_DNA"/>
</dbReference>
<dbReference type="EMBL" id="AJ310507">
    <property type="protein sequence ID" value="CAC34572.1"/>
    <property type="molecule type" value="Genomic_DNA"/>
</dbReference>
<dbReference type="EMBL" id="AJ309193">
    <property type="protein sequence ID" value="CAC38392.1"/>
    <property type="molecule type" value="Genomic_DNA"/>
</dbReference>
<dbReference type="EMBL" id="AJ309194">
    <property type="protein sequence ID" value="CAC38393.1"/>
    <property type="molecule type" value="Genomic_DNA"/>
</dbReference>
<dbReference type="EMBL" id="AJ458992">
    <property type="protein sequence ID" value="CAD30340.1"/>
    <property type="molecule type" value="Genomic_DNA"/>
</dbReference>
<dbReference type="EMBL" id="AJ310508">
    <property type="protein sequence ID" value="CAC34573.1"/>
    <property type="molecule type" value="Genomic_DNA"/>
</dbReference>
<dbReference type="EMBL" id="AJ308398">
    <property type="protein sequence ID" value="CAC33087.2"/>
    <property type="molecule type" value="Genomic_DNA"/>
</dbReference>
<dbReference type="EMBL" id="AJ309139">
    <property type="protein sequence ID" value="CAC38066.1"/>
    <property type="molecule type" value="Genomic_DNA"/>
</dbReference>
<dbReference type="EMBL" id="AJ310509">
    <property type="protein sequence ID" value="CAC34574.1"/>
    <property type="molecule type" value="Genomic_DNA"/>
</dbReference>
<dbReference type="EMBL" id="HM543719">
    <property type="protein sequence ID" value="ADU18071.1"/>
    <property type="molecule type" value="Genomic_DNA"/>
</dbReference>
<dbReference type="EMBL" id="HM543720">
    <property type="protein sequence ID" value="ADU18072.1"/>
    <property type="molecule type" value="Genomic_DNA"/>
</dbReference>
<dbReference type="EMBL" id="JF974053">
    <property type="protein sequence ID" value="AEN79482.1"/>
    <property type="molecule type" value="Genomic_DNA"/>
</dbReference>
<dbReference type="EMBL" id="U11267">
    <property type="protein sequence ID" value="AAA19927.1"/>
    <property type="molecule type" value="mRNA"/>
</dbReference>
<dbReference type="EMBL" id="U11261">
    <property type="protein sequence ID" value="AAA19921.1"/>
    <property type="molecule type" value="mRNA"/>
</dbReference>
<dbReference type="EMBL" id="D50300">
    <property type="protein sequence ID" value="BAA08829.1"/>
    <property type="molecule type" value="mRNA"/>
</dbReference>
<dbReference type="EMBL" id="U29057">
    <property type="protein sequence ID" value="AAA91229.1"/>
    <property type="molecule type" value="mRNA"/>
</dbReference>
<dbReference type="EMBL" id="U38800">
    <property type="protein sequence ID" value="AAC99997.1"/>
    <property type="molecule type" value="mRNA"/>
</dbReference>
<dbReference type="EMBL" id="U40498">
    <property type="protein sequence ID" value="AAD00010.1"/>
    <property type="molecule type" value="mRNA"/>
</dbReference>
<dbReference type="EMBL" id="AJ309936">
    <property type="protein sequence ID" value="CAC33891.1"/>
    <property type="molecule type" value="Genomic_DNA"/>
</dbReference>
<dbReference type="EMBL" id="AJ309047">
    <property type="protein sequence ID" value="CAC35468.1"/>
    <property type="molecule type" value="Genomic_DNA"/>
</dbReference>
<dbReference type="EMBL" id="AJ310358">
    <property type="protein sequence ID" value="CAC38763.1"/>
    <property type="molecule type" value="Genomic_DNA"/>
</dbReference>
<dbReference type="EMBL" id="AJ309192">
    <property type="protein sequence ID" value="CAC38391.1"/>
    <property type="molecule type" value="Genomic_DNA"/>
</dbReference>
<dbReference type="EMBL" id="MG525292">
    <property type="protein sequence ID" value="AUM84865.1"/>
    <property type="molecule type" value="Genomic_DNA"/>
</dbReference>
<dbReference type="EMBL" id="AY007140">
    <property type="protein sequence ID" value="AAG02001.1"/>
    <property type="molecule type" value="mRNA"/>
</dbReference>
<dbReference type="EMBL" id="BA000025">
    <property type="protein sequence ID" value="BAB63309.1"/>
    <property type="molecule type" value="Genomic_DNA"/>
</dbReference>
<dbReference type="EMBL" id="BC007243">
    <property type="protein sequence ID" value="AAH07243.1"/>
    <property type="molecule type" value="mRNA"/>
</dbReference>
<dbReference type="EMBL" id="AK313911">
    <property type="protein sequence ID" value="BAG36634.1"/>
    <property type="molecule type" value="mRNA"/>
</dbReference>
<dbReference type="EMBL" id="CR759828">
    <property type="status" value="NOT_ANNOTATED_CDS"/>
    <property type="molecule type" value="Genomic_DNA"/>
</dbReference>
<dbReference type="CCDS" id="CCDS34394.1"/>
<dbReference type="RefSeq" id="NP_005505.2">
    <property type="nucleotide sequence ID" value="NM_005514.7"/>
</dbReference>
<dbReference type="PDB" id="1A1M">
    <property type="method" value="X-ray"/>
    <property type="resolution" value="2.30 A"/>
    <property type="chains" value="A=25-300"/>
</dbReference>
<dbReference type="PDB" id="1A1N">
    <property type="method" value="X-ray"/>
    <property type="resolution" value="2.00 A"/>
    <property type="chains" value="A=25-300"/>
</dbReference>
<dbReference type="PDB" id="1A1O">
    <property type="method" value="X-ray"/>
    <property type="resolution" value="2.30 A"/>
    <property type="chains" value="A=25-300"/>
</dbReference>
<dbReference type="PDB" id="1A9B">
    <property type="method" value="X-ray"/>
    <property type="resolution" value="3.20 A"/>
    <property type="chains" value="A/D=25-301"/>
</dbReference>
<dbReference type="PDB" id="1A9E">
    <property type="method" value="X-ray"/>
    <property type="resolution" value="2.50 A"/>
    <property type="chains" value="A=25-301"/>
</dbReference>
<dbReference type="PDB" id="1AGB">
    <property type="method" value="X-ray"/>
    <property type="resolution" value="2.20 A"/>
    <property type="chains" value="A=25-300"/>
</dbReference>
<dbReference type="PDB" id="1AGC">
    <property type="method" value="X-ray"/>
    <property type="resolution" value="2.10 A"/>
    <property type="chains" value="A=25-300"/>
</dbReference>
<dbReference type="PDB" id="1AGD">
    <property type="method" value="X-ray"/>
    <property type="resolution" value="2.05 A"/>
    <property type="chains" value="A=25-300"/>
</dbReference>
<dbReference type="PDB" id="1AGE">
    <property type="method" value="X-ray"/>
    <property type="resolution" value="2.30 A"/>
    <property type="chains" value="A=25-300"/>
</dbReference>
<dbReference type="PDB" id="1AGF">
    <property type="method" value="X-ray"/>
    <property type="resolution" value="2.20 A"/>
    <property type="chains" value="A=25-300"/>
</dbReference>
<dbReference type="PDB" id="1CG9">
    <property type="method" value="X-ray"/>
    <property type="resolution" value="2.70 A"/>
    <property type="chains" value="A=25-301"/>
</dbReference>
<dbReference type="PDB" id="1E27">
    <property type="method" value="X-ray"/>
    <property type="resolution" value="2.20 A"/>
    <property type="chains" value="A=25-300"/>
</dbReference>
<dbReference type="PDB" id="1E28">
    <property type="method" value="X-ray"/>
    <property type="resolution" value="3.00 A"/>
    <property type="chains" value="A=25-300"/>
</dbReference>
<dbReference type="PDB" id="1HSA">
    <property type="method" value="X-ray"/>
    <property type="resolution" value="2.10 A"/>
    <property type="chains" value="A/D=25-300"/>
</dbReference>
<dbReference type="PDB" id="1JGD">
    <property type="method" value="X-ray"/>
    <property type="resolution" value="1.90 A"/>
    <property type="chains" value="A=25-300"/>
</dbReference>
<dbReference type="PDB" id="1JGE">
    <property type="method" value="X-ray"/>
    <property type="resolution" value="2.10 A"/>
    <property type="chains" value="A=25-300"/>
</dbReference>
<dbReference type="PDB" id="1K5N">
    <property type="method" value="X-ray"/>
    <property type="resolution" value="1.09 A"/>
    <property type="chains" value="A=25-300"/>
</dbReference>
<dbReference type="PDB" id="1M05">
    <property type="method" value="X-ray"/>
    <property type="resolution" value="1.90 A"/>
    <property type="chains" value="A/C=25-301"/>
</dbReference>
<dbReference type="PDB" id="1M6O">
    <property type="method" value="X-ray"/>
    <property type="resolution" value="1.60 A"/>
    <property type="chains" value="A=25-300"/>
</dbReference>
<dbReference type="PDB" id="1MI5">
    <property type="method" value="X-ray"/>
    <property type="resolution" value="2.50 A"/>
    <property type="chains" value="A=25-301"/>
</dbReference>
<dbReference type="PDB" id="1N2R">
    <property type="method" value="X-ray"/>
    <property type="resolution" value="1.70 A"/>
    <property type="chains" value="A=25-300"/>
</dbReference>
<dbReference type="PDB" id="1OF2">
    <property type="method" value="X-ray"/>
    <property type="resolution" value="2.20 A"/>
    <property type="chains" value="A=25-300"/>
</dbReference>
<dbReference type="PDB" id="1OGT">
    <property type="method" value="X-ray"/>
    <property type="resolution" value="1.47 A"/>
    <property type="chains" value="A=25-300"/>
</dbReference>
<dbReference type="PDB" id="1SYS">
    <property type="method" value="X-ray"/>
    <property type="resolution" value="2.40 A"/>
    <property type="chains" value="A=25-300"/>
</dbReference>
<dbReference type="PDB" id="1SYV">
    <property type="method" value="X-ray"/>
    <property type="resolution" value="1.70 A"/>
    <property type="chains" value="A=25-300"/>
</dbReference>
<dbReference type="PDB" id="1UXS">
    <property type="method" value="X-ray"/>
    <property type="resolution" value="1.55 A"/>
    <property type="chains" value="A=25-300"/>
</dbReference>
<dbReference type="PDB" id="1UXW">
    <property type="method" value="X-ray"/>
    <property type="resolution" value="1.71 A"/>
    <property type="chains" value="A=25-300"/>
</dbReference>
<dbReference type="PDB" id="1W0V">
    <property type="method" value="X-ray"/>
    <property type="resolution" value="2.27 A"/>
    <property type="chains" value="A=25-300"/>
</dbReference>
<dbReference type="PDB" id="1W0W">
    <property type="method" value="X-ray"/>
    <property type="resolution" value="2.11 A"/>
    <property type="chains" value="A=25-300"/>
</dbReference>
<dbReference type="PDB" id="1XH3">
    <property type="method" value="X-ray"/>
    <property type="resolution" value="1.48 A"/>
    <property type="chains" value="A=25-300"/>
</dbReference>
<dbReference type="PDB" id="1XR8">
    <property type="method" value="X-ray"/>
    <property type="resolution" value="2.30 A"/>
    <property type="chains" value="A=25-300"/>
</dbReference>
<dbReference type="PDB" id="1XR9">
    <property type="method" value="X-ray"/>
    <property type="resolution" value="1.79 A"/>
    <property type="chains" value="A=25-300"/>
</dbReference>
<dbReference type="PDB" id="1ZHK">
    <property type="method" value="X-ray"/>
    <property type="resolution" value="1.60 A"/>
    <property type="chains" value="A=25-300"/>
</dbReference>
<dbReference type="PDB" id="1ZHL">
    <property type="method" value="X-ray"/>
    <property type="resolution" value="1.50 A"/>
    <property type="chains" value="A=25-300"/>
</dbReference>
<dbReference type="PDB" id="1ZSD">
    <property type="method" value="X-ray"/>
    <property type="resolution" value="1.70 A"/>
    <property type="chains" value="A=25-300"/>
</dbReference>
<dbReference type="PDB" id="2A83">
    <property type="method" value="X-ray"/>
    <property type="resolution" value="1.40 A"/>
    <property type="chains" value="A=25-300"/>
</dbReference>
<dbReference type="PDB" id="2AK4">
    <property type="method" value="X-ray"/>
    <property type="resolution" value="2.50 A"/>
    <property type="chains" value="A/F/K/Q=25-300"/>
</dbReference>
<dbReference type="PDB" id="2AXF">
    <property type="method" value="X-ray"/>
    <property type="resolution" value="1.80 A"/>
    <property type="chains" value="A=25-300"/>
</dbReference>
<dbReference type="PDB" id="2AXG">
    <property type="method" value="X-ray"/>
    <property type="resolution" value="2.00 A"/>
    <property type="chains" value="A=25-300"/>
</dbReference>
<dbReference type="PDB" id="2BSR">
    <property type="method" value="X-ray"/>
    <property type="resolution" value="2.30 A"/>
    <property type="chains" value="A=25-300"/>
</dbReference>
<dbReference type="PDB" id="2BSS">
    <property type="method" value="X-ray"/>
    <property type="resolution" value="2.00 A"/>
    <property type="chains" value="A=25-300"/>
</dbReference>
<dbReference type="PDB" id="2BST">
    <property type="method" value="X-ray"/>
    <property type="resolution" value="2.10 A"/>
    <property type="chains" value="A=25-300"/>
</dbReference>
<dbReference type="PDB" id="2BVO">
    <property type="method" value="X-ray"/>
    <property type="resolution" value="1.65 A"/>
    <property type="chains" value="A=25-300"/>
</dbReference>
<dbReference type="PDB" id="2BVP">
    <property type="method" value="X-ray"/>
    <property type="resolution" value="1.35 A"/>
    <property type="chains" value="A=25-300"/>
</dbReference>
<dbReference type="PDB" id="2BVQ">
    <property type="method" value="X-ray"/>
    <property type="resolution" value="2.00 A"/>
    <property type="chains" value="A=25-300"/>
</dbReference>
<dbReference type="PDB" id="2H6P">
    <property type="method" value="X-ray"/>
    <property type="resolution" value="1.90 A"/>
    <property type="chains" value="A=25-300"/>
</dbReference>
<dbReference type="PDB" id="2HJL">
    <property type="method" value="X-ray"/>
    <property type="resolution" value="1.50 A"/>
    <property type="chains" value="A=25-298"/>
</dbReference>
<dbReference type="PDB" id="2NW3">
    <property type="method" value="X-ray"/>
    <property type="resolution" value="1.70 A"/>
    <property type="chains" value="A=25-300"/>
</dbReference>
<dbReference type="PDB" id="2NX5">
    <property type="method" value="X-ray"/>
    <property type="resolution" value="2.70 A"/>
    <property type="chains" value="A/F/K/Q=25-300"/>
</dbReference>
<dbReference type="PDB" id="2RFX">
    <property type="method" value="X-ray"/>
    <property type="resolution" value="2.50 A"/>
    <property type="chains" value="A=25-299"/>
</dbReference>
<dbReference type="PDB" id="2YPK">
    <property type="method" value="X-ray"/>
    <property type="resolution" value="1.95 A"/>
    <property type="chains" value="A=25-298"/>
</dbReference>
<dbReference type="PDB" id="2YPL">
    <property type="method" value="X-ray"/>
    <property type="resolution" value="2.40 A"/>
    <property type="chains" value="A=25-298"/>
</dbReference>
<dbReference type="PDB" id="3B3I">
    <property type="method" value="X-ray"/>
    <property type="resolution" value="1.86 A"/>
    <property type="chains" value="A=25-300"/>
</dbReference>
<dbReference type="PDB" id="3B6S">
    <property type="method" value="X-ray"/>
    <property type="resolution" value="1.80 A"/>
    <property type="chains" value="A=25-300"/>
</dbReference>
<dbReference type="PDB" id="3BP4">
    <property type="method" value="X-ray"/>
    <property type="resolution" value="1.85 A"/>
    <property type="chains" value="A=25-300"/>
</dbReference>
<dbReference type="PDB" id="3BP7">
    <property type="method" value="X-ray"/>
    <property type="resolution" value="1.80 A"/>
    <property type="chains" value="A=25-300"/>
</dbReference>
<dbReference type="PDB" id="3BW9">
    <property type="method" value="X-ray"/>
    <property type="resolution" value="1.75 A"/>
    <property type="chains" value="A=25-300"/>
</dbReference>
<dbReference type="PDB" id="3BWA">
    <property type="method" value="X-ray"/>
    <property type="resolution" value="1.30 A"/>
    <property type="chains" value="A=25-300"/>
</dbReference>
<dbReference type="PDB" id="3C9N">
    <property type="method" value="X-ray"/>
    <property type="resolution" value="1.87 A"/>
    <property type="chains" value="A=25-300"/>
</dbReference>
<dbReference type="PDB" id="3CZF">
    <property type="method" value="X-ray"/>
    <property type="resolution" value="1.20 A"/>
    <property type="chains" value="A=25-300"/>
</dbReference>
<dbReference type="PDB" id="3D18">
    <property type="method" value="X-ray"/>
    <property type="resolution" value="1.74 A"/>
    <property type="chains" value="A=25-300"/>
</dbReference>
<dbReference type="PDB" id="3DTX">
    <property type="method" value="X-ray"/>
    <property type="resolution" value="2.10 A"/>
    <property type="chains" value="A=25-300"/>
</dbReference>
<dbReference type="PDB" id="3DX6">
    <property type="method" value="X-ray"/>
    <property type="resolution" value="1.70 A"/>
    <property type="chains" value="A=25-300"/>
</dbReference>
<dbReference type="PDB" id="3DX7">
    <property type="method" value="X-ray"/>
    <property type="resolution" value="1.60 A"/>
    <property type="chains" value="A=25-300"/>
</dbReference>
<dbReference type="PDB" id="3DX8">
    <property type="method" value="X-ray"/>
    <property type="resolution" value="2.10 A"/>
    <property type="chains" value="A=25-300"/>
</dbReference>
<dbReference type="PDB" id="3DXA">
    <property type="method" value="X-ray"/>
    <property type="resolution" value="3.50 A"/>
    <property type="chains" value="A/F/K=25-300"/>
</dbReference>
<dbReference type="PDB" id="3FFC">
    <property type="method" value="X-ray"/>
    <property type="resolution" value="2.80 A"/>
    <property type="chains" value="A/F=25-301"/>
</dbReference>
<dbReference type="PDB" id="3HCV">
    <property type="method" value="X-ray"/>
    <property type="resolution" value="1.95 A"/>
    <property type="chains" value="A=25-300"/>
</dbReference>
<dbReference type="PDB" id="3KPL">
    <property type="method" value="X-ray"/>
    <property type="resolution" value="1.96 A"/>
    <property type="chains" value="A=25-300"/>
</dbReference>
<dbReference type="PDB" id="3KPM">
    <property type="method" value="X-ray"/>
    <property type="resolution" value="1.60 A"/>
    <property type="chains" value="A=25-300"/>
</dbReference>
<dbReference type="PDB" id="3KPN">
    <property type="method" value="X-ray"/>
    <property type="resolution" value="2.00 A"/>
    <property type="chains" value="A=25-300"/>
</dbReference>
<dbReference type="PDB" id="3KPO">
    <property type="method" value="X-ray"/>
    <property type="resolution" value="2.30 A"/>
    <property type="chains" value="A=25-300"/>
</dbReference>
<dbReference type="PDB" id="3KPP">
    <property type="method" value="X-ray"/>
    <property type="resolution" value="1.90 A"/>
    <property type="chains" value="A=25-300"/>
</dbReference>
<dbReference type="PDB" id="3KPQ">
    <property type="method" value="X-ray"/>
    <property type="resolution" value="1.84 A"/>
    <property type="chains" value="A=25-300"/>
</dbReference>
<dbReference type="PDB" id="3KPR">
    <property type="method" value="X-ray"/>
    <property type="resolution" value="2.60 A"/>
    <property type="chains" value="A/F=25-300"/>
</dbReference>
<dbReference type="PDB" id="3KPS">
    <property type="method" value="X-ray"/>
    <property type="resolution" value="2.70 A"/>
    <property type="chains" value="A=25-300"/>
</dbReference>
<dbReference type="PDB" id="3KWW">
    <property type="method" value="X-ray"/>
    <property type="resolution" value="2.18 A"/>
    <property type="chains" value="A=25-300"/>
</dbReference>
<dbReference type="PDB" id="3KXF">
    <property type="method" value="X-ray"/>
    <property type="resolution" value="3.10 A"/>
    <property type="chains" value="A/C/I/K=25-300"/>
</dbReference>
<dbReference type="PDB" id="3L3D">
    <property type="method" value="X-ray"/>
    <property type="resolution" value="1.80 A"/>
    <property type="chains" value="A=25-300"/>
</dbReference>
<dbReference type="PDB" id="3L3G">
    <property type="method" value="X-ray"/>
    <property type="resolution" value="2.10 A"/>
    <property type="chains" value="A=25-300"/>
</dbReference>
<dbReference type="PDB" id="3L3I">
    <property type="method" value="X-ray"/>
    <property type="resolution" value="1.70 A"/>
    <property type="chains" value="A=25-300"/>
</dbReference>
<dbReference type="PDB" id="3L3J">
    <property type="method" value="X-ray"/>
    <property type="resolution" value="2.40 A"/>
    <property type="chains" value="A=25-300"/>
</dbReference>
<dbReference type="PDB" id="3L3K">
    <property type="method" value="X-ray"/>
    <property type="resolution" value="2.60 A"/>
    <property type="chains" value="A=25-300"/>
</dbReference>
<dbReference type="PDB" id="3LKN">
    <property type="method" value="X-ray"/>
    <property type="resolution" value="2.00 A"/>
    <property type="chains" value="A=25-300"/>
</dbReference>
<dbReference type="PDB" id="3LKO">
    <property type="method" value="X-ray"/>
    <property type="resolution" value="1.80 A"/>
    <property type="chains" value="A=25-300"/>
</dbReference>
<dbReference type="PDB" id="3LKP">
    <property type="method" value="X-ray"/>
    <property type="resolution" value="1.80 A"/>
    <property type="chains" value="A=25-300"/>
</dbReference>
<dbReference type="PDB" id="3LKQ">
    <property type="method" value="X-ray"/>
    <property type="resolution" value="1.80 A"/>
    <property type="chains" value="A=25-300"/>
</dbReference>
<dbReference type="PDB" id="3LKR">
    <property type="method" value="X-ray"/>
    <property type="resolution" value="2.00 A"/>
    <property type="chains" value="A=25-300"/>
</dbReference>
<dbReference type="PDB" id="3LKS">
    <property type="method" value="X-ray"/>
    <property type="resolution" value="1.90 A"/>
    <property type="chains" value="A=25-300"/>
</dbReference>
<dbReference type="PDB" id="3LN4">
    <property type="method" value="X-ray"/>
    <property type="resolution" value="1.30 A"/>
    <property type="chains" value="A=25-298"/>
</dbReference>
<dbReference type="PDB" id="3LN5">
    <property type="method" value="X-ray"/>
    <property type="resolution" value="1.90 A"/>
    <property type="chains" value="A=25-298"/>
</dbReference>
<dbReference type="PDB" id="3LV3">
    <property type="method" value="X-ray"/>
    <property type="resolution" value="1.94 A"/>
    <property type="chains" value="A=25-300"/>
</dbReference>
<dbReference type="PDB" id="3MV7">
    <property type="method" value="X-ray"/>
    <property type="resolution" value="2.00 A"/>
    <property type="chains" value="A=25-300"/>
</dbReference>
<dbReference type="PDB" id="3MV8">
    <property type="method" value="X-ray"/>
    <property type="resolution" value="2.10 A"/>
    <property type="chains" value="A=25-300"/>
</dbReference>
<dbReference type="PDB" id="3MV9">
    <property type="method" value="X-ray"/>
    <property type="resolution" value="2.70 A"/>
    <property type="chains" value="A=25-300"/>
</dbReference>
<dbReference type="PDB" id="3SJV">
    <property type="method" value="X-ray"/>
    <property type="resolution" value="3.10 A"/>
    <property type="chains" value="A/F/K/P=25-301"/>
</dbReference>
<dbReference type="PDB" id="3SKM">
    <property type="method" value="X-ray"/>
    <property type="resolution" value="1.80 A"/>
    <property type="chains" value="A=25-300"/>
</dbReference>
<dbReference type="PDB" id="3SKO">
    <property type="method" value="X-ray"/>
    <property type="resolution" value="1.60 A"/>
    <property type="chains" value="A=25-301"/>
</dbReference>
<dbReference type="PDB" id="3SPV">
    <property type="method" value="X-ray"/>
    <property type="resolution" value="1.30 A"/>
    <property type="chains" value="A=25-300"/>
</dbReference>
<dbReference type="PDB" id="3UPR">
    <property type="method" value="X-ray"/>
    <property type="resolution" value="2.00 A"/>
    <property type="chains" value="A/C=25-300"/>
</dbReference>
<dbReference type="PDB" id="3VCL">
    <property type="method" value="X-ray"/>
    <property type="resolution" value="1.70 A"/>
    <property type="chains" value="A=25-299"/>
</dbReference>
<dbReference type="PDB" id="3VFS">
    <property type="method" value="X-ray"/>
    <property type="resolution" value="1.85 A"/>
    <property type="chains" value="A=25-300"/>
</dbReference>
<dbReference type="PDB" id="3VFT">
    <property type="method" value="X-ray"/>
    <property type="resolution" value="1.95 A"/>
    <property type="chains" value="A=25-300"/>
</dbReference>
<dbReference type="PDB" id="3VFU">
    <property type="method" value="X-ray"/>
    <property type="resolution" value="1.65 A"/>
    <property type="chains" value="A=25-300"/>
</dbReference>
<dbReference type="PDB" id="3VFV">
    <property type="method" value="X-ray"/>
    <property type="resolution" value="1.55 A"/>
    <property type="chains" value="A=25-300"/>
</dbReference>
<dbReference type="PDB" id="3VFW">
    <property type="method" value="X-ray"/>
    <property type="resolution" value="2.30 A"/>
    <property type="chains" value="A=25-300"/>
</dbReference>
<dbReference type="PDB" id="3VH8">
    <property type="method" value="X-ray"/>
    <property type="resolution" value="1.80 A"/>
    <property type="chains" value="A/D=25-299"/>
</dbReference>
<dbReference type="PDB" id="3VRI">
    <property type="method" value="X-ray"/>
    <property type="resolution" value="1.60 A"/>
    <property type="chains" value="A=25-300"/>
</dbReference>
<dbReference type="PDB" id="3VRJ">
    <property type="method" value="X-ray"/>
    <property type="resolution" value="1.90 A"/>
    <property type="chains" value="A=25-300"/>
</dbReference>
<dbReference type="PDB" id="3W39">
    <property type="method" value="X-ray"/>
    <property type="resolution" value="3.10 A"/>
    <property type="chains" value="A/D=25-300"/>
</dbReference>
<dbReference type="PDB" id="3WUW">
    <property type="method" value="X-ray"/>
    <property type="resolution" value="2.00 A"/>
    <property type="chains" value="A=25-299"/>
</dbReference>
<dbReference type="PDB" id="3X11">
    <property type="method" value="X-ray"/>
    <property type="resolution" value="2.15 A"/>
    <property type="chains" value="A=25-300"/>
</dbReference>
<dbReference type="PDB" id="3X12">
    <property type="method" value="X-ray"/>
    <property type="resolution" value="1.80 A"/>
    <property type="chains" value="A=25-300"/>
</dbReference>
<dbReference type="PDB" id="3X13">
    <property type="method" value="X-ray"/>
    <property type="resolution" value="1.80 A"/>
    <property type="chains" value="A=25-300"/>
</dbReference>
<dbReference type="PDB" id="3X14">
    <property type="method" value="X-ray"/>
    <property type="resolution" value="2.00 A"/>
    <property type="chains" value="A=25-300"/>
</dbReference>
<dbReference type="PDB" id="4G8G">
    <property type="method" value="X-ray"/>
    <property type="resolution" value="2.40 A"/>
    <property type="chains" value="A=25-300"/>
</dbReference>
<dbReference type="PDB" id="4G8I">
    <property type="method" value="X-ray"/>
    <property type="resolution" value="1.60 A"/>
    <property type="chains" value="A=25-300"/>
</dbReference>
<dbReference type="PDB" id="4G9D">
    <property type="method" value="X-ray"/>
    <property type="resolution" value="1.60 A"/>
    <property type="chains" value="A=25-300"/>
</dbReference>
<dbReference type="PDB" id="4G9F">
    <property type="method" value="X-ray"/>
    <property type="resolution" value="1.90 A"/>
    <property type="chains" value="A=25-300"/>
</dbReference>
<dbReference type="PDB" id="4JQV">
    <property type="method" value="X-ray"/>
    <property type="resolution" value="1.50 A"/>
    <property type="chains" value="A=25-302"/>
</dbReference>
<dbReference type="PDB" id="4JQX">
    <property type="method" value="X-ray"/>
    <property type="resolution" value="1.90 A"/>
    <property type="chains" value="A=25-302"/>
</dbReference>
<dbReference type="PDB" id="4LCY">
    <property type="method" value="X-ray"/>
    <property type="resolution" value="1.60 A"/>
    <property type="chains" value="A/F=25-298"/>
</dbReference>
<dbReference type="PDB" id="4LNR">
    <property type="method" value="X-ray"/>
    <property type="resolution" value="2.00 A"/>
    <property type="chains" value="A=25-300"/>
</dbReference>
<dbReference type="PDB" id="4MJI">
    <property type="method" value="X-ray"/>
    <property type="resolution" value="2.99 A"/>
    <property type="chains" value="A/F=25-300"/>
</dbReference>
<dbReference type="PDB" id="4O2C">
    <property type="method" value="X-ray"/>
    <property type="resolution" value="1.80 A"/>
    <property type="chains" value="A=25-298"/>
</dbReference>
<dbReference type="PDB" id="4O2E">
    <property type="method" value="X-ray"/>
    <property type="resolution" value="1.98 A"/>
    <property type="chains" value="A/D=25-298"/>
</dbReference>
<dbReference type="PDB" id="4O2F">
    <property type="method" value="X-ray"/>
    <property type="resolution" value="1.90 A"/>
    <property type="chains" value="A/D=25-298"/>
</dbReference>
<dbReference type="PDB" id="4PR5">
    <property type="method" value="X-ray"/>
    <property type="resolution" value="1.80 A"/>
    <property type="chains" value="A=25-300"/>
</dbReference>
<dbReference type="PDB" id="4PRN">
    <property type="method" value="X-ray"/>
    <property type="resolution" value="1.65 A"/>
    <property type="chains" value="A=25-300"/>
</dbReference>
<dbReference type="PDB" id="4QRP">
    <property type="method" value="X-ray"/>
    <property type="resolution" value="2.90 A"/>
    <property type="chains" value="A/F=25-300"/>
</dbReference>
<dbReference type="PDB" id="4QRQ">
    <property type="method" value="X-ray"/>
    <property type="resolution" value="1.70 A"/>
    <property type="chains" value="A=25-300"/>
</dbReference>
<dbReference type="PDB" id="4QRR">
    <property type="method" value="X-ray"/>
    <property type="resolution" value="3.00 A"/>
    <property type="chains" value="A=25-300"/>
</dbReference>
<dbReference type="PDB" id="4QRS">
    <property type="method" value="X-ray"/>
    <property type="resolution" value="1.40 A"/>
    <property type="chains" value="A=25-300"/>
</dbReference>
<dbReference type="PDB" id="4QRT">
    <property type="method" value="X-ray"/>
    <property type="resolution" value="1.40 A"/>
    <property type="chains" value="A=25-300"/>
</dbReference>
<dbReference type="PDB" id="4QRU">
    <property type="method" value="X-ray"/>
    <property type="resolution" value="1.60 A"/>
    <property type="chains" value="A=25-300"/>
</dbReference>
<dbReference type="PDB" id="4U1H">
    <property type="method" value="X-ray"/>
    <property type="resolution" value="1.59 A"/>
    <property type="chains" value="A=25-300"/>
</dbReference>
<dbReference type="PDB" id="4U1I">
    <property type="method" value="X-ray"/>
    <property type="resolution" value="1.92 A"/>
    <property type="chains" value="A=25-301"/>
</dbReference>
<dbReference type="PDB" id="4U1J">
    <property type="method" value="X-ray"/>
    <property type="resolution" value="1.38 A"/>
    <property type="chains" value="A=25-301"/>
</dbReference>
<dbReference type="PDB" id="4U1K">
    <property type="method" value="X-ray"/>
    <property type="resolution" value="2.09 A"/>
    <property type="chains" value="A/D=25-300"/>
</dbReference>
<dbReference type="PDB" id="4U1L">
    <property type="method" value="X-ray"/>
    <property type="resolution" value="2.06 A"/>
    <property type="chains" value="A/D=25-300"/>
</dbReference>
<dbReference type="PDB" id="4U1M">
    <property type="method" value="X-ray"/>
    <property type="resolution" value="1.18 A"/>
    <property type="chains" value="A=25-301"/>
</dbReference>
<dbReference type="PDB" id="4U1N">
    <property type="method" value="X-ray"/>
    <property type="resolution" value="1.77 A"/>
    <property type="chains" value="A=25-301"/>
</dbReference>
<dbReference type="PDB" id="4U1S">
    <property type="method" value="X-ray"/>
    <property type="resolution" value="1.76 A"/>
    <property type="chains" value="A=25-301"/>
</dbReference>
<dbReference type="PDB" id="4XXC">
    <property type="method" value="X-ray"/>
    <property type="resolution" value="1.43 A"/>
    <property type="chains" value="A=25-303"/>
</dbReference>
<dbReference type="PDB" id="5B38">
    <property type="method" value="X-ray"/>
    <property type="resolution" value="2.30 A"/>
    <property type="chains" value="A=25-300"/>
</dbReference>
<dbReference type="PDB" id="5B39">
    <property type="method" value="X-ray"/>
    <property type="resolution" value="2.50 A"/>
    <property type="chains" value="A=25-300"/>
</dbReference>
<dbReference type="PDB" id="5DEF">
    <property type="method" value="X-ray"/>
    <property type="resolution" value="1.60 A"/>
    <property type="chains" value="A=25-300"/>
</dbReference>
<dbReference type="PDB" id="5DEG">
    <property type="method" value="X-ray"/>
    <property type="resolution" value="1.83 A"/>
    <property type="chains" value="A=25-300"/>
</dbReference>
<dbReference type="PDB" id="5EO0">
    <property type="method" value="X-ray"/>
    <property type="resolution" value="1.70 A"/>
    <property type="chains" value="A=25-299"/>
</dbReference>
<dbReference type="PDB" id="5EO1">
    <property type="method" value="X-ray"/>
    <property type="resolution" value="1.85 A"/>
    <property type="chains" value="A=25-299"/>
</dbReference>
<dbReference type="PDB" id="5IB1">
    <property type="method" value="X-ray"/>
    <property type="resolution" value="1.91 A"/>
    <property type="chains" value="A=25-300"/>
</dbReference>
<dbReference type="PDB" id="5IB2">
    <property type="method" value="X-ray"/>
    <property type="resolution" value="1.44 A"/>
    <property type="chains" value="A=25-300"/>
</dbReference>
<dbReference type="PDB" id="5IB3">
    <property type="method" value="X-ray"/>
    <property type="resolution" value="1.91 A"/>
    <property type="chains" value="A=25-300"/>
</dbReference>
<dbReference type="PDB" id="5IB4">
    <property type="method" value="X-ray"/>
    <property type="resolution" value="1.95 A"/>
    <property type="chains" value="A=25-300"/>
</dbReference>
<dbReference type="PDB" id="5IB5">
    <property type="method" value="X-ray"/>
    <property type="resolution" value="2.49 A"/>
    <property type="chains" value="A/D=25-300"/>
</dbReference>
<dbReference type="PDB" id="5IEH">
    <property type="method" value="X-ray"/>
    <property type="resolution" value="1.50 A"/>
    <property type="chains" value="A=25-300"/>
</dbReference>
<dbReference type="PDB" id="5IEK">
    <property type="method" value="X-ray"/>
    <property type="resolution" value="1.80 A"/>
    <property type="chains" value="A=25-300"/>
</dbReference>
<dbReference type="PDB" id="5IM7">
    <property type="method" value="X-ray"/>
    <property type="resolution" value="2.50 A"/>
    <property type="chains" value="A/C=25-300"/>
</dbReference>
<dbReference type="PDB" id="5INC">
    <property type="method" value="X-ray"/>
    <property type="resolution" value="2.88 A"/>
    <property type="chains" value="A/C=25-300"/>
</dbReference>
<dbReference type="PDB" id="5IND">
    <property type="method" value="X-ray"/>
    <property type="resolution" value="2.13 A"/>
    <property type="chains" value="A/C=25-300"/>
</dbReference>
<dbReference type="PDB" id="5T6W">
    <property type="method" value="X-ray"/>
    <property type="resolution" value="1.90 A"/>
    <property type="chains" value="A=25-300"/>
</dbReference>
<dbReference type="PDB" id="5T6X">
    <property type="method" value="X-ray"/>
    <property type="resolution" value="1.69 A"/>
    <property type="chains" value="A=25-300"/>
</dbReference>
<dbReference type="PDB" id="5T6Y">
    <property type="method" value="X-ray"/>
    <property type="resolution" value="1.76 A"/>
    <property type="chains" value="A=25-300"/>
</dbReference>
<dbReference type="PDB" id="5T6Z">
    <property type="method" value="X-ray"/>
    <property type="resolution" value="2.00 A"/>
    <property type="chains" value="A=25-300"/>
</dbReference>
<dbReference type="PDB" id="5T70">
    <property type="method" value="X-ray"/>
    <property type="resolution" value="2.10 A"/>
    <property type="chains" value="A=25-300"/>
</dbReference>
<dbReference type="PDB" id="5TXS">
    <property type="method" value="X-ray"/>
    <property type="resolution" value="1.70 A"/>
    <property type="chains" value="A=25-304"/>
</dbReference>
<dbReference type="PDB" id="5U98">
    <property type="method" value="X-ray"/>
    <property type="resolution" value="2.00 A"/>
    <property type="chains" value="A/D=25-300"/>
</dbReference>
<dbReference type="PDB" id="5V5L">
    <property type="method" value="X-ray"/>
    <property type="resolution" value="2.00 A"/>
    <property type="chains" value="A/C=25-300"/>
</dbReference>
<dbReference type="PDB" id="5V5M">
    <property type="method" value="X-ray"/>
    <property type="resolution" value="2.88 A"/>
    <property type="chains" value="A/C=25-300"/>
</dbReference>
<dbReference type="PDB" id="5VUD">
    <property type="method" value="X-ray"/>
    <property type="resolution" value="2.00 A"/>
    <property type="chains" value="A=25-300"/>
</dbReference>
<dbReference type="PDB" id="5VUE">
    <property type="method" value="X-ray"/>
    <property type="resolution" value="1.80 A"/>
    <property type="chains" value="A=25-300"/>
</dbReference>
<dbReference type="PDB" id="5VUF">
    <property type="method" value="X-ray"/>
    <property type="resolution" value="1.90 A"/>
    <property type="chains" value="A=25-300"/>
</dbReference>
<dbReference type="PDB" id="5VWD">
    <property type="method" value="X-ray"/>
    <property type="resolution" value="1.80 A"/>
    <property type="chains" value="A=25-300"/>
</dbReference>
<dbReference type="PDB" id="5VWF">
    <property type="method" value="X-ray"/>
    <property type="resolution" value="1.80 A"/>
    <property type="chains" value="A=25-300"/>
</dbReference>
<dbReference type="PDB" id="5VWH">
    <property type="method" value="X-ray"/>
    <property type="resolution" value="1.65 A"/>
    <property type="chains" value="A=25-300"/>
</dbReference>
<dbReference type="PDB" id="5VWJ">
    <property type="method" value="X-ray"/>
    <property type="resolution" value="2.00 A"/>
    <property type="chains" value="A=25-300"/>
</dbReference>
<dbReference type="PDB" id="5VZ5">
    <property type="method" value="X-ray"/>
    <property type="resolution" value="2.59 A"/>
    <property type="chains" value="A=25-304"/>
</dbReference>
<dbReference type="PDB" id="5WMN">
    <property type="method" value="X-ray"/>
    <property type="resolution" value="1.82 A"/>
    <property type="chains" value="A/C=25-300"/>
</dbReference>
<dbReference type="PDB" id="5WMO">
    <property type="method" value="X-ray"/>
    <property type="resolution" value="1.62 A"/>
    <property type="chains" value="A=25-300"/>
</dbReference>
<dbReference type="PDB" id="5WMP">
    <property type="method" value="X-ray"/>
    <property type="resolution" value="1.60 A"/>
    <property type="chains" value="A=25-300"/>
</dbReference>
<dbReference type="PDB" id="5WMQ">
    <property type="method" value="X-ray"/>
    <property type="resolution" value="1.40 A"/>
    <property type="chains" value="A=25-300"/>
</dbReference>
<dbReference type="PDB" id="5WMR">
    <property type="method" value="X-ray"/>
    <property type="resolution" value="1.58 A"/>
    <property type="chains" value="A=25-300"/>
</dbReference>
<dbReference type="PDB" id="5XOS">
    <property type="method" value="X-ray"/>
    <property type="resolution" value="1.70 A"/>
    <property type="chains" value="A=25-300"/>
</dbReference>
<dbReference type="PDB" id="5XOT">
    <property type="method" value="X-ray"/>
    <property type="resolution" value="2.79 A"/>
    <property type="chains" value="A=25-300"/>
</dbReference>
<dbReference type="PDB" id="6AT5">
    <property type="method" value="X-ray"/>
    <property type="resolution" value="1.50 A"/>
    <property type="chains" value="A=1-362"/>
</dbReference>
<dbReference type="PDB" id="6AVF">
    <property type="method" value="X-ray"/>
    <property type="resolution" value="2.03 A"/>
    <property type="chains" value="H=1-362"/>
</dbReference>
<dbReference type="PDB" id="6AVG">
    <property type="method" value="X-ray"/>
    <property type="resolution" value="2.60 A"/>
    <property type="chains" value="F/G=1-362"/>
</dbReference>
<dbReference type="PDB" id="6BJ2">
    <property type="method" value="X-ray"/>
    <property type="resolution" value="3.35 A"/>
    <property type="chains" value="A=25-300"/>
</dbReference>
<dbReference type="PDB" id="6BJ3">
    <property type="method" value="X-ray"/>
    <property type="resolution" value="1.90 A"/>
    <property type="chains" value="A=25-300"/>
</dbReference>
<dbReference type="PDB" id="6BJ8">
    <property type="method" value="X-ray"/>
    <property type="resolution" value="1.75 A"/>
    <property type="chains" value="A=25-300"/>
</dbReference>
<dbReference type="PDB" id="6BXP">
    <property type="method" value="X-ray"/>
    <property type="resolution" value="1.45 A"/>
    <property type="chains" value="A=25-300"/>
</dbReference>
<dbReference type="PDB" id="6BXQ">
    <property type="method" value="X-ray"/>
    <property type="resolution" value="1.58 A"/>
    <property type="chains" value="B=25-300"/>
</dbReference>
<dbReference type="PDB" id="6D29">
    <property type="method" value="X-ray"/>
    <property type="resolution" value="1.88 A"/>
    <property type="chains" value="A=25-300"/>
</dbReference>
<dbReference type="PDB" id="6D2B">
    <property type="method" value="X-ray"/>
    <property type="resolution" value="2.04 A"/>
    <property type="chains" value="A=25-300"/>
</dbReference>
<dbReference type="PDB" id="6D2R">
    <property type="method" value="X-ray"/>
    <property type="resolution" value="1.83 A"/>
    <property type="chains" value="A=25-300"/>
</dbReference>
<dbReference type="PDB" id="6D2T">
    <property type="method" value="X-ray"/>
    <property type="resolution" value="1.90 A"/>
    <property type="chains" value="A=25-300"/>
</dbReference>
<dbReference type="PDB" id="6MT3">
    <property type="method" value="X-ray"/>
    <property type="resolution" value="1.21 A"/>
    <property type="chains" value="A=25-300"/>
</dbReference>
<dbReference type="PDB" id="6MT4">
    <property type="method" value="X-ray"/>
    <property type="resolution" value="1.55 A"/>
    <property type="chains" value="A=25-300"/>
</dbReference>
<dbReference type="PDB" id="6MT5">
    <property type="method" value="X-ray"/>
    <property type="resolution" value="1.55 A"/>
    <property type="chains" value="A=25-300"/>
</dbReference>
<dbReference type="PDB" id="6MT6">
    <property type="method" value="X-ray"/>
    <property type="resolution" value="1.31 A"/>
    <property type="chains" value="A=25-300"/>
</dbReference>
<dbReference type="PDB" id="6MTL">
    <property type="method" value="X-ray"/>
    <property type="resolution" value="1.35 A"/>
    <property type="chains" value="A=25-300"/>
</dbReference>
<dbReference type="PDB" id="6MTM">
    <property type="method" value="X-ray"/>
    <property type="resolution" value="3.00 A"/>
    <property type="chains" value="A=25-300"/>
</dbReference>
<dbReference type="PDB" id="6P23">
    <property type="method" value="X-ray"/>
    <property type="resolution" value="1.59 A"/>
    <property type="chains" value="A=25-300"/>
</dbReference>
<dbReference type="PDB" id="6P27">
    <property type="method" value="X-ray"/>
    <property type="resolution" value="1.59 A"/>
    <property type="chains" value="A=25-300"/>
</dbReference>
<dbReference type="PDB" id="6P2C">
    <property type="method" value="X-ray"/>
    <property type="resolution" value="1.40 A"/>
    <property type="chains" value="A=25-300"/>
</dbReference>
<dbReference type="PDB" id="6P2F">
    <property type="method" value="X-ray"/>
    <property type="resolution" value="1.48 A"/>
    <property type="chains" value="A=25-300"/>
</dbReference>
<dbReference type="PDB" id="6P2S">
    <property type="method" value="X-ray"/>
    <property type="resolution" value="1.65 A"/>
    <property type="chains" value="A=25-300"/>
</dbReference>
<dbReference type="PDB" id="6PYJ">
    <property type="method" value="X-ray"/>
    <property type="resolution" value="1.44 A"/>
    <property type="chains" value="A=25-300"/>
</dbReference>
<dbReference type="PDB" id="6PYL">
    <property type="method" value="X-ray"/>
    <property type="resolution" value="1.52 A"/>
    <property type="chains" value="A=25-300"/>
</dbReference>
<dbReference type="PDB" id="6PYV">
    <property type="method" value="X-ray"/>
    <property type="resolution" value="1.45 A"/>
    <property type="chains" value="A=25-300"/>
</dbReference>
<dbReference type="PDB" id="6PYW">
    <property type="method" value="X-ray"/>
    <property type="resolution" value="1.38 A"/>
    <property type="chains" value="A=25-300"/>
</dbReference>
<dbReference type="PDB" id="6PZ5">
    <property type="method" value="X-ray"/>
    <property type="resolution" value="1.53 A"/>
    <property type="chains" value="A=25-300"/>
</dbReference>
<dbReference type="PDB" id="6UJ7">
    <property type="method" value="X-ray"/>
    <property type="resolution" value="1.90 A"/>
    <property type="chains" value="A/D=25-304"/>
</dbReference>
<dbReference type="PDB" id="6UJ8">
    <property type="method" value="X-ray"/>
    <property type="resolution" value="2.25 A"/>
    <property type="chains" value="A/D=25-304"/>
</dbReference>
<dbReference type="PDB" id="6UJ9">
    <property type="method" value="X-ray"/>
    <property type="resolution" value="2.90 A"/>
    <property type="chains" value="A=25-304"/>
</dbReference>
<dbReference type="PDB" id="6VMX">
    <property type="method" value="X-ray"/>
    <property type="resolution" value="3.10 A"/>
    <property type="chains" value="A/F=25-300"/>
</dbReference>
<dbReference type="PDB" id="7LFZ">
    <property type="method" value="X-ray"/>
    <property type="resolution" value="1.90 A"/>
    <property type="chains" value="A=25-299"/>
</dbReference>
<dbReference type="PDB" id="7LG0">
    <property type="method" value="X-ray"/>
    <property type="resolution" value="2.30 A"/>
    <property type="chains" value="A=25-299"/>
</dbReference>
<dbReference type="PDB" id="7LGD">
    <property type="method" value="X-ray"/>
    <property type="resolution" value="2.88 A"/>
    <property type="chains" value="A/C=25-302"/>
</dbReference>
<dbReference type="PDB" id="7LGT">
    <property type="method" value="X-ray"/>
    <property type="resolution" value="1.97 A"/>
    <property type="chains" value="A/C=25-302"/>
</dbReference>
<dbReference type="PDB" id="7RZD">
    <property type="method" value="X-ray"/>
    <property type="resolution" value="1.82 A"/>
    <property type="chains" value="A=25-299"/>
</dbReference>
<dbReference type="PDB" id="7RZJ">
    <property type="method" value="X-ray"/>
    <property type="resolution" value="1.80 A"/>
    <property type="chains" value="A=25-299"/>
</dbReference>
<dbReference type="PDB" id="7S79">
    <property type="method" value="X-ray"/>
    <property type="resolution" value="1.53 A"/>
    <property type="chains" value="A=25-299"/>
</dbReference>
<dbReference type="PDB" id="7S7D">
    <property type="method" value="X-ray"/>
    <property type="resolution" value="1.56 A"/>
    <property type="chains" value="A=25-299"/>
</dbReference>
<dbReference type="PDB" id="7S7E">
    <property type="method" value="X-ray"/>
    <property type="resolution" value="2.04 A"/>
    <property type="chains" value="A=25-299"/>
</dbReference>
<dbReference type="PDB" id="7S7F">
    <property type="method" value="X-ray"/>
    <property type="resolution" value="1.88 A"/>
    <property type="chains" value="A=25-299"/>
</dbReference>
<dbReference type="PDB" id="7S8A">
    <property type="method" value="X-ray"/>
    <property type="resolution" value="2.10 A"/>
    <property type="chains" value="A=25-299"/>
</dbReference>
<dbReference type="PDB" id="7S8E">
    <property type="method" value="X-ray"/>
    <property type="resolution" value="1.60 A"/>
    <property type="chains" value="A=25-299"/>
</dbReference>
<dbReference type="PDB" id="7S8F">
    <property type="method" value="X-ray"/>
    <property type="resolution" value="1.80 A"/>
    <property type="chains" value="A=25-299"/>
</dbReference>
<dbReference type="PDB" id="8TUB">
    <property type="method" value="X-ray"/>
    <property type="resolution" value="2.40 A"/>
    <property type="chains" value="C/F/G/J=25-299"/>
</dbReference>
<dbReference type="PDB" id="8TUH">
    <property type="method" value="X-ray"/>
    <property type="resolution" value="2.20 A"/>
    <property type="chains" value="A=25-300"/>
</dbReference>
<dbReference type="PDBsum" id="1A1M"/>
<dbReference type="PDBsum" id="1A1N"/>
<dbReference type="PDBsum" id="1A1O"/>
<dbReference type="PDBsum" id="1A9B"/>
<dbReference type="PDBsum" id="1A9E"/>
<dbReference type="PDBsum" id="1AGB"/>
<dbReference type="PDBsum" id="1AGC"/>
<dbReference type="PDBsum" id="1AGD"/>
<dbReference type="PDBsum" id="1AGE"/>
<dbReference type="PDBsum" id="1AGF"/>
<dbReference type="PDBsum" id="1CG9"/>
<dbReference type="PDBsum" id="1E27"/>
<dbReference type="PDBsum" id="1E28"/>
<dbReference type="PDBsum" id="1HSA"/>
<dbReference type="PDBsum" id="1JGD"/>
<dbReference type="PDBsum" id="1JGE"/>
<dbReference type="PDBsum" id="1K5N"/>
<dbReference type="PDBsum" id="1M05"/>
<dbReference type="PDBsum" id="1M6O"/>
<dbReference type="PDBsum" id="1MI5"/>
<dbReference type="PDBsum" id="1N2R"/>
<dbReference type="PDBsum" id="1OF2"/>
<dbReference type="PDBsum" id="1OGT"/>
<dbReference type="PDBsum" id="1SYS"/>
<dbReference type="PDBsum" id="1SYV"/>
<dbReference type="PDBsum" id="1UXS"/>
<dbReference type="PDBsum" id="1UXW"/>
<dbReference type="PDBsum" id="1W0V"/>
<dbReference type="PDBsum" id="1W0W"/>
<dbReference type="PDBsum" id="1XH3"/>
<dbReference type="PDBsum" id="1XR8"/>
<dbReference type="PDBsum" id="1XR9"/>
<dbReference type="PDBsum" id="1ZHK"/>
<dbReference type="PDBsum" id="1ZHL"/>
<dbReference type="PDBsum" id="1ZSD"/>
<dbReference type="PDBsum" id="2A83"/>
<dbReference type="PDBsum" id="2AK4"/>
<dbReference type="PDBsum" id="2AXF"/>
<dbReference type="PDBsum" id="2AXG"/>
<dbReference type="PDBsum" id="2BSR"/>
<dbReference type="PDBsum" id="2BSS"/>
<dbReference type="PDBsum" id="2BST"/>
<dbReference type="PDBsum" id="2BVO"/>
<dbReference type="PDBsum" id="2BVP"/>
<dbReference type="PDBsum" id="2BVQ"/>
<dbReference type="PDBsum" id="2H6P"/>
<dbReference type="PDBsum" id="2HJL"/>
<dbReference type="PDBsum" id="2NW3"/>
<dbReference type="PDBsum" id="2NX5"/>
<dbReference type="PDBsum" id="2RFX"/>
<dbReference type="PDBsum" id="2YPK"/>
<dbReference type="PDBsum" id="2YPL"/>
<dbReference type="PDBsum" id="3B3I"/>
<dbReference type="PDBsum" id="3B6S"/>
<dbReference type="PDBsum" id="3BP4"/>
<dbReference type="PDBsum" id="3BP7"/>
<dbReference type="PDBsum" id="3BW9"/>
<dbReference type="PDBsum" id="3BWA"/>
<dbReference type="PDBsum" id="3C9N"/>
<dbReference type="PDBsum" id="3CZF"/>
<dbReference type="PDBsum" id="3D18"/>
<dbReference type="PDBsum" id="3DTX"/>
<dbReference type="PDBsum" id="3DX6"/>
<dbReference type="PDBsum" id="3DX7"/>
<dbReference type="PDBsum" id="3DX8"/>
<dbReference type="PDBsum" id="3DXA"/>
<dbReference type="PDBsum" id="3FFC"/>
<dbReference type="PDBsum" id="3HCV"/>
<dbReference type="PDBsum" id="3KPL"/>
<dbReference type="PDBsum" id="3KPM"/>
<dbReference type="PDBsum" id="3KPN"/>
<dbReference type="PDBsum" id="3KPO"/>
<dbReference type="PDBsum" id="3KPP"/>
<dbReference type="PDBsum" id="3KPQ"/>
<dbReference type="PDBsum" id="3KPR"/>
<dbReference type="PDBsum" id="3KPS"/>
<dbReference type="PDBsum" id="3KWW"/>
<dbReference type="PDBsum" id="3KXF"/>
<dbReference type="PDBsum" id="3L3D"/>
<dbReference type="PDBsum" id="3L3G"/>
<dbReference type="PDBsum" id="3L3I"/>
<dbReference type="PDBsum" id="3L3J"/>
<dbReference type="PDBsum" id="3L3K"/>
<dbReference type="PDBsum" id="3LKN"/>
<dbReference type="PDBsum" id="3LKO"/>
<dbReference type="PDBsum" id="3LKP"/>
<dbReference type="PDBsum" id="3LKQ"/>
<dbReference type="PDBsum" id="3LKR"/>
<dbReference type="PDBsum" id="3LKS"/>
<dbReference type="PDBsum" id="3LN4"/>
<dbReference type="PDBsum" id="3LN5"/>
<dbReference type="PDBsum" id="3LV3"/>
<dbReference type="PDBsum" id="3MV7"/>
<dbReference type="PDBsum" id="3MV8"/>
<dbReference type="PDBsum" id="3MV9"/>
<dbReference type="PDBsum" id="3SJV"/>
<dbReference type="PDBsum" id="3SKM"/>
<dbReference type="PDBsum" id="3SKO"/>
<dbReference type="PDBsum" id="3SPV"/>
<dbReference type="PDBsum" id="3UPR"/>
<dbReference type="PDBsum" id="3VCL"/>
<dbReference type="PDBsum" id="3VFS"/>
<dbReference type="PDBsum" id="3VFT"/>
<dbReference type="PDBsum" id="3VFU"/>
<dbReference type="PDBsum" id="3VFV"/>
<dbReference type="PDBsum" id="3VFW"/>
<dbReference type="PDBsum" id="3VH8"/>
<dbReference type="PDBsum" id="3VRI"/>
<dbReference type="PDBsum" id="3VRJ"/>
<dbReference type="PDBsum" id="3W39"/>
<dbReference type="PDBsum" id="3WUW"/>
<dbReference type="PDBsum" id="3X11"/>
<dbReference type="PDBsum" id="3X12"/>
<dbReference type="PDBsum" id="3X13"/>
<dbReference type="PDBsum" id="3X14"/>
<dbReference type="PDBsum" id="4G8G"/>
<dbReference type="PDBsum" id="4G8I"/>
<dbReference type="PDBsum" id="4G9D"/>
<dbReference type="PDBsum" id="4G9F"/>
<dbReference type="PDBsum" id="4JQV"/>
<dbReference type="PDBsum" id="4JQX"/>
<dbReference type="PDBsum" id="4LCY"/>
<dbReference type="PDBsum" id="4LNR"/>
<dbReference type="PDBsum" id="4MJI"/>
<dbReference type="PDBsum" id="4O2C"/>
<dbReference type="PDBsum" id="4O2E"/>
<dbReference type="PDBsum" id="4O2F"/>
<dbReference type="PDBsum" id="4PR5"/>
<dbReference type="PDBsum" id="4PRN"/>
<dbReference type="PDBsum" id="4QRP"/>
<dbReference type="PDBsum" id="4QRQ"/>
<dbReference type="PDBsum" id="4QRR"/>
<dbReference type="PDBsum" id="4QRS"/>
<dbReference type="PDBsum" id="4QRT"/>
<dbReference type="PDBsum" id="4QRU"/>
<dbReference type="PDBsum" id="4U1H"/>
<dbReference type="PDBsum" id="4U1I"/>
<dbReference type="PDBsum" id="4U1J"/>
<dbReference type="PDBsum" id="4U1K"/>
<dbReference type="PDBsum" id="4U1L"/>
<dbReference type="PDBsum" id="4U1M"/>
<dbReference type="PDBsum" id="4U1N"/>
<dbReference type="PDBsum" id="4U1S"/>
<dbReference type="PDBsum" id="4XXC"/>
<dbReference type="PDBsum" id="5B38"/>
<dbReference type="PDBsum" id="5B39"/>
<dbReference type="PDBsum" id="5DEF"/>
<dbReference type="PDBsum" id="5DEG"/>
<dbReference type="PDBsum" id="5EO0"/>
<dbReference type="PDBsum" id="5EO1"/>
<dbReference type="PDBsum" id="5IB1"/>
<dbReference type="PDBsum" id="5IB2"/>
<dbReference type="PDBsum" id="5IB3"/>
<dbReference type="PDBsum" id="5IB4"/>
<dbReference type="PDBsum" id="5IB5"/>
<dbReference type="PDBsum" id="5IEH"/>
<dbReference type="PDBsum" id="5IEK"/>
<dbReference type="PDBsum" id="5IM7"/>
<dbReference type="PDBsum" id="5INC"/>
<dbReference type="PDBsum" id="5IND"/>
<dbReference type="PDBsum" id="5T6W"/>
<dbReference type="PDBsum" id="5T6X"/>
<dbReference type="PDBsum" id="5T6Y"/>
<dbReference type="PDBsum" id="5T6Z"/>
<dbReference type="PDBsum" id="5T70"/>
<dbReference type="PDBsum" id="5TXS"/>
<dbReference type="PDBsum" id="5U98"/>
<dbReference type="PDBsum" id="5V5L"/>
<dbReference type="PDBsum" id="5V5M"/>
<dbReference type="PDBsum" id="5VUD"/>
<dbReference type="PDBsum" id="5VUE"/>
<dbReference type="PDBsum" id="5VUF"/>
<dbReference type="PDBsum" id="5VWD"/>
<dbReference type="PDBsum" id="5VWF"/>
<dbReference type="PDBsum" id="5VWH"/>
<dbReference type="PDBsum" id="5VWJ"/>
<dbReference type="PDBsum" id="5VZ5"/>
<dbReference type="PDBsum" id="5WMN"/>
<dbReference type="PDBsum" id="5WMO"/>
<dbReference type="PDBsum" id="5WMP"/>
<dbReference type="PDBsum" id="5WMQ"/>
<dbReference type="PDBsum" id="5WMR"/>
<dbReference type="PDBsum" id="5XOS"/>
<dbReference type="PDBsum" id="5XOT"/>
<dbReference type="PDBsum" id="6AT5"/>
<dbReference type="PDBsum" id="6AVF"/>
<dbReference type="PDBsum" id="6AVG"/>
<dbReference type="PDBsum" id="6BJ2"/>
<dbReference type="PDBsum" id="6BJ3"/>
<dbReference type="PDBsum" id="6BJ8"/>
<dbReference type="PDBsum" id="6BXP"/>
<dbReference type="PDBsum" id="6BXQ"/>
<dbReference type="PDBsum" id="6D29"/>
<dbReference type="PDBsum" id="6D2B"/>
<dbReference type="PDBsum" id="6D2R"/>
<dbReference type="PDBsum" id="6D2T"/>
<dbReference type="PDBsum" id="6MT3"/>
<dbReference type="PDBsum" id="6MT4"/>
<dbReference type="PDBsum" id="6MT5"/>
<dbReference type="PDBsum" id="6MT6"/>
<dbReference type="PDBsum" id="6MTL"/>
<dbReference type="PDBsum" id="6MTM"/>
<dbReference type="PDBsum" id="6P23"/>
<dbReference type="PDBsum" id="6P27"/>
<dbReference type="PDBsum" id="6P2C"/>
<dbReference type="PDBsum" id="6P2F"/>
<dbReference type="PDBsum" id="6P2S"/>
<dbReference type="PDBsum" id="6PYJ"/>
<dbReference type="PDBsum" id="6PYL"/>
<dbReference type="PDBsum" id="6PYV"/>
<dbReference type="PDBsum" id="6PYW"/>
<dbReference type="PDBsum" id="6PZ5"/>
<dbReference type="PDBsum" id="6UJ7"/>
<dbReference type="PDBsum" id="6UJ8"/>
<dbReference type="PDBsum" id="6UJ9"/>
<dbReference type="PDBsum" id="6VMX"/>
<dbReference type="PDBsum" id="7LFZ"/>
<dbReference type="PDBsum" id="7LG0"/>
<dbReference type="PDBsum" id="7LGD"/>
<dbReference type="PDBsum" id="7LGT"/>
<dbReference type="PDBsum" id="7RZD"/>
<dbReference type="PDBsum" id="7RZJ"/>
<dbReference type="PDBsum" id="7S79"/>
<dbReference type="PDBsum" id="7S7D"/>
<dbReference type="PDBsum" id="7S7E"/>
<dbReference type="PDBsum" id="7S7F"/>
<dbReference type="PDBsum" id="7S8A"/>
<dbReference type="PDBsum" id="7S8E"/>
<dbReference type="PDBsum" id="7S8F"/>
<dbReference type="PDBsum" id="8TUB"/>
<dbReference type="PDBsum" id="8TUH"/>
<dbReference type="SMR" id="P01889"/>
<dbReference type="BioGRID" id="109351">
    <property type="interactions" value="310"/>
</dbReference>
<dbReference type="FunCoup" id="P01889">
    <property type="interactions" value="877"/>
</dbReference>
<dbReference type="IntAct" id="P01889">
    <property type="interactions" value="214"/>
</dbReference>
<dbReference type="MINT" id="P01889"/>
<dbReference type="STRING" id="9606.ENSP00000399168"/>
<dbReference type="DrugBank" id="DB11294">
    <property type="generic name" value="Coccidioides immitis spherule"/>
</dbReference>
<dbReference type="DrugBank" id="DB04464">
    <property type="generic name" value="N-Formylmethionine"/>
</dbReference>
<dbReference type="TCDB" id="9.A.75.1.3">
    <property type="family name" value="the mhc ii receptor (mhc2r) family"/>
</dbReference>
<dbReference type="GlyConnect" id="1331">
    <property type="glycosylation" value="1 N-Linked glycan (1 site)"/>
</dbReference>
<dbReference type="GlyConnect" id="1332">
    <property type="glycosylation" value="8 N-Linked glycans (1 site)"/>
</dbReference>
<dbReference type="GlyConnect" id="1333">
    <property type="glycosylation" value="8 N-Linked glycans (1 site)"/>
</dbReference>
<dbReference type="GlyConnect" id="1334">
    <property type="glycosylation" value="5 N-Linked glycans (1 site)"/>
</dbReference>
<dbReference type="GlyConnect" id="1335">
    <property type="glycosylation" value="2 N-Linked glycans (1 site)"/>
</dbReference>
<dbReference type="GlyConnect" id="1336">
    <property type="glycosylation" value="2 N-Linked glycans (1 site)"/>
</dbReference>
<dbReference type="GlyConnect" id="1337">
    <property type="glycosylation" value="8 N-Linked glycans (1 site)"/>
</dbReference>
<dbReference type="GlyConnect" id="1338">
    <property type="glycosylation" value="2 N-Linked glycans (1 site)"/>
</dbReference>
<dbReference type="GlyConnect" id="1339">
    <property type="glycosylation" value="2 N-Linked glycans (1 site)"/>
</dbReference>
<dbReference type="GlyConnect" id="1340">
    <property type="glycosylation" value="3 N-Linked glycans (1 site)"/>
</dbReference>
<dbReference type="GlyConnect" id="1341">
    <property type="glycosylation" value="8 N-Linked glycans (1 site)"/>
</dbReference>
<dbReference type="GlyConnect" id="1342">
    <property type="glycosylation" value="2 N-Linked glycans (1 site)"/>
</dbReference>
<dbReference type="GlyConnect" id="1343">
    <property type="glycosylation" value="2 N-Linked glycans (1 site)"/>
</dbReference>
<dbReference type="GlyConnect" id="1344">
    <property type="glycosylation" value="3 N-Linked glycans (1 site)"/>
</dbReference>
<dbReference type="GlyConnect" id="1345">
    <property type="glycosylation" value="1 N-Linked glycan (1 site)"/>
</dbReference>
<dbReference type="GlyConnect" id="1346">
    <property type="glycosylation" value="3 N-Linked glycans (1 site)"/>
</dbReference>
<dbReference type="GlyConnect" id="1347">
    <property type="glycosylation" value="8 N-Linked glycans (1 site)"/>
</dbReference>
<dbReference type="GlyConnect" id="1348">
    <property type="glycosylation" value="2 N-Linked glycans (1 site)"/>
</dbReference>
<dbReference type="GlyConnect" id="1349">
    <property type="glycosylation" value="2 N-Linked glycans (1 site)"/>
</dbReference>
<dbReference type="GlyConnect" id="1350">
    <property type="glycosylation" value="8 N-Linked glycans (1 site)"/>
</dbReference>
<dbReference type="GlyConnect" id="1351">
    <property type="glycosylation" value="2 N-Linked glycans (1 site)"/>
</dbReference>
<dbReference type="GlyCosmos" id="P01889">
    <property type="glycosylation" value="2 sites, 2 glycans"/>
</dbReference>
<dbReference type="GlyGen" id="P01889">
    <property type="glycosylation" value="3 sites, 19 N-linked glycans (1 site), 2 O-linked glycans (2 sites)"/>
</dbReference>
<dbReference type="iPTMnet" id="P01889"/>
<dbReference type="PhosphoSitePlus" id="P01889"/>
<dbReference type="SwissPalm" id="P01889"/>
<dbReference type="BioMuta" id="HLA-B"/>
<dbReference type="DMDM" id="122160"/>
<dbReference type="jPOST" id="P01889"/>
<dbReference type="MassIVE" id="P01889"/>
<dbReference type="PaxDb" id="9606-ENSP00000399168"/>
<dbReference type="PeptideAtlas" id="P01889"/>
<dbReference type="ProteomicsDB" id="51504"/>
<dbReference type="ProteomicsDB" id="51628"/>
<dbReference type="ProteomicsDB" id="52598"/>
<dbReference type="ProteomicsDB" id="53565"/>
<dbReference type="ProteomicsDB" id="53566"/>
<dbReference type="ProteomicsDB" id="53567"/>
<dbReference type="ProteomicsDB" id="54677"/>
<dbReference type="ProteomicsDB" id="54678"/>
<dbReference type="ProteomicsDB" id="54679"/>
<dbReference type="ProteomicsDB" id="54680"/>
<dbReference type="ProteomicsDB" id="54681"/>
<dbReference type="ProteomicsDB" id="54682"/>
<dbReference type="ProteomicsDB" id="54683"/>
<dbReference type="ProteomicsDB" id="54684"/>
<dbReference type="ProteomicsDB" id="54685"/>
<dbReference type="ProteomicsDB" id="54686"/>
<dbReference type="ProteomicsDB" id="54687"/>
<dbReference type="ProteomicsDB" id="54688"/>
<dbReference type="ProteomicsDB" id="54689"/>
<dbReference type="ProteomicsDB" id="54690"/>
<dbReference type="ProteomicsDB" id="54691"/>
<dbReference type="ProteomicsDB" id="54692"/>
<dbReference type="ProteomicsDB" id="54693"/>
<dbReference type="ProteomicsDB" id="54694"/>
<dbReference type="ProteomicsDB" id="54695"/>
<dbReference type="ProteomicsDB" id="54696"/>
<dbReference type="ProteomicsDB" id="54697"/>
<dbReference type="ProteomicsDB" id="54732"/>
<dbReference type="ProteomicsDB" id="58284"/>
<dbReference type="ProteomicsDB" id="61272"/>
<dbReference type="ProteomicsDB" id="61273"/>
<dbReference type="ProteomicsDB" id="61276"/>
<dbReference type="ProteomicsDB" id="61584"/>
<dbReference type="ProteomicsDB" id="61586"/>
<dbReference type="ProteomicsDB" id="75730"/>
<dbReference type="Pumba" id="P01889"/>
<dbReference type="Antibodypedia" id="26900">
    <property type="antibodies" value="768 antibodies from 35 providers"/>
</dbReference>
<dbReference type="CPTC" id="P01889">
    <property type="antibodies" value="1 antibody"/>
</dbReference>
<dbReference type="DNASU" id="3106"/>
<dbReference type="Ensembl" id="ENST00000412585.7">
    <property type="protein sequence ID" value="ENSP00000399168.2"/>
    <property type="gene ID" value="ENSG00000234745.14"/>
</dbReference>
<dbReference type="Ensembl" id="ENST00000696559.1">
    <property type="protein sequence ID" value="ENSP00000512717.1"/>
    <property type="gene ID" value="ENSG00000234745.14"/>
</dbReference>
<dbReference type="Ensembl" id="ENST00000696560.1">
    <property type="protein sequence ID" value="ENSP00000512718.1"/>
    <property type="gene ID" value="ENSG00000234745.14"/>
</dbReference>
<dbReference type="Ensembl" id="ENST00000696561.1">
    <property type="protein sequence ID" value="ENSP00000512719.1"/>
    <property type="gene ID" value="ENSG00000234745.14"/>
</dbReference>
<dbReference type="Ensembl" id="ENST00000696562.1">
    <property type="protein sequence ID" value="ENSP00000512720.1"/>
    <property type="gene ID" value="ENSG00000234745.14"/>
</dbReference>
<dbReference type="GeneID" id="3106"/>
<dbReference type="KEGG" id="hsa:3106"/>
<dbReference type="MANE-Select" id="ENST00000412585.7">
    <property type="protein sequence ID" value="ENSP00000399168.2"/>
    <property type="RefSeq nucleotide sequence ID" value="NM_005514.8"/>
    <property type="RefSeq protein sequence ID" value="NP_005505.2"/>
</dbReference>
<dbReference type="UCSC" id="uc011fcq.2">
    <property type="organism name" value="human"/>
</dbReference>
<dbReference type="UCSC" id="uc011hpp.3">
    <property type="organism name" value="human"/>
</dbReference>
<dbReference type="UCSC" id="uc011jij.3">
    <property type="organism name" value="human"/>
</dbReference>
<dbReference type="AGR" id="HGNC:4932"/>
<dbReference type="CTD" id="3106"/>
<dbReference type="DisGeNET" id="3106"/>
<dbReference type="GeneCards" id="HLA-B"/>
<dbReference type="HGNC" id="HGNC:4932">
    <property type="gene designation" value="HLA-B"/>
</dbReference>
<dbReference type="HPA" id="ENSG00000234745">
    <property type="expression patterns" value="Tissue enhanced (lymphoid)"/>
</dbReference>
<dbReference type="MalaCards" id="HLA-B"/>
<dbReference type="MIM" id="106300">
    <property type="type" value="phenotype"/>
</dbReference>
<dbReference type="MIM" id="608579">
    <property type="type" value="phenotype"/>
</dbReference>
<dbReference type="neXtProt" id="NX_P01889"/>
<dbReference type="OpenTargets" id="ENSG00000234745"/>
<dbReference type="Orphanet" id="117">
    <property type="disease" value="Behcet disease"/>
</dbReference>
<dbReference type="Orphanet" id="397">
    <property type="disease" value="Giant cell arteritis"/>
</dbReference>
<dbReference type="Orphanet" id="275798">
    <property type="disease" value="Pulmonary arterial hypertension associated with connective tissue disease"/>
</dbReference>
<dbReference type="Orphanet" id="29207">
    <property type="disease" value="Reactive arthritis"/>
</dbReference>
<dbReference type="Orphanet" id="36426">
    <property type="disease" value="Stevens-Johnson syndrome"/>
</dbReference>
<dbReference type="Orphanet" id="3287">
    <property type="disease" value="Takayasu arteritis"/>
</dbReference>
<dbReference type="PharmGKB" id="PA35056"/>
<dbReference type="VEuPathDB" id="HostDB:ENSG00000234745"/>
<dbReference type="eggNOG" id="ENOG502RQEK">
    <property type="taxonomic scope" value="Eukaryota"/>
</dbReference>
<dbReference type="GeneTree" id="ENSGT01120000271826"/>
<dbReference type="HOGENOM" id="CLU_047501_1_1_1"/>
<dbReference type="InParanoid" id="P01889"/>
<dbReference type="OMA" id="WEANTTM"/>
<dbReference type="OrthoDB" id="9447187at2759"/>
<dbReference type="PhylomeDB" id="P01889"/>
<dbReference type="TreeFam" id="TF336617"/>
<dbReference type="PathwayCommons" id="P01889"/>
<dbReference type="Reactome" id="R-HSA-1236974">
    <property type="pathway name" value="ER-Phagosome pathway"/>
</dbReference>
<dbReference type="Reactome" id="R-HSA-1236977">
    <property type="pathway name" value="Endosomal/Vacuolar pathway"/>
</dbReference>
<dbReference type="Reactome" id="R-HSA-198933">
    <property type="pathway name" value="Immunoregulatory interactions between a Lymphoid and a non-Lymphoid cell"/>
</dbReference>
<dbReference type="Reactome" id="R-HSA-2172127">
    <property type="pathway name" value="DAP12 interactions"/>
</dbReference>
<dbReference type="Reactome" id="R-HSA-6798695">
    <property type="pathway name" value="Neutrophil degranulation"/>
</dbReference>
<dbReference type="Reactome" id="R-HSA-877300">
    <property type="pathway name" value="Interferon gamma signaling"/>
</dbReference>
<dbReference type="Reactome" id="R-HSA-909733">
    <property type="pathway name" value="Interferon alpha/beta signaling"/>
</dbReference>
<dbReference type="Reactome" id="R-HSA-9705671">
    <property type="pathway name" value="SARS-CoV-2 activates/modulates innate and adaptive immune responses"/>
</dbReference>
<dbReference type="Reactome" id="R-HSA-983170">
    <property type="pathway name" value="Antigen Presentation: Folding, assembly and peptide loading of class I MHC"/>
</dbReference>
<dbReference type="SignaLink" id="P01889"/>
<dbReference type="SIGNOR" id="P01889"/>
<dbReference type="BioGRID-ORCS" id="3106">
    <property type="hits" value="25 hits in 1092 CRISPR screens"/>
</dbReference>
<dbReference type="ChiTaRS" id="HLA-B">
    <property type="organism name" value="human"/>
</dbReference>
<dbReference type="EvolutionaryTrace" id="P01889"/>
<dbReference type="GeneWiki" id="HLA-B"/>
<dbReference type="GenomeRNAi" id="3106"/>
<dbReference type="Pharos" id="P01889">
    <property type="development level" value="Tbio"/>
</dbReference>
<dbReference type="PRO" id="PR:P01889"/>
<dbReference type="Proteomes" id="UP000005640">
    <property type="component" value="Chromosome 6"/>
</dbReference>
<dbReference type="Bgee" id="ENSG00000234745">
    <property type="expression patterns" value="Expressed in blood and 101 other cell types or tissues"/>
</dbReference>
<dbReference type="ExpressionAtlas" id="P01889">
    <property type="expression patterns" value="baseline and differential"/>
</dbReference>
<dbReference type="GO" id="GO:0009986">
    <property type="term" value="C:cell surface"/>
    <property type="evidence" value="ECO:0000314"/>
    <property type="project" value="UniProtKB"/>
</dbReference>
<dbReference type="GO" id="GO:0031901">
    <property type="term" value="C:early endosome membrane"/>
    <property type="evidence" value="ECO:0000304"/>
    <property type="project" value="Reactome"/>
</dbReference>
<dbReference type="GO" id="GO:0005783">
    <property type="term" value="C:endoplasmic reticulum"/>
    <property type="evidence" value="ECO:0000314"/>
    <property type="project" value="UniProtKB"/>
</dbReference>
<dbReference type="GO" id="GO:0012507">
    <property type="term" value="C:ER to Golgi transport vesicle membrane"/>
    <property type="evidence" value="ECO:0000304"/>
    <property type="project" value="Reactome"/>
</dbReference>
<dbReference type="GO" id="GO:0009897">
    <property type="term" value="C:external side of plasma membrane"/>
    <property type="evidence" value="ECO:0000318"/>
    <property type="project" value="GO_Central"/>
</dbReference>
<dbReference type="GO" id="GO:0070062">
    <property type="term" value="C:extracellular exosome"/>
    <property type="evidence" value="ECO:0007005"/>
    <property type="project" value="UniProtKB"/>
</dbReference>
<dbReference type="GO" id="GO:0005615">
    <property type="term" value="C:extracellular space"/>
    <property type="evidence" value="ECO:0000318"/>
    <property type="project" value="GO_Central"/>
</dbReference>
<dbReference type="GO" id="GO:0005794">
    <property type="term" value="C:Golgi apparatus"/>
    <property type="evidence" value="ECO:0000314"/>
    <property type="project" value="UniProtKB"/>
</dbReference>
<dbReference type="GO" id="GO:0000139">
    <property type="term" value="C:Golgi membrane"/>
    <property type="evidence" value="ECO:0000304"/>
    <property type="project" value="Reactome"/>
</dbReference>
<dbReference type="GO" id="GO:0098553">
    <property type="term" value="C:lumenal side of endoplasmic reticulum membrane"/>
    <property type="evidence" value="ECO:0000304"/>
    <property type="project" value="Reactome"/>
</dbReference>
<dbReference type="GO" id="GO:0016020">
    <property type="term" value="C:membrane"/>
    <property type="evidence" value="ECO:0007005"/>
    <property type="project" value="UniProtKB"/>
</dbReference>
<dbReference type="GO" id="GO:0042612">
    <property type="term" value="C:MHC class I protein complex"/>
    <property type="evidence" value="ECO:0000314"/>
    <property type="project" value="UniProtKB"/>
</dbReference>
<dbReference type="GO" id="GO:0030670">
    <property type="term" value="C:phagocytic vesicle membrane"/>
    <property type="evidence" value="ECO:0000304"/>
    <property type="project" value="Reactome"/>
</dbReference>
<dbReference type="GO" id="GO:0005886">
    <property type="term" value="C:plasma membrane"/>
    <property type="evidence" value="ECO:0000304"/>
    <property type="project" value="Reactome"/>
</dbReference>
<dbReference type="GO" id="GO:0055038">
    <property type="term" value="C:recycling endosome membrane"/>
    <property type="evidence" value="ECO:0000304"/>
    <property type="project" value="Reactome"/>
</dbReference>
<dbReference type="GO" id="GO:0030667">
    <property type="term" value="C:secretory granule membrane"/>
    <property type="evidence" value="ECO:0000304"/>
    <property type="project" value="Reactome"/>
</dbReference>
<dbReference type="GO" id="GO:0042605">
    <property type="term" value="F:peptide antigen binding"/>
    <property type="evidence" value="ECO:0000314"/>
    <property type="project" value="UniProtKB"/>
</dbReference>
<dbReference type="GO" id="GO:0051087">
    <property type="term" value="F:protein-folding chaperone binding"/>
    <property type="evidence" value="ECO:0000353"/>
    <property type="project" value="UniProtKB"/>
</dbReference>
<dbReference type="GO" id="GO:0005102">
    <property type="term" value="F:signaling receptor binding"/>
    <property type="evidence" value="ECO:0000353"/>
    <property type="project" value="UniProtKB"/>
</dbReference>
<dbReference type="GO" id="GO:0046977">
    <property type="term" value="F:TAP binding"/>
    <property type="evidence" value="ECO:0000314"/>
    <property type="project" value="UniProtKB"/>
</dbReference>
<dbReference type="GO" id="GO:0002250">
    <property type="term" value="P:adaptive immune response"/>
    <property type="evidence" value="ECO:0007669"/>
    <property type="project" value="UniProtKB-KW"/>
</dbReference>
<dbReference type="GO" id="GO:0002486">
    <property type="term" value="P:antigen processing and presentation of endogenous peptide antigen via MHC class I via ER pathway, TAP-independent"/>
    <property type="evidence" value="ECO:0000314"/>
    <property type="project" value="UniProtKB"/>
</dbReference>
<dbReference type="GO" id="GO:0002476">
    <property type="term" value="P:antigen processing and presentation of endogenous peptide antigen via MHC class Ib"/>
    <property type="evidence" value="ECO:0000318"/>
    <property type="project" value="GO_Central"/>
</dbReference>
<dbReference type="GO" id="GO:0006952">
    <property type="term" value="P:defense response"/>
    <property type="evidence" value="ECO:0000304"/>
    <property type="project" value="UniProtKB"/>
</dbReference>
<dbReference type="GO" id="GO:0016045">
    <property type="term" value="P:detection of bacterium"/>
    <property type="evidence" value="ECO:0000315"/>
    <property type="project" value="UniProtKB"/>
</dbReference>
<dbReference type="GO" id="GO:0006955">
    <property type="term" value="P:immune response"/>
    <property type="evidence" value="ECO:0000315"/>
    <property type="project" value="UniProtKB"/>
</dbReference>
<dbReference type="GO" id="GO:0045087">
    <property type="term" value="P:innate immune response"/>
    <property type="evidence" value="ECO:0007669"/>
    <property type="project" value="UniProtKB-KW"/>
</dbReference>
<dbReference type="GO" id="GO:0001916">
    <property type="term" value="P:positive regulation of T cell mediated cytotoxicity"/>
    <property type="evidence" value="ECO:0000314"/>
    <property type="project" value="UniProtKB"/>
</dbReference>
<dbReference type="GO" id="GO:0042270">
    <property type="term" value="P:protection from natural killer cell mediated cytotoxicity"/>
    <property type="evidence" value="ECO:0000314"/>
    <property type="project" value="UniProtKB"/>
</dbReference>
<dbReference type="GO" id="GO:2001198">
    <property type="term" value="P:regulation of dendritic cell differentiation"/>
    <property type="evidence" value="ECO:0000315"/>
    <property type="project" value="BHF-UCL"/>
</dbReference>
<dbReference type="GO" id="GO:0032655">
    <property type="term" value="P:regulation of interleukin-12 production"/>
    <property type="evidence" value="ECO:0000315"/>
    <property type="project" value="BHF-UCL"/>
</dbReference>
<dbReference type="GO" id="GO:0032675">
    <property type="term" value="P:regulation of interleukin-6 production"/>
    <property type="evidence" value="ECO:0000315"/>
    <property type="project" value="BHF-UCL"/>
</dbReference>
<dbReference type="GO" id="GO:0002667">
    <property type="term" value="P:regulation of T cell anergy"/>
    <property type="evidence" value="ECO:0000315"/>
    <property type="project" value="BHF-UCL"/>
</dbReference>
<dbReference type="CDD" id="cd21026">
    <property type="entry name" value="IgC1_MHC_Ia_HLA-B"/>
    <property type="match status" value="1"/>
</dbReference>
<dbReference type="FunFam" id="2.60.40.10:FF:000014">
    <property type="entry name" value="H-2 class I histocompatibility antigen, alpha chain"/>
    <property type="match status" value="1"/>
</dbReference>
<dbReference type="FunFam" id="3.30.500.10:FF:000001">
    <property type="entry name" value="H-2 class I histocompatibility antigen, alpha chain"/>
    <property type="match status" value="1"/>
</dbReference>
<dbReference type="Gene3D" id="2.60.40.10">
    <property type="entry name" value="Immunoglobulins"/>
    <property type="match status" value="1"/>
</dbReference>
<dbReference type="Gene3D" id="3.30.500.10">
    <property type="entry name" value="MHC class I-like antigen recognition-like"/>
    <property type="match status" value="1"/>
</dbReference>
<dbReference type="InterPro" id="IPR007110">
    <property type="entry name" value="Ig-like_dom"/>
</dbReference>
<dbReference type="InterPro" id="IPR036179">
    <property type="entry name" value="Ig-like_dom_sf"/>
</dbReference>
<dbReference type="InterPro" id="IPR013783">
    <property type="entry name" value="Ig-like_fold"/>
</dbReference>
<dbReference type="InterPro" id="IPR003006">
    <property type="entry name" value="Ig/MHC_CS"/>
</dbReference>
<dbReference type="InterPro" id="IPR003597">
    <property type="entry name" value="Ig_C1-set"/>
</dbReference>
<dbReference type="InterPro" id="IPR050208">
    <property type="entry name" value="MHC_class-I_related"/>
</dbReference>
<dbReference type="InterPro" id="IPR011161">
    <property type="entry name" value="MHC_I-like_Ag-recog"/>
</dbReference>
<dbReference type="InterPro" id="IPR037055">
    <property type="entry name" value="MHC_I-like_Ag-recog_sf"/>
</dbReference>
<dbReference type="InterPro" id="IPR011162">
    <property type="entry name" value="MHC_I/II-like_Ag-recog"/>
</dbReference>
<dbReference type="InterPro" id="IPR001039">
    <property type="entry name" value="MHC_I_a_a1/a2"/>
</dbReference>
<dbReference type="InterPro" id="IPR010579">
    <property type="entry name" value="MHC_I_a_C"/>
</dbReference>
<dbReference type="PANTHER" id="PTHR16675:SF270">
    <property type="entry name" value="HLA CLASS I HISTOCOMPATIBILITY ANTIGEN, B ALPHA CHAIN"/>
    <property type="match status" value="1"/>
</dbReference>
<dbReference type="PANTHER" id="PTHR16675">
    <property type="entry name" value="MHC CLASS I-RELATED"/>
    <property type="match status" value="1"/>
</dbReference>
<dbReference type="Pfam" id="PF07654">
    <property type="entry name" value="C1-set"/>
    <property type="match status" value="1"/>
</dbReference>
<dbReference type="Pfam" id="PF00129">
    <property type="entry name" value="MHC_I"/>
    <property type="match status" value="1"/>
</dbReference>
<dbReference type="Pfam" id="PF06623">
    <property type="entry name" value="MHC_I_C"/>
    <property type="match status" value="1"/>
</dbReference>
<dbReference type="PRINTS" id="PR01638">
    <property type="entry name" value="MHCCLASSI"/>
</dbReference>
<dbReference type="SMART" id="SM00407">
    <property type="entry name" value="IGc1"/>
    <property type="match status" value="1"/>
</dbReference>
<dbReference type="SUPFAM" id="SSF48726">
    <property type="entry name" value="Immunoglobulin"/>
    <property type="match status" value="1"/>
</dbReference>
<dbReference type="SUPFAM" id="SSF54452">
    <property type="entry name" value="MHC antigen-recognition domain"/>
    <property type="match status" value="1"/>
</dbReference>
<dbReference type="PROSITE" id="PS50835">
    <property type="entry name" value="IG_LIKE"/>
    <property type="match status" value="1"/>
</dbReference>
<dbReference type="PROSITE" id="PS00290">
    <property type="entry name" value="IG_MHC"/>
    <property type="match status" value="1"/>
</dbReference>
<gene>
    <name evidence="87" type="primary">HLA-B</name>
    <name type="synonym">HLAB</name>
</gene>
<reference key="1">
    <citation type="journal article" date="1987" name="Immunogenetics">
        <title>A transposable epitope of HLA-B7, B40 molecules.</title>
        <authorList>
            <person name="Ways J.W."/>
            <person name="Lawlor D.A."/>
            <person name="Wan A.M."/>
            <person name="Parham P."/>
        </authorList>
    </citation>
    <scope>NUCLEOTIDE SEQUENCE [MRNA] (ALLELE B*40:01)</scope>
</reference>
<reference key="2">
    <citation type="journal article" date="1990" name="Proc. Natl. Acad. Sci. U.S.A.">
        <title>Rapid cloning of HLA-A,B cDNA by using the polymerase chain reaction: frequency and nature of errors produced in amplification.</title>
        <authorList>
            <person name="Ennis P.D."/>
            <person name="Zemmour J."/>
            <person name="Salter R.D."/>
            <person name="Parham P."/>
        </authorList>
    </citation>
    <scope>NUCLEOTIDE SEQUENCE [MRNA] (ALLELES B*07:02; B*37:01; B*51:01 AND B*57:01)</scope>
</reference>
<reference key="3">
    <citation type="journal article" date="1992" name="J. Immunol.">
        <title>HLA-Bw22: a family of molecules with identity to HLA-B7 in the alpha 1-helix.</title>
        <authorList>
            <person name="Hildebrand W.H."/>
            <person name="Madrigal J.A."/>
            <person name="Little A.-M."/>
            <person name="Parham P."/>
        </authorList>
    </citation>
    <scope>NUCLEOTIDE SEQUENCE [MRNA] (ALLELE B*54:01; B*55:01 AND B*56:01)</scope>
</reference>
<reference key="4">
    <citation type="journal article" date="1992" name="J. Immunol.">
        <title>Distinctive HLA-A,B antigens of black populations formed by interallelic conversion.</title>
        <authorList>
            <person name="Madrigal J.A."/>
            <person name="Belich M.P."/>
            <person name="Hildebrand W.H."/>
            <person name="Benjamin R.J."/>
            <person name="Little A.-M."/>
            <person name="Zemmour J."/>
            <person name="Ennis P.D."/>
            <person name="Ward F.E."/>
            <person name="Petzl-Erler M.L."/>
            <person name="Martell R.W."/>
            <person name="du Toit E.D."/>
            <person name="Parham P."/>
        </authorList>
    </citation>
    <scope>NUCLEOTIDE SEQUENCE [MRNA] (ALLELES B*45:01; B*50:01 AND B*78:01)</scope>
</reference>
<reference key="5">
    <citation type="journal article" date="1992" name="J. Immunol.">
        <title>Serologic cross-reactivities poorly reflect allelic relationships in the HLA-B12 and HLA-B21 groups. Dominant epitopes of the alpha 2 helix.</title>
        <authorList>
            <person name="Hildebrand W.H."/>
            <person name="Madrigal J.A."/>
            <person name="Belich M.P."/>
            <person name="Zemmour J."/>
            <person name="Ward F.E."/>
            <person name="Williams R.C."/>
            <person name="Parham P."/>
        </authorList>
    </citation>
    <scope>NUCLEOTIDE SEQUENCE [MRNA] (ALLELE B*49:01)</scope>
</reference>
<reference key="6">
    <citation type="journal article" date="1992" name="Nature">
        <title>Unusual HLA-B alleles in two tribes of Brazilian Indians.</title>
        <authorList>
            <person name="Belich M.P."/>
            <person name="Madrigal J.A."/>
            <person name="Hildebrand W.H."/>
            <person name="Zemmour J."/>
            <person name="Williams R.C."/>
            <person name="Luz R."/>
            <person name="Petzl-Erler M.L."/>
            <person name="Parham P."/>
        </authorList>
    </citation>
    <scope>NUCLEOTIDE SEQUENCE [MRNA] (ALLELE B*48:01)</scope>
</reference>
<reference key="7">
    <citation type="journal article" date="1992" name="Tissue Antigens">
        <title>The B*4002 allele encodes the B61 antigen: B40* is identical to B61.</title>
        <authorList>
            <person name="Domena J.D."/>
            <person name="Johnston-Dow L."/>
            <person name="Parham P."/>
        </authorList>
    </citation>
    <scope>NUCLEOTIDE SEQUENCE [MRNA] (ALLELE B*40:02)</scope>
</reference>
<reference key="8">
    <citation type="journal article" date="1992" name="Tissue Antigens">
        <title>A common Japanese haplotype HLA-A26-Cw3-B61-DR9-DQ3 carries HLA-B*4002.</title>
        <authorList>
            <person name="Lin L."/>
            <person name="Watanabe Y."/>
            <person name="Tokunaga K."/>
            <person name="Kuwata S."/>
            <person name="Kohsaka T."/>
            <person name="Akaza T."/>
        </authorList>
    </citation>
    <scope>NUCLEOTIDE SEQUENCE [MRNA] OF 13-318 (ALLELE B*40:02)</scope>
    <source>
        <tissue>Blood</tissue>
    </source>
</reference>
<reference key="9">
    <citation type="journal article" date="1993" name="Immunogenetics">
        <title>Allelic variations clustered in the antigen binding sites of HLA-Bw62 molecules.</title>
        <authorList>
            <person name="Choo S.Y."/>
            <person name="Fan L.A."/>
            <person name="Hansen J.A."/>
        </authorList>
    </citation>
    <scope>NUCLEOTIDE SEQUENCE [MRNA] OF 25-362 (ALLELE B*15:01)</scope>
</reference>
<reference key="10">
    <citation type="journal article" date="1993" name="Tissue Antigens">
        <title>Primary structure shows HLA-B59 to be a hybrid of HLA-B55 and HLA-B51, and not a subtype of HLA-B8.</title>
        <authorList>
            <person name="Hildebrand W.H."/>
            <person name="Domena J.D."/>
            <person name="Parham P."/>
        </authorList>
    </citation>
    <scope>NUCLEOTIDE SEQUENCE [MRNA] (ALLELE B*59:01)</scope>
</reference>
<reference key="11">
    <citation type="journal article" date="1994" name="Immunogenetics">
        <title>HLA-B73: an atypical HLA-B molecule carrying a Bw6-epitope motif variant and a B pocket identical to HLA-B27.</title>
        <authorList>
            <person name="Vilches C."/>
            <person name="de Pablo R."/>
            <person name="Herrero M.J."/>
            <person name="Moreno M.E."/>
            <person name="Kreisler M."/>
        </authorList>
    </citation>
    <scope>NUCLEOTIDE SEQUENCE [MRNA] (ALLELE B*73:01)</scope>
</reference>
<reference key="12">
    <citation type="journal article" date="1994" name="Tissue Antigens">
        <title>HLA-B15: a widespread and diverse family of HLA-B alleles.</title>
        <authorList>
            <person name="Hildebrand W.H."/>
            <person name="Domena J.D."/>
            <person name="Shen S.Y."/>
            <person name="Lau M."/>
            <person name="Terasaki P.I."/>
            <person name="Bunce M."/>
            <person name="Marsh S.G.E."/>
            <person name="Guttridge M.G."/>
            <person name="Bias W.B."/>
            <person name="Parham P."/>
        </authorList>
    </citation>
    <scope>NUCLEOTIDE SEQUENCE [MRNA] OF 25-362 (ALLELE B*15:01)</scope>
</reference>
<reference key="13">
    <citation type="journal article" date="1994" name="Tissue Antigens">
        <title>The HLA-B73 antigen has a most unusual structure that defines a second lineage of HLA-B alleles.</title>
        <authorList>
            <person name="Parham P."/>
            <person name="Arnett K.L."/>
            <person name="Adams E.J."/>
            <person name="Barber L.D."/>
            <person name="Domena J.D."/>
            <person name="Stewart D."/>
            <person name="Hildebrand W.H."/>
            <person name="Little A.-M."/>
        </authorList>
    </citation>
    <scope>NUCLEOTIDE SEQUENCE [MRNA] (ALLELE B*73:01)</scope>
</reference>
<reference key="14">
    <citation type="journal article" date="1995" name="Eur. J. Immunogenet.">
        <title>Antigenic characteristics and cDNA sequences of HLA-B73.</title>
        <authorList>
            <person name="Hoffmann H.J."/>
            <person name="Kristensen T.J."/>
            <person name="Jensen T.G."/>
            <person name="Graugaard B."/>
            <person name="Lamm L.U."/>
        </authorList>
    </citation>
    <scope>NUCLEOTIDE SEQUENCE [MRNA] (ALLELE B*73:01)</scope>
</reference>
<reference key="15">
    <citation type="journal article" date="1995" name="Hum. Immunol.">
        <title>Both HLA-B*1301 and B*1302 exist in Asian populations and are associated with different haplotypes.</title>
        <authorList>
            <person name="Lin L."/>
            <person name="Tokunaga K."/>
            <person name="Nakajima F."/>
            <person name="Ishikawa Y."/>
            <person name="Kashiwase K."/>
            <person name="Tanaka H."/>
            <person name="Kuwata S."/>
            <person name="Sideltseva E."/>
            <person name="Akaza T."/>
            <person name="Tadokoro K."/>
            <person name="Shibata Y."/>
            <person name="Chandanayingyong D."/>
            <person name="Juji T."/>
        </authorList>
    </citation>
    <scope>NUCLEOTIDE SEQUENCE [MRNA] (ALLELE B*13:02)</scope>
    <source>
        <tissue>Blood</tissue>
    </source>
</reference>
<reference key="16">
    <citation type="journal article" date="1995" name="Hum. Immunol.">
        <title>Nucleotide sequence analysis of HLA-B*1523 and B*8101. Dominant alpha-helical motifs produce complex serologic recognition patterns for the HLA-B''DT'' and HLA-B''NM5'' antigens.</title>
        <authorList>
            <person name="Ellexson M.E."/>
            <person name="Zhang G."/>
            <person name="Stewart D."/>
            <person name="Lau M."/>
            <person name="Teresi G."/>
            <person name="Terasaki P."/>
            <person name="Roe B.A."/>
            <person name="Hildebrand W.H."/>
        </authorList>
    </citation>
    <scope>NUCLEOTIDE SEQUENCE [MRNA] (ALLELE B*81:01)</scope>
</reference>
<reference key="17">
    <citation type="journal article" date="1995" name="Tissue Antigens">
        <title>HLA-B16 antigens: sequence of the ST-16 antigen, further definition of two B38 subtypes and evidence for convergent evolution of B*3902.</title>
        <authorList>
            <person name="Adams E.J."/>
            <person name="Martinez-Naves E."/>
            <person name="Arnett K.L."/>
            <person name="Little A.-M."/>
            <person name="Tyan D.B."/>
            <person name="Parham P."/>
        </authorList>
    </citation>
    <scope>NUCLEOTIDE SEQUENCE [MRNA] (ALLELES B*38:01 AND B*39:02)</scope>
</reference>
<reference key="18">
    <citation type="journal article" date="1996" name="Tissue Antigens">
        <title>Molecular characterization of the new alleles HLA-B*8101 and B*4407.</title>
        <authorList>
            <person name="Vilches C."/>
            <person name="Sanz L."/>
            <person name="de Pablo R."/>
            <person name="Moreno M.E."/>
            <person name="Puente S."/>
            <person name="Kreisler M."/>
        </authorList>
    </citation>
    <scope>NUCLEOTIDE SEQUENCE [MRNA] (ALLELE B*81:01)</scope>
</reference>
<reference key="19">
    <citation type="journal article" date="1996" name="Tissue Antigens">
        <title>Novel HLA-B alleles, B*8201, B*3515 and B*5106, add to the complexity of serologic identification of HLA types.</title>
        <authorList>
            <person name="Hurley C.K."/>
            <person name="Steiner N.K."/>
            <person name="Hoyer R.J."/>
            <person name="Menchaca E."/>
            <person name="Mitton W."/>
            <person name="Simonis T."/>
            <person name="Hartzman R.J."/>
            <person name="Johnson A.H."/>
            <person name="Ng J."/>
        </authorList>
    </citation>
    <scope>NUCLEOTIDE SEQUENCE [MRNA] (ALLELE B*82:01)</scope>
</reference>
<reference key="20">
    <citation type="journal article" date="1996" name="Tissue Antigens">
        <title>Further molecular diversity in the HLA-B15 group.</title>
        <authorList>
            <person name="Lin L."/>
            <person name="Tokunaga K."/>
            <person name="Tanaka H."/>
            <person name="Nakajima F."/>
            <person name="Imanishi T."/>
            <person name="Kashiwase K."/>
            <person name="Bannai M."/>
            <person name="Mizuno S."/>
            <person name="Akaza T."/>
            <person name="Tadokoro K."/>
            <person name="Shibata Y."/>
            <person name="Juji T."/>
        </authorList>
    </citation>
    <scope>NUCLEOTIDE SEQUENCE [MRNA] (ALLELE B*15:01)</scope>
    <source>
        <tissue>Blood</tissue>
    </source>
</reference>
<reference key="21">
    <citation type="journal article" date="1999" name="Tissue Antigens">
        <title>Diversity of HLA-B17 alleles and haplotypes in East Asians and a novel Cw6 allele (Cw*0604) associated with B*5701.</title>
        <authorList>
            <person name="Inoue T."/>
            <person name="Ogawa A."/>
            <person name="Tokunaga K."/>
            <person name="Ishikawa Y."/>
            <person name="Kashiwase K."/>
            <person name="Tanaka H."/>
            <person name="Park M.H."/>
            <person name="Jia G.J."/>
            <person name="Chimge N.-O."/>
            <person name="Sideltseva E.W."/>
            <person name="Akaza T."/>
            <person name="Tadokoro K."/>
            <person name="Takahashi T."/>
            <person name="Juji T."/>
        </authorList>
    </citation>
    <scope>NUCLEOTIDE SEQUENCE [MRNA] (ALLELE B*58:01)</scope>
</reference>
<reference key="22">
    <citation type="journal article" date="1985" name="J. Biol. Chem.">
        <title>The complete primary structure of HLA-Bw58.</title>
        <authorList>
            <person name="Ways J.P."/>
            <person name="Coppin H.L."/>
            <person name="Parham P."/>
        </authorList>
    </citation>
    <scope>NUCLEOTIDE SEQUENCE [GENOMIC DNA] (ALLELE B*58:01)</scope>
</reference>
<reference key="23">
    <citation type="journal article" date="1986" name="EMBO J.">
        <title>Gene conversion-like mechanisms may generate polymorphism in human class I genes.</title>
        <authorList>
            <person name="Seemann G.H.A."/>
            <person name="Rein R.S."/>
            <person name="Brown C.S."/>
            <person name="Ploegh H.L."/>
        </authorList>
    </citation>
    <scope>NUCLEOTIDE SEQUENCE [GENOMIC DNA] (ALLELES B*27:05)</scope>
</reference>
<reference key="24">
    <citation type="journal article" date="1986" name="J. Immunol.">
        <title>Absence of polymorphism between HLA-B27 genomic exon sequences isolated from normal donors and ankylosing spondylitis patients.</title>
        <authorList>
            <person name="Coppin H.L."/>
            <person name="McDevitt H.O."/>
        </authorList>
    </citation>
    <scope>NUCLEOTIDE SEQUENCE [GENOMIC DNA] OF 25-298 (ALLELE B*27:05)</scope>
</reference>
<reference key="25">
    <citation type="journal article" date="1988" name="Immunogenetics">
        <title>Comparison of the structure of HLA-Bw47 to HLA-B13 and its relationship to 21-hydroxylase deficiency.</title>
        <authorList>
            <person name="Zemmour J."/>
            <person name="Ennis P.D."/>
            <person name="Parham P."/>
            <person name="Dupont B."/>
        </authorList>
    </citation>
    <scope>NUCLEOTIDE SEQUENCE [GENOMIC DNA] (ALLELE B*13:02 AND B*47:01)</scope>
</reference>
<reference key="26">
    <citation type="journal article" date="1989" name="Immunogenetics">
        <title>The structure of HLA-B35 suggests that it is derived from HLA-Bw58 by two genetic mechanisms.</title>
        <authorList>
            <person name="Ooba T."/>
            <person name="Hayashi H."/>
            <person name="Karaki S."/>
            <person name="Tanabe M."/>
            <person name="Kano K."/>
            <person name="Takiguchi M."/>
        </authorList>
    </citation>
    <scope>NUCLEOTIDE SEQUENCE [GENOMIC DNA] (ALLELE B*35:01)</scope>
</reference>
<reference key="27">
    <citation type="journal article" date="1989" name="Immunogenetics">
        <title>Allelic variation in HLA-B and HLA-C sequences and the evolution of the HLA-B alleles.</title>
        <authorList>
            <person name="Pohla H."/>
            <person name="Kuon W."/>
            <person name="Tabaczewski P."/>
            <person name="Doerner C."/>
            <person name="Weiss E.H."/>
        </authorList>
    </citation>
    <scope>NUCLEOTIDE SEQUENCE [GENOMIC DNA] (ALLELE B*51:01)</scope>
</reference>
<reference key="28">
    <citation type="journal article" date="1989" name="J. Immunol.">
        <title>Diversity and diversification of HLA-A,B,C alleles.</title>
        <authorList>
            <person name="Parham P."/>
            <person name="Lawlor D.A."/>
            <person name="Lomen C.E."/>
            <person name="Ennis P.D."/>
        </authorList>
    </citation>
    <scope>NUCLEOTIDE SEQUENCE [GENOMIC DNA] (ALLELES B*08:01; B*13:02; B*14:01; B*18:01; B*41:01; B*42:01; B*44:02 AND B*46:01)</scope>
</reference>
<reference key="29">
    <citation type="journal article" date="1990" name="Immunogenetics">
        <title>Allospecificities between HLA-Bw53 and HLA-B35 are generated by substitution of the residues associated with HLA-Bw4/Bw6 public epitopes.</title>
        <authorList>
            <person name="Hayashi H."/>
            <person name="Ooba T."/>
            <person name="Nakayama S."/>
            <person name="Sekimata M."/>
            <person name="Kano K."/>
            <person name="Takiguchi M."/>
        </authorList>
    </citation>
    <scope>NUCLEOTIDE SEQUENCE [GENOMIC DNA] (ALLELE B*53:01)</scope>
</reference>
<reference key="30">
    <citation type="journal article" date="1990" name="J. Immunol.">
        <title>Allodeterminants and evolution of a novel HLA-B5 CREG antigen, HLA-B SNA.</title>
        <authorList>
            <person name="Sekimata M."/>
            <person name="Hiraiwa M."/>
            <person name="Andrien M."/>
            <person name="Dupont E."/>
            <person name="Karaki S."/>
            <person name="Yamamoto J."/>
            <person name="Kano K."/>
            <person name="Takiguchi M."/>
        </authorList>
    </citation>
    <scope>NUCLEOTIDE SEQUENCE [GENOMIC DNA] (ALLELE B*78:01)</scope>
</reference>
<reference key="31">
    <citation type="journal article" date="1990" name="Nucleic Acids Res.">
        <title>Nucleotide sequence of an HLA-Bw57 gene.</title>
        <authorList>
            <person name="Isamat M."/>
            <person name="Girdlestone J."/>
            <person name="Milstein C."/>
        </authorList>
    </citation>
    <scope>NUCLEOTIDE SEQUENCE [GENOMIC DNA] (ALLELE B*57:01)</scope>
</reference>
<reference key="32">
    <citation type="journal article" date="1993" name="Immunogenetics">
        <title>Molecular analysis of HLA-B39 subtypes.</title>
        <authorList>
            <person name="Kato N."/>
            <person name="Karaki S."/>
            <person name="Kashiwase K."/>
            <person name="Mueller C."/>
            <person name="Akaza T."/>
            <person name="Juji T."/>
            <person name="Kano K."/>
            <person name="Takiguchi M."/>
        </authorList>
    </citation>
    <scope>NUCLEOTIDE SEQUENCE [GENOMIC DNA] (ALLELE B*39:02)</scope>
</reference>
<reference key="33">
    <citation type="journal article" date="1994" name="Tissue Antigens">
        <title>HLA-B67: a member of the HLA-B16 family that expresses the ME1 epitope.</title>
        <authorList>
            <person name="Little A.-M."/>
            <person name="Domena J.D."/>
            <person name="Hildebrand W.H."/>
            <person name="Shen S.Y."/>
            <person name="Barber L.D."/>
            <person name="Marsh S.G.E."/>
            <person name="Bias W.B."/>
            <person name="Parham P."/>
        </authorList>
    </citation>
    <scope>NUCLEOTIDE SEQUENCE [GENOMIC DNA] (ALLELE B*40:01)</scope>
    <scope>NUCLEOTIDE SEQUENCE [MRNA] (ALLELE B*67:01)</scope>
</reference>
<reference key="34">
    <citation type="journal article" date="2003" name="Tissue Antigens">
        <title>Cloning and sequencing full-length HLA-B and -C genes.</title>
        <authorList>
            <person name="Cox S.T."/>
            <person name="McWhinnie A.J."/>
            <person name="Robinson J."/>
            <person name="Marsh S.G.E."/>
            <person name="Parham P."/>
            <person name="Madrigal J.A."/>
            <person name="Little A.-M."/>
        </authorList>
    </citation>
    <scope>NUCLEOTIDE SEQUENCE [GENOMIC DNA] (ALLELES B*07:02; B*08:01; B*18:01; B*41:01; B*42:01; B*45:01; B*46:01; B*47:01; B*48:01 AND B*55:01)</scope>
    <source>
        <tissue>Blood</tissue>
    </source>
</reference>
<reference key="35">
    <citation type="journal article" date="2011" name="Int. J. Immunogenet.">
        <title>Analysis for complete genomic sequence of HLA-B and HLA-C alleles in the Chinese Han population.</title>
        <authorList>
            <person name="Zhu F."/>
            <person name="He Y."/>
            <person name="Zhang W."/>
            <person name="He J."/>
            <person name="He J."/>
            <person name="Xu X."/>
            <person name="Lv H."/>
            <person name="Yan L."/>
        </authorList>
    </citation>
    <scope>NUCLEOTIDE SEQUENCE [GENOMIC DNA] (ALLELE B*52:01)</scope>
</reference>
<reference key="36">
    <citation type="journal article" date="2011" name="Science">
        <title>The shaping of modern human immune systems by multiregional admixture with archaic humans.</title>
        <authorList>
            <person name="Abi-Rached L."/>
            <person name="Jobin M.J."/>
            <person name="Kulkarni S."/>
            <person name="McWhinnie A."/>
            <person name="Dalva K."/>
            <person name="Gragert L."/>
            <person name="Babrzadeh F."/>
            <person name="Gharizadeh B."/>
            <person name="Luo M."/>
            <person name="Plummer F.A."/>
            <person name="Kimani J."/>
            <person name="Carrington M."/>
            <person name="Middleton D."/>
            <person name="Rajalingam R."/>
            <person name="Beksac M."/>
            <person name="Marsh S.G."/>
            <person name="Maiers M."/>
            <person name="Guethlein L.A."/>
            <person name="Tavoularis S."/>
            <person name="Little A.M."/>
            <person name="Green R.E."/>
            <person name="Norman P.J."/>
            <person name="Parham P."/>
        </authorList>
    </citation>
    <scope>NUCLEOTIDE SEQUENCE [GENOMIC DNA] (ALLELE B*73:01)</scope>
</reference>
<reference key="37">
    <citation type="submission" date="1994-06" db="EMBL/GenBank/DDBJ databases">
        <authorList>
            <person name="Hurley C.K."/>
            <person name="Bei M."/>
            <person name="Rodriguez S."/>
            <person name="Johnson A."/>
        </authorList>
    </citation>
    <scope>NUCLEOTIDE SEQUENCE [MRNA] OF 1-322 (ALLELE B*37:01)</scope>
    <scope>NUCLEOTIDE SEQUENCE [MRNA] OF 1-322 (ALLELE B*50:01)</scope>
</reference>
<reference key="38">
    <citation type="submission" date="1995-04" db="EMBL/GenBank/DDBJ databases">
        <authorList>
            <person name="Lin L."/>
            <person name="Tokunaga K."/>
        </authorList>
    </citation>
    <scope>NUCLEOTIDE SEQUENCE [MRNA] (ALLELE B*59:01)</scope>
    <source>
        <tissue>Blood</tissue>
    </source>
</reference>
<reference key="39">
    <citation type="submission" date="1995-06" db="EMBL/GenBank/DDBJ databases">
        <authorList>
            <person name="Ellexson M.E."/>
            <person name="Zhang L."/>
            <person name="Hildebrand W.H."/>
        </authorList>
    </citation>
    <scope>NUCLEOTIDE SEQUENCE [MRNA] (ALLELE B*07:02)</scope>
</reference>
<reference key="40">
    <citation type="submission" date="1995-10" db="EMBL/GenBank/DDBJ databases">
        <authorList>
            <person name="Ellexson M.E."/>
            <person name="Hildebrand W.H."/>
        </authorList>
    </citation>
    <scope>NUCLEOTIDE SEQUENCE [MRNA] (ALLELE B*82:01)</scope>
</reference>
<reference key="41">
    <citation type="submission" date="1995-11" db="EMBL/GenBank/DDBJ databases">
        <authorList>
            <person name="Morlighem G."/>
        </authorList>
    </citation>
    <scope>NUCLEOTIDE SEQUENCE [MRNA] (ALLELE B*38:01)</scope>
</reference>
<reference key="42">
    <citation type="submission" date="2001-03" db="EMBL/GenBank/DDBJ databases">
        <title>Complete nucleotide sequencing of HLA class I genes.</title>
        <authorList>
            <person name="Dunn P.P.J."/>
        </authorList>
    </citation>
    <scope>NUCLEOTIDE SEQUENCE [GENOMIC DNA] (ALLELE B*44:02)</scope>
</reference>
<reference key="43">
    <citation type="submission" date="2001-03" db="EMBL/GenBank/DDBJ databases">
        <title>Intron sequences of HLA class I.</title>
        <authorList>
            <person name="Marsh S.G.E."/>
        </authorList>
    </citation>
    <scope>NUCLEOTIDE SEQUENCE [GENOMIC DNA] (ALLELE B*07:02)</scope>
</reference>
<reference key="44">
    <citation type="submission" date="2001-04" db="EMBL/GenBank/DDBJ databases">
        <title>Confirmation of B*3701.</title>
        <authorList>
            <person name="Cox S.T."/>
        </authorList>
    </citation>
    <scope>NUCLEOTIDE SEQUENCE [GENOMIC DNA] (ALLELE B*37:01)</scope>
    <source>
        <tissue>Blood</tissue>
    </source>
</reference>
<reference key="45">
    <citation type="submission" date="2001-04" db="EMBL/GenBank/DDBJ databases">
        <title>Confirmation of B*7801.</title>
        <authorList>
            <person name="Cox S.T."/>
        </authorList>
    </citation>
    <scope>NUCLEOTIDE SEQUENCE [GENOMIC DNA] (ALLELE B*78:01)</scope>
    <source>
        <tissue>Blood</tissue>
    </source>
</reference>
<reference key="46">
    <citation type="submission" date="2017-11" db="EMBL/GenBank/DDBJ databases">
        <title>Oncology, C.W.Bill Young DoD Marrow Donor Recruitment and Research Program, 11333 Woodglen Dr, Rockville, MD 20852, USA.</title>
        <authorList>
            <person name="Lazaro A.M."/>
            <person name="Hou L."/>
            <person name="Enriquez E."/>
            <person name="Persaud M."/>
            <person name="Hurley C.K."/>
        </authorList>
    </citation>
    <scope>NUCLEOTIDE SEQUENCE [GENOMIC DNA] (ALLELE B*27:01)</scope>
</reference>
<reference key="47">
    <citation type="submission" date="2000-07" db="EMBL/GenBank/DDBJ databases">
        <title>Pediatric leukemia cDNA sequencing project.</title>
        <authorList>
            <person name="Zhou J."/>
            <person name="Yu W."/>
            <person name="Tang H."/>
            <person name="Mei G."/>
            <person name="Tsang Y.T.M."/>
            <person name="Bouck J."/>
            <person name="Gibbs R.A."/>
            <person name="Margolin J.F."/>
        </authorList>
    </citation>
    <scope>NUCLEOTIDE SEQUENCE [LARGE SCALE MRNA] (ALLELE B*55:01)</scope>
    <source>
        <tissue>Leukemia</tissue>
    </source>
</reference>
<reference key="48">
    <citation type="submission" date="1999-09" db="EMBL/GenBank/DDBJ databases">
        <title>Homo sapiens 2,229,817bp genomic DNA of 6p21.3 HLA class I region.</title>
        <authorList>
            <person name="Shiina S."/>
            <person name="Tamiya G."/>
            <person name="Oka A."/>
            <person name="Inoko H."/>
        </authorList>
    </citation>
    <scope>NUCLEOTIDE SEQUENCE [LARGE SCALE GENOMIC DNA] (ALLELE B*08:01)</scope>
</reference>
<reference key="49">
    <citation type="journal article" date="2004" name="Genome Res.">
        <title>The status, quality, and expansion of the NIH full-length cDNA project: the Mammalian Gene Collection (MGC).</title>
        <authorList>
            <consortium name="The MGC Project Team"/>
        </authorList>
    </citation>
    <scope>NUCLEOTIDE SEQUENCE [LARGE SCALE MRNA]</scope>
    <source>
        <tissue>Brain</tissue>
    </source>
</reference>
<reference key="50">
    <citation type="journal article" date="2004" name="Nat. Genet.">
        <title>Complete sequencing and characterization of 21,243 full-length human cDNAs.</title>
        <authorList>
            <person name="Ota T."/>
            <person name="Suzuki Y."/>
            <person name="Nishikawa T."/>
            <person name="Otsuki T."/>
            <person name="Sugiyama T."/>
            <person name="Irie R."/>
            <person name="Wakamatsu A."/>
            <person name="Hayashi K."/>
            <person name="Sato H."/>
            <person name="Nagai K."/>
            <person name="Kimura K."/>
            <person name="Makita H."/>
            <person name="Sekine M."/>
            <person name="Obayashi M."/>
            <person name="Nishi T."/>
            <person name="Shibahara T."/>
            <person name="Tanaka T."/>
            <person name="Ishii S."/>
            <person name="Yamamoto J."/>
            <person name="Saito K."/>
            <person name="Kawai Y."/>
            <person name="Isono Y."/>
            <person name="Nakamura Y."/>
            <person name="Nagahari K."/>
            <person name="Murakami K."/>
            <person name="Yasuda T."/>
            <person name="Iwayanagi T."/>
            <person name="Wagatsuma M."/>
            <person name="Shiratori A."/>
            <person name="Sudo H."/>
            <person name="Hosoiri T."/>
            <person name="Kaku Y."/>
            <person name="Kodaira H."/>
            <person name="Kondo H."/>
            <person name="Sugawara M."/>
            <person name="Takahashi M."/>
            <person name="Kanda K."/>
            <person name="Yokoi T."/>
            <person name="Furuya T."/>
            <person name="Kikkawa E."/>
            <person name="Omura Y."/>
            <person name="Abe K."/>
            <person name="Kamihara K."/>
            <person name="Katsuta N."/>
            <person name="Sato K."/>
            <person name="Tanikawa M."/>
            <person name="Yamazaki M."/>
            <person name="Ninomiya K."/>
            <person name="Ishibashi T."/>
            <person name="Yamashita H."/>
            <person name="Murakawa K."/>
            <person name="Fujimori K."/>
            <person name="Tanai H."/>
            <person name="Kimata M."/>
            <person name="Watanabe M."/>
            <person name="Hiraoka S."/>
            <person name="Chiba Y."/>
            <person name="Ishida S."/>
            <person name="Ono Y."/>
            <person name="Takiguchi S."/>
            <person name="Watanabe S."/>
            <person name="Yosida M."/>
            <person name="Hotuta T."/>
            <person name="Kusano J."/>
            <person name="Kanehori K."/>
            <person name="Takahashi-Fujii A."/>
            <person name="Hara H."/>
            <person name="Tanase T.-O."/>
            <person name="Nomura Y."/>
            <person name="Togiya S."/>
            <person name="Komai F."/>
            <person name="Hara R."/>
            <person name="Takeuchi K."/>
            <person name="Arita M."/>
            <person name="Imose N."/>
            <person name="Musashino K."/>
            <person name="Yuuki H."/>
            <person name="Oshima A."/>
            <person name="Sasaki N."/>
            <person name="Aotsuka S."/>
            <person name="Yoshikawa Y."/>
            <person name="Matsunawa H."/>
            <person name="Ichihara T."/>
            <person name="Shiohata N."/>
            <person name="Sano S."/>
            <person name="Moriya S."/>
            <person name="Momiyama H."/>
            <person name="Satoh N."/>
            <person name="Takami S."/>
            <person name="Terashima Y."/>
            <person name="Suzuki O."/>
            <person name="Nakagawa S."/>
            <person name="Senoh A."/>
            <person name="Mizoguchi H."/>
            <person name="Goto Y."/>
            <person name="Shimizu F."/>
            <person name="Wakebe H."/>
            <person name="Hishigaki H."/>
            <person name="Watanabe T."/>
            <person name="Sugiyama A."/>
            <person name="Takemoto M."/>
            <person name="Kawakami B."/>
            <person name="Yamazaki M."/>
            <person name="Watanabe K."/>
            <person name="Kumagai A."/>
            <person name="Itakura S."/>
            <person name="Fukuzumi Y."/>
            <person name="Fujimori Y."/>
            <person name="Komiyama M."/>
            <person name="Tashiro H."/>
            <person name="Tanigami A."/>
            <person name="Fujiwara T."/>
            <person name="Ono T."/>
            <person name="Yamada K."/>
            <person name="Fujii Y."/>
            <person name="Ozaki K."/>
            <person name="Hirao M."/>
            <person name="Ohmori Y."/>
            <person name="Kawabata A."/>
            <person name="Hikiji T."/>
            <person name="Kobatake N."/>
            <person name="Inagaki H."/>
            <person name="Ikema Y."/>
            <person name="Okamoto S."/>
            <person name="Okitani R."/>
            <person name="Kawakami T."/>
            <person name="Noguchi S."/>
            <person name="Itoh T."/>
            <person name="Shigeta K."/>
            <person name="Senba T."/>
            <person name="Matsumura K."/>
            <person name="Nakajima Y."/>
            <person name="Mizuno T."/>
            <person name="Morinaga M."/>
            <person name="Sasaki M."/>
            <person name="Togashi T."/>
            <person name="Oyama M."/>
            <person name="Hata H."/>
            <person name="Watanabe M."/>
            <person name="Komatsu T."/>
            <person name="Mizushima-Sugano J."/>
            <person name="Satoh T."/>
            <person name="Shirai Y."/>
            <person name="Takahashi Y."/>
            <person name="Nakagawa K."/>
            <person name="Okumura K."/>
            <person name="Nagase T."/>
            <person name="Nomura N."/>
            <person name="Kikuchi H."/>
            <person name="Masuho Y."/>
            <person name="Yamashita R."/>
            <person name="Nakai K."/>
            <person name="Yada T."/>
            <person name="Nakamura Y."/>
            <person name="Ohara O."/>
            <person name="Isogai T."/>
            <person name="Sugano S."/>
        </authorList>
    </citation>
    <scope>NUCLEOTIDE SEQUENCE [LARGE SCALE MRNA] (ALLELE B*07:02)</scope>
    <source>
        <tissue>Subthalamic nucleus</tissue>
    </source>
</reference>
<reference key="51">
    <citation type="journal article" date="2003" name="Nature">
        <title>The DNA sequence and analysis of human chromosome 6.</title>
        <authorList>
            <person name="Mungall A.J."/>
            <person name="Palmer S.A."/>
            <person name="Sims S.K."/>
            <person name="Edwards C.A."/>
            <person name="Ashurst J.L."/>
            <person name="Wilming L."/>
            <person name="Jones M.C."/>
            <person name="Horton R."/>
            <person name="Hunt S.E."/>
            <person name="Scott C.E."/>
            <person name="Gilbert J.G.R."/>
            <person name="Clamp M.E."/>
            <person name="Bethel G."/>
            <person name="Milne S."/>
            <person name="Ainscough R."/>
            <person name="Almeida J.P."/>
            <person name="Ambrose K.D."/>
            <person name="Andrews T.D."/>
            <person name="Ashwell R.I.S."/>
            <person name="Babbage A.K."/>
            <person name="Bagguley C.L."/>
            <person name="Bailey J."/>
            <person name="Banerjee R."/>
            <person name="Barker D.J."/>
            <person name="Barlow K.F."/>
            <person name="Bates K."/>
            <person name="Beare D.M."/>
            <person name="Beasley H."/>
            <person name="Beasley O."/>
            <person name="Bird C.P."/>
            <person name="Blakey S.E."/>
            <person name="Bray-Allen S."/>
            <person name="Brook J."/>
            <person name="Brown A.J."/>
            <person name="Brown J.Y."/>
            <person name="Burford D.C."/>
            <person name="Burrill W."/>
            <person name="Burton J."/>
            <person name="Carder C."/>
            <person name="Carter N.P."/>
            <person name="Chapman J.C."/>
            <person name="Clark S.Y."/>
            <person name="Clark G."/>
            <person name="Clee C.M."/>
            <person name="Clegg S."/>
            <person name="Cobley V."/>
            <person name="Collier R.E."/>
            <person name="Collins J.E."/>
            <person name="Colman L.K."/>
            <person name="Corby N.R."/>
            <person name="Coville G.J."/>
            <person name="Culley K.M."/>
            <person name="Dhami P."/>
            <person name="Davies J."/>
            <person name="Dunn M."/>
            <person name="Earthrowl M.E."/>
            <person name="Ellington A.E."/>
            <person name="Evans K.A."/>
            <person name="Faulkner L."/>
            <person name="Francis M.D."/>
            <person name="Frankish A."/>
            <person name="Frankland J."/>
            <person name="French L."/>
            <person name="Garner P."/>
            <person name="Garnett J."/>
            <person name="Ghori M.J."/>
            <person name="Gilby L.M."/>
            <person name="Gillson C.J."/>
            <person name="Glithero R.J."/>
            <person name="Grafham D.V."/>
            <person name="Grant M."/>
            <person name="Gribble S."/>
            <person name="Griffiths C."/>
            <person name="Griffiths M.N.D."/>
            <person name="Hall R."/>
            <person name="Halls K.S."/>
            <person name="Hammond S."/>
            <person name="Harley J.L."/>
            <person name="Hart E.A."/>
            <person name="Heath P.D."/>
            <person name="Heathcott R."/>
            <person name="Holmes S.J."/>
            <person name="Howden P.J."/>
            <person name="Howe K.L."/>
            <person name="Howell G.R."/>
            <person name="Huckle E."/>
            <person name="Humphray S.J."/>
            <person name="Humphries M.D."/>
            <person name="Hunt A.R."/>
            <person name="Johnson C.M."/>
            <person name="Joy A.A."/>
            <person name="Kay M."/>
            <person name="Keenan S.J."/>
            <person name="Kimberley A.M."/>
            <person name="King A."/>
            <person name="Laird G.K."/>
            <person name="Langford C."/>
            <person name="Lawlor S."/>
            <person name="Leongamornlert D.A."/>
            <person name="Leversha M."/>
            <person name="Lloyd C.R."/>
            <person name="Lloyd D.M."/>
            <person name="Loveland J.E."/>
            <person name="Lovell J."/>
            <person name="Martin S."/>
            <person name="Mashreghi-Mohammadi M."/>
            <person name="Maslen G.L."/>
            <person name="Matthews L."/>
            <person name="McCann O.T."/>
            <person name="McLaren S.J."/>
            <person name="McLay K."/>
            <person name="McMurray A."/>
            <person name="Moore M.J.F."/>
            <person name="Mullikin J.C."/>
            <person name="Niblett D."/>
            <person name="Nickerson T."/>
            <person name="Novik K.L."/>
            <person name="Oliver K."/>
            <person name="Overton-Larty E.K."/>
            <person name="Parker A."/>
            <person name="Patel R."/>
            <person name="Pearce A.V."/>
            <person name="Peck A.I."/>
            <person name="Phillimore B.J.C.T."/>
            <person name="Phillips S."/>
            <person name="Plumb R.W."/>
            <person name="Porter K.M."/>
            <person name="Ramsey Y."/>
            <person name="Ranby S.A."/>
            <person name="Rice C.M."/>
            <person name="Ross M.T."/>
            <person name="Searle S.M."/>
            <person name="Sehra H.K."/>
            <person name="Sheridan E."/>
            <person name="Skuce C.D."/>
            <person name="Smith S."/>
            <person name="Smith M."/>
            <person name="Spraggon L."/>
            <person name="Squares S.L."/>
            <person name="Steward C.A."/>
            <person name="Sycamore N."/>
            <person name="Tamlyn-Hall G."/>
            <person name="Tester J."/>
            <person name="Theaker A.J."/>
            <person name="Thomas D.W."/>
            <person name="Thorpe A."/>
            <person name="Tracey A."/>
            <person name="Tromans A."/>
            <person name="Tubby B."/>
            <person name="Wall M."/>
            <person name="Wallis J.M."/>
            <person name="West A.P."/>
            <person name="White S.S."/>
            <person name="Whitehead S.L."/>
            <person name="Whittaker H."/>
            <person name="Wild A."/>
            <person name="Willey D.J."/>
            <person name="Wilmer T.E."/>
            <person name="Wood J.M."/>
            <person name="Wray P.W."/>
            <person name="Wyatt J.C."/>
            <person name="Young L."/>
            <person name="Younger R.M."/>
            <person name="Bentley D.R."/>
            <person name="Coulson A."/>
            <person name="Durbin R.M."/>
            <person name="Hubbard T."/>
            <person name="Sulston J.E."/>
            <person name="Dunham I."/>
            <person name="Rogers J."/>
            <person name="Beck S."/>
        </authorList>
    </citation>
    <scope>NUCLEOTIDE SEQUENCE [LARGE SCALE GENOMIC DNA]</scope>
</reference>
<reference key="52">
    <citation type="journal article" date="1979" name="Biochemistry">
        <title>Complete amino acid sequence of a papain-solubilized human histocompatibility antigen, HLA-B7. 2. Sequence determination and search for homologies.</title>
        <authorList>
            <person name="Orr H.T."/>
            <person name="Lopez de Castro J.A."/>
            <person name="Lancet D."/>
            <person name="Strominger J.L."/>
        </authorList>
    </citation>
    <scope>PROTEIN SEQUENCE OF 25-295 (B*07:02)</scope>
</reference>
<reference key="53">
    <citation type="journal article" date="1991" name="Nature">
        <title>Identification of self peptides bound to purified HLA-B27.</title>
        <authorList>
            <person name="Jardetzky T.S."/>
            <person name="Lane W.S."/>
            <person name="Robinson R.A."/>
            <person name="Madden D.R."/>
            <person name="Wiley D.C."/>
        </authorList>
    </citation>
    <scope>FUNCTION (ALLELE B*27:05)</scope>
</reference>
<reference key="54">
    <citation type="journal article" date="1995" name="Curr. Biol.">
        <title>Overlap in the repertoires of peptides bound in vivo by a group of related class I HLA-B allotypes.</title>
        <authorList>
            <person name="Barber L.D."/>
            <person name="Gillece-Castro B."/>
            <person name="Percival L."/>
            <person name="Li X."/>
            <person name="Clayberger C."/>
            <person name="Parham P."/>
        </authorList>
    </citation>
    <scope>FUNCTION (ALLELES B*07:02; B*54:01; B*55:01; B*56:01 AND B*67:01)</scope>
</reference>
<reference key="55">
    <citation type="journal article" date="1996" name="J. Exp. Med.">
        <title>A p70 killer cell inhibitory receptor specific for several HLA-B allotypes discriminates among peptides bound to HLA-B*2705.</title>
        <authorList>
            <person name="Peruzzi M."/>
            <person name="Wagtmann N."/>
            <person name="Long E.O."/>
        </authorList>
    </citation>
    <scope>FUNCTION (ALLELE B*27:05)</scope>
</reference>
<reference key="56">
    <citation type="journal article" date="1997" name="J. Immunol.">
        <title>Prominence of beta 2-microglobulin, class I heavy chain conformation, and tapasin in the interactions of class I heavy chain with calreticulin and the transporter associated with antigen processing.</title>
        <authorList>
            <person name="Solheim J.C."/>
            <person name="Harris M.R."/>
            <person name="Kindle C.S."/>
            <person name="Hansen T.H."/>
        </authorList>
    </citation>
    <scope>INTERACTION WITH B2M</scope>
    <scope>INTERACTION WITH CALR AND TAP1-TAP2</scope>
</reference>
<reference key="57">
    <citation type="journal article" date="1998" name="Immunity">
        <title>HLA-B27-restricted antigen presentation in the absence of tapasin reveals polymorphism in mechanisms of HLA class I peptide loading.</title>
        <authorList>
            <person name="Peh C.A."/>
            <person name="Burrows S.R."/>
            <person name="Barnden M."/>
            <person name="Khanna R."/>
            <person name="Cresswell P."/>
            <person name="Moss D.J."/>
            <person name="McCluskey J."/>
        </authorList>
    </citation>
    <scope>FUNCTION (ALLELES B*08:01; B*27:05 AND B*44:02)</scope>
    <scope>INTERACTION WITH TAP1-TAP2</scope>
    <scope>SUBCELLULAR LOCATION</scope>
</reference>
<reference key="58">
    <citation type="journal article" date="2001" name="J. Virol.">
        <title>Free major histocompatibility complex class I heavy chain is preferentially targeted for degradation by human T-cell leukemia/lymphotropic virus type 1 p12(I) protein.</title>
        <authorList>
            <person name="Johnson J.M."/>
            <person name="Nicot C."/>
            <person name="Fullen J."/>
            <person name="Ciminale V."/>
            <person name="Casareto L."/>
            <person name="Mulloy J.C."/>
            <person name="Jacobson S."/>
            <person name="Franchini G."/>
        </authorList>
    </citation>
    <scope>INTERACTION WITH HTLV-1 ACCESSORY PROTEIN P12I (MICROBIAL INFECTION)</scope>
</reference>
<reference key="59">
    <citation type="journal article" date="2002" name="Tissue Antigens">
        <title>A MAGE-3 peptide presented by HLA-B44 is also recognized by cytolytic T lymphocytes on HLA-B18.</title>
        <authorList>
            <person name="Bilsborough J."/>
            <person name="Panichelli C."/>
            <person name="Duffour M.T."/>
            <person name="Warnier G."/>
            <person name="Lurquin C."/>
            <person name="Schultz E.S."/>
            <person name="Thielemans K."/>
            <person name="Corthals J."/>
            <person name="Boon T."/>
            <person name="van der Bruggen P."/>
        </authorList>
    </citation>
    <scope>FUNCTION (ALLELE B*18:01)</scope>
</reference>
<reference key="60">
    <citation type="journal article" date="2004" name="J. Immunol.">
        <title>Toward a definition of self: proteomic evaluation of the class I peptide repertoire.</title>
        <authorList>
            <person name="Hickman H.D."/>
            <person name="Luis A.D."/>
            <person name="Buchli R."/>
            <person name="Few S.R."/>
            <person name="Sathiamurthy M."/>
            <person name="VanGundy R.S."/>
            <person name="Giberson C.F."/>
            <person name="Hildebrand W.H."/>
        </authorList>
    </citation>
    <scope>FUNCTION (ALLELE B*18:01)</scope>
</reference>
<reference key="61">
    <citation type="journal article" date="2004" name="J. Virol.">
        <title>A mutation in the HLA-B*2705-restricted NP383-391 epitope affects the human influenza A virus-specific cytotoxic T-lymphocyte response in vitro.</title>
        <authorList>
            <person name="Berkhoff E.G."/>
            <person name="Boon A.C."/>
            <person name="Nieuwkoop N.J."/>
            <person name="Fouchier R.A."/>
            <person name="Sintnicolaas K."/>
            <person name="Osterhaus A.D."/>
            <person name="Rimmelzwaan G.F."/>
        </authorList>
    </citation>
    <scope>FUNCTION (ALLELE B*27:05)</scope>
</reference>
<reference key="62">
    <citation type="journal article" date="2007" name="J. Virol.">
        <title>Control of human immunodeficiency virus type 1 is associated with HLA-B*13 and targeting of multiple gag-specific CD8+ T-cell epitopes.</title>
        <authorList>
            <person name="Honeyborne I."/>
            <person name="Prendergast A."/>
            <person name="Pereyra F."/>
            <person name="Leslie A."/>
            <person name="Crawford H."/>
            <person name="Payne R."/>
            <person name="Reddy S."/>
            <person name="Bishop K."/>
            <person name="Moodley E."/>
            <person name="Nair K."/>
            <person name="van der Stok M."/>
            <person name="McCarthy N."/>
            <person name="Rousseau C.M."/>
            <person name="Addo M."/>
            <person name="Mullins J.I."/>
            <person name="Brander C."/>
            <person name="Kiepiela P."/>
            <person name="Walker B.D."/>
            <person name="Goulder P.J."/>
        </authorList>
    </citation>
    <scope>FUNCTION (ALLELE B*13:02)</scope>
</reference>
<reference key="63">
    <citation type="journal article" date="2008" name="Eur. J. Immunol.">
        <title>Essential differences in ligand presentation and T cell epitope recognition among HLA molecules of the HLA-B44 supertype.</title>
        <authorList>
            <person name="Hillen N."/>
            <person name="Mester G."/>
            <person name="Lemmel C."/>
            <person name="Weinzierl A.O."/>
            <person name="Mueller M."/>
            <person name="Wernet D."/>
            <person name="Hennenlotter J."/>
            <person name="Stenzl A."/>
            <person name="Rammensee H.G."/>
            <person name="Stevanovic S."/>
        </authorList>
    </citation>
    <scope>FUNCTION (ALLELES B*18:01; B*40:01; B*41:01; B*44:02; B*45:01; B*47:01; B*49:01 AND B*50:01)</scope>
</reference>
<reference key="64">
    <citation type="journal article" date="2008" name="J. Virol.">
        <title>Structural and functional constraints limit options for cytotoxic T-lymphocyte escape in the immunodominant HLA-B27-restricted epitope in human immunodeficiency virus type 1 capsid.</title>
        <authorList>
            <person name="Schneidewind A."/>
            <person name="Brockman M.A."/>
            <person name="Sidney J."/>
            <person name="Wang Y.E."/>
            <person name="Chen H."/>
            <person name="Suscovich T.J."/>
            <person name="Li B."/>
            <person name="Adam R.I."/>
            <person name="Allgaier R.L."/>
            <person name="Mothe B.R."/>
            <person name="Kuntzen T."/>
            <person name="Oniangue-Ndza C."/>
            <person name="Trocha A."/>
            <person name="Yu X.G."/>
            <person name="Brander C."/>
            <person name="Sette A."/>
            <person name="Walker B.D."/>
            <person name="Allen T.M."/>
        </authorList>
    </citation>
    <scope>FUNCTION (ALLELE B*27:05)</scope>
</reference>
<reference key="65">
    <citation type="journal article" date="2009" name="J. Clin. Invest.">
        <title>Loss of viral fitness and cross-recognition by CD8+ T cells limit HCV escape from a protective HLA-B27-restricted human immune response.</title>
        <authorList>
            <person name="Dazert E."/>
            <person name="Neumann-Haefelin C."/>
            <person name="Bressanelli S."/>
            <person name="Fitzmaurice K."/>
            <person name="Kort J."/>
            <person name="Timm J."/>
            <person name="McKiernan S."/>
            <person name="Kelleher D."/>
            <person name="Gruener N."/>
            <person name="Tavis J.E."/>
            <person name="Rosen H.R."/>
            <person name="Shaw J."/>
            <person name="Bowness P."/>
            <person name="Blum H.E."/>
            <person name="Klenerman P."/>
            <person name="Bartenschlager R."/>
            <person name="Thimme R."/>
        </authorList>
    </citation>
    <scope>FUNCTION (ALLELE B*27:05)</scope>
</reference>
<reference key="66">
    <citation type="journal article" date="2009" name="J. Proteome Res.">
        <title>Glycoproteomics analysis of human liver tissue by combination of multiple enzyme digestion and hydrazide chemistry.</title>
        <authorList>
            <person name="Chen R."/>
            <person name="Jiang X."/>
            <person name="Sun D."/>
            <person name="Han G."/>
            <person name="Wang F."/>
            <person name="Ye M."/>
            <person name="Wang L."/>
            <person name="Zou H."/>
        </authorList>
    </citation>
    <scope>GLYCOSYLATION [LARGE SCALE ANALYSIS] AT ASN-110</scope>
    <source>
        <tissue>Liver</tissue>
    </source>
</reference>
<reference key="67">
    <citation type="journal article" date="2010" name="Tissue Antigens">
        <title>Nomenclature for factors of the HLA system, 2010.</title>
        <authorList>
            <person name="Marsh S.G."/>
            <person name="Albert E.D."/>
            <person name="Bodmer W.F."/>
            <person name="Bontrop R.E."/>
            <person name="Dupont B."/>
            <person name="Erlich H.A."/>
            <person name="Fernandez-Vina M."/>
            <person name="Geraghty D.E."/>
            <person name="Holdsworth R."/>
            <person name="Hurley C.K."/>
            <person name="Lau M."/>
            <person name="Lee K.W."/>
            <person name="Mach B."/>
            <person name="Maiers M."/>
            <person name="Mayr W.R."/>
            <person name="Mueller C.R."/>
            <person name="Parham P."/>
            <person name="Petersdorf E.W."/>
            <person name="Sasazuki T."/>
            <person name="Strominger J.L."/>
            <person name="Svejgaard A."/>
            <person name="Terasaki P.I."/>
            <person name="Tiercy J.M."/>
            <person name="Trowsdale J."/>
        </authorList>
    </citation>
    <scope>NOMENCLATURE</scope>
</reference>
<reference key="68">
    <citation type="journal article" date="2011" name="BMC Syst. Biol.">
        <title>Initial characterization of the human central proteome.</title>
        <authorList>
            <person name="Burkard T.R."/>
            <person name="Planyavsky M."/>
            <person name="Kaupe I."/>
            <person name="Breitwieser F.P."/>
            <person name="Buerckstuemmer T."/>
            <person name="Bennett K.L."/>
            <person name="Superti-Furga G."/>
            <person name="Colinge J."/>
        </authorList>
    </citation>
    <scope>IDENTIFICATION BY MASS SPECTROMETRY [LARGE SCALE ANALYSIS]</scope>
</reference>
<reference key="69">
    <citation type="journal article" date="2012" name="PLoS Pathog.">
        <title>Rapid antigen processing and presentation of a protective and immunodominant HLA-B*27-restricted hepatitis C virus-specific CD8+ T-cell epitope.</title>
        <authorList>
            <person name="Schmidt J."/>
            <person name="Iversen A.K."/>
            <person name="Tenzer S."/>
            <person name="Gostick E."/>
            <person name="Price D.A."/>
            <person name="Lohmann V."/>
            <person name="Distler U."/>
            <person name="Bowness P."/>
            <person name="Schild H."/>
            <person name="Blum H.E."/>
            <person name="Klenerman P."/>
            <person name="Neumann-Haefelin C."/>
            <person name="Thimme R."/>
        </authorList>
    </citation>
    <scope>FUNCTION</scope>
</reference>
<reference key="70">
    <citation type="journal article" date="2013" name="J. Immunol.">
        <title>HLA peptide length preferences control CD8+ T cell responses.</title>
        <authorList>
            <person name="Rist M.J."/>
            <person name="Theodossis A."/>
            <person name="Croft N.P."/>
            <person name="Neller M.A."/>
            <person name="Welland A."/>
            <person name="Chen Z."/>
            <person name="Sullivan L.C."/>
            <person name="Burrows J.M."/>
            <person name="Miles J.J."/>
            <person name="Brennan R.M."/>
            <person name="Gras S."/>
            <person name="Khanna R."/>
            <person name="Brooks A.G."/>
            <person name="McCluskey J."/>
            <person name="Purcell A.W."/>
            <person name="Rossjohn J."/>
            <person name="Burrows S.R."/>
        </authorList>
    </citation>
    <scope>FUNCTION (ALLELE B*18:01)</scope>
</reference>
<reference key="71">
    <citation type="journal article" date="2015" name="Elife">
        <title>TAPBPR alters MHC class I peptide presentation by functioning as a peptide exchange catalyst.</title>
        <authorList>
            <person name="Hermann C."/>
            <person name="van Hateren A."/>
            <person name="Trautwein N."/>
            <person name="Neerincx A."/>
            <person name="Duriez P.J."/>
            <person name="Stevanovic S."/>
            <person name="Trowsdale J."/>
            <person name="Deane J.E."/>
            <person name="Elliott T."/>
            <person name="Boyle L.H."/>
        </authorList>
    </citation>
    <scope>INTERACTION WITH TAPBPL</scope>
    <scope>SUBCELLULAR LOCATION</scope>
</reference>
<reference key="72">
    <citation type="journal article" date="2015" name="J. Immunol.">
        <title>The interaction of KIR3DL1*001 with HLA class I molecules is dependent upon molecular microarchitecture within the Bw4 epitope.</title>
        <authorList>
            <person name="Saunders P.M."/>
            <person name="Vivian J.P."/>
            <person name="Baschuk N."/>
            <person name="Beddoe T."/>
            <person name="Widjaja J."/>
            <person name="O'Connor G.M."/>
            <person name="Hitchen C."/>
            <person name="Pymm P."/>
            <person name="Andrews D.M."/>
            <person name="Gras S."/>
            <person name="McVicar D.W."/>
            <person name="Rossjohn J."/>
            <person name="Brooks A.G."/>
        </authorList>
    </citation>
    <scope>FUNCTION (ALLELES B*08:01 AND B*57:01)</scope>
    <scope>DOMAIN</scope>
    <scope>BW4 AND BW6 MOTIFS</scope>
    <scope>INTERACTION WITH KIR3DL1</scope>
    <scope>SUBCELLULAR LOCATION</scope>
    <scope>CHARACTERIZATION OF VARIANTS ILE-104 AND ARG-107</scope>
</reference>
<reference key="73">
    <citation type="journal article" date="2015" name="J. Immunol.">
        <title>Mechanistic Basis for Epitope Proofreading in the Peptide-Loading Complex.</title>
        <authorList>
            <person name="Fleischmann G."/>
            <person name="Fisette O."/>
            <person name="Thomas C."/>
            <person name="Wieneke R."/>
            <person name="Tumulka F."/>
            <person name="Schneeweiss C."/>
            <person name="Springer S."/>
            <person name="Schaefer L.V."/>
            <person name="Tampe R."/>
        </authorList>
    </citation>
    <scope>INTERACTION WITH THE PEPTIDE-LOADING COMPLEX</scope>
</reference>
<reference key="74">
    <citation type="journal article" date="2015" name="Proteomics">
        <title>N-terminome analysis of the human mitochondrial proteome.</title>
        <authorList>
            <person name="Vaca Jacome A.S."/>
            <person name="Rabilloud T."/>
            <person name="Schaeffer-Reiss C."/>
            <person name="Rompais M."/>
            <person name="Ayoub D."/>
            <person name="Lane L."/>
            <person name="Bairoch A."/>
            <person name="Van Dorsselaer A."/>
            <person name="Carapito C."/>
        </authorList>
    </citation>
    <scope>IDENTIFICATION BY MASS SPECTROMETRY [LARGE SCALE ANALYSIS]</scope>
</reference>
<reference key="75">
    <citation type="journal article" date="2017" name="Cell Rep.">
        <title>The Intergenic Recombinant HLA-B*46:01 Has a Distinctive Peptidome that Includes KIR2DL3 Ligands.</title>
        <authorList>
            <person name="Hilton H.G."/>
            <person name="McMurtrey C.P."/>
            <person name="Han A.S."/>
            <person name="Djaoud Z."/>
            <person name="Guethlein L.A."/>
            <person name="Blokhuis J.H."/>
            <person name="Pugh J.L."/>
            <person name="Goyos A."/>
            <person name="Horowitz A."/>
            <person name="Buchli R."/>
            <person name="Jackson K.W."/>
            <person name="Bardet W."/>
            <person name="Bushnell D.A."/>
            <person name="Robinson P.J."/>
            <person name="Mendoza J.L."/>
            <person name="Birnbaum M.E."/>
            <person name="Nielsen M."/>
            <person name="Garcia K.C."/>
            <person name="Hildebrand W.H."/>
            <person name="Parham P."/>
        </authorList>
    </citation>
    <scope>FUNCTION (ALLELE B*46:01)</scope>
    <scope>INTERACTION WITH KIR2DL3</scope>
</reference>
<reference key="76">
    <citation type="journal article" date="2020" name="Nat. Immunol.">
        <title>Broad and strong memory CD4+ and CD8+ T cells induced by SARS-CoV-2 in UK convalescent individuals following COVID-19.</title>
        <authorList>
            <consortium name="Oxford Immunology Network Covid-19 Response T cell Consortium"/>
            <consortium name="ISARIC4C Investigators"/>
            <person name="Peng Y."/>
            <person name="Mentzer A.J."/>
            <person name="Liu G."/>
            <person name="Yao X."/>
            <person name="Yin Z."/>
            <person name="Dong D."/>
            <person name="Dejnirattisai W."/>
            <person name="Rostron T."/>
            <person name="Supasa P."/>
            <person name="Liu C."/>
            <person name="Lopez-Camacho C."/>
            <person name="Slon-Campos J."/>
            <person name="Zhao Y."/>
            <person name="Stuart D.I."/>
            <person name="Paesen G.C."/>
            <person name="Grimes J.M."/>
            <person name="Antson A.A."/>
            <person name="Bayfield O.W."/>
            <person name="Hawkins D.E.D.P."/>
            <person name="Ker D.S."/>
            <person name="Wang B."/>
            <person name="Turtle L."/>
            <person name="Subramaniam K."/>
            <person name="Thomson P."/>
            <person name="Zhang P."/>
            <person name="Dold C."/>
            <person name="Ratcliff J."/>
            <person name="Simmonds P."/>
            <person name="de Silva T."/>
            <person name="Sopp P."/>
            <person name="Wellington D."/>
            <person name="Rajapaksa U."/>
            <person name="Chen Y.L."/>
            <person name="Salio M."/>
            <person name="Napolitani G."/>
            <person name="Paes W."/>
            <person name="Borrow P."/>
            <person name="Kessler B.M."/>
            <person name="Fry J.W."/>
            <person name="Schwabe N.F."/>
            <person name="Semple M.G."/>
            <person name="Baillie J.K."/>
            <person name="Moore S.C."/>
            <person name="Openshaw P.J.M."/>
            <person name="Ansari M.A."/>
            <person name="Dunachie S."/>
            <person name="Barnes E."/>
            <person name="Frater J."/>
            <person name="Kerr G."/>
            <person name="Goulder P."/>
            <person name="Lockett T."/>
            <person name="Levin R."/>
            <person name="Zhang Y."/>
            <person name="Jing R."/>
            <person name="Ho L.P."/>
            <person name="Cornall R.J."/>
            <person name="Conlon C.P."/>
            <person name="Klenerman P."/>
            <person name="Screaton G.R."/>
            <person name="Mongkolsapaya J."/>
            <person name="McMichael A."/>
            <person name="Knight J.C."/>
            <person name="Ogg G."/>
            <person name="Dong T."/>
        </authorList>
    </citation>
    <scope>FUNCTION (ALLELES B*07:02; B*27:05 AND B*40:01)</scope>
</reference>
<reference key="77">
    <citation type="journal article" date="2021" name="J. Clin. Invest.">
        <title>HLA-E-restricted HIV-1-specific CD8+ T cell responses in natural infection.</title>
        <authorList>
            <person name="Bansal A."/>
            <person name="Gehre M.N."/>
            <person name="Qin K."/>
            <person name="Sterrett S."/>
            <person name="Ali A."/>
            <person name="Dang Y."/>
            <person name="Abraham S."/>
            <person name="Costanzo M.C."/>
            <person name="Venegas L.A."/>
            <person name="Tang J."/>
            <person name="Manjunath N."/>
            <person name="Brockman M.A."/>
            <person name="Yang O.O."/>
            <person name="Kan-Mitchell J."/>
            <person name="Goepfert P.A."/>
        </authorList>
    </citation>
    <scope>FUNCTION (ALLELE B*57:01)</scope>
</reference>
<reference key="78">
    <citation type="journal article" date="2023" name="Nat. Immunol.">
        <title>HLA class I signal peptide polymorphism determines the level of CD94/NKG2-HLA-E-mediated regulation of effector cell responses.</title>
        <authorList>
            <person name="Lin Z."/>
            <person name="Bashirova A.A."/>
            <person name="Viard M."/>
            <person name="Garner L."/>
            <person name="Quastel M."/>
            <person name="Beiersdorfer M."/>
            <person name="Kasprzak W.K."/>
            <person name="Akdag M."/>
            <person name="Yuki Y."/>
            <person name="Ojeda P."/>
            <person name="Das S."/>
            <person name="Andresson T."/>
            <person name="Naranbhai V."/>
            <person name="Horowitz A."/>
            <person name="McMichael A.J."/>
            <person name="Hoelzemer A."/>
            <person name="Gillespie G.M."/>
            <person name="Garcia-Beltran W.F."/>
            <person name="Carrington M."/>
        </authorList>
    </citation>
    <scope>DOMAIN</scope>
    <scope>POLYMORPHISM</scope>
</reference>
<reference key="79">
    <citation type="journal article" date="2005" name="Eur. J. Immunol.">
        <title>Crystal structures and KIR3DL1 recognition of three immunodominant viral peptides complexed to HLA-B*2705.</title>
        <authorList>
            <person name="Stewart-Jones G.B."/>
            <person name="di Gleria K."/>
            <person name="Kollnberger S."/>
            <person name="McMichael A.J."/>
            <person name="Jones E.Y."/>
            <person name="Bowness P."/>
        </authorList>
    </citation>
    <scope>X-RAY CRYSTALLOGRAPHY (2.00 ANGSTROMS) OF 25-300 (ALLELE B*27:05) IN COMPLEX WITH B2M AND PEPTIDE</scope>
    <scope>FUNCTION (ALLELE B*27:05)</scope>
</reference>
<reference key="80">
    <citation type="journal article" date="2006" name="Acta Crystallogr. D">
        <title>Crystal structures of two peptide-HLA-B*1501 complexes; structural characterization of the HLA-B62 supertype.</title>
        <authorList>
            <person name="Roder G."/>
            <person name="Blicher T."/>
            <person name="Justesen S."/>
            <person name="Johannesen B."/>
            <person name="Kristensen O."/>
            <person name="Kastrup J."/>
            <person name="Buus S."/>
            <person name="Gajhede M."/>
        </authorList>
    </citation>
    <scope>X-RAY CRYSTALLOGRAPHY (1.79 ANGSTROMS) OF 25-300 (ALLELE B*15:01) IN COMPLEX WITH EBV NUCLEAR ANTIGEN AND UBE2 PEPTIDES</scope>
    <scope>DISULFIDE BONDS</scope>
</reference>
<reference key="81">
    <citation type="journal article" date="2011" name="Nature">
        <title>Killer cell immunoglobulin-like receptor 3DL1-mediated recognition of human leukocyte antigen B.</title>
        <authorList>
            <person name="Vivian J.P."/>
            <person name="Duncan R.C."/>
            <person name="Berry R."/>
            <person name="O'Connor G.M."/>
            <person name="Reid H.H."/>
            <person name="Beddoe T."/>
            <person name="Gras S."/>
            <person name="Saunders P.M."/>
            <person name="Olshina M.A."/>
            <person name="Widjaja J.M."/>
            <person name="Harpur C.M."/>
            <person name="Lin J."/>
            <person name="Maloveste S.M."/>
            <person name="Price D.A."/>
            <person name="Lafont B.A."/>
            <person name="McVicar D.W."/>
            <person name="Clements C.S."/>
            <person name="Brooks A.G."/>
            <person name="Rossjohn J."/>
        </authorList>
    </citation>
    <scope>X-RAY CRYSTALLOGRAPHY (1.80 ANGSTROMS) OF 25-299 (ALLELE B*57:01) IN COMPLEX WITH B2M AND SELF-PEPTIDE</scope>
    <scope>INTERACTION WITH KIR3DL1</scope>
    <scope>DOMAIN</scope>
    <scope>BW4 MOTIF</scope>
    <scope>FUNCTION (ALLELE B*57:01)</scope>
</reference>
<reference key="82">
    <citation type="journal article" date="2014" name="J. Immunol.">
        <title>Molecular basis of a dominant T cell response to an HIV reverse transcriptase 8-mer epitope presented by the protective allele HLA-B*51:01.</title>
        <authorList>
            <person name="Motozono C."/>
            <person name="Kuse N."/>
            <person name="Sun X."/>
            <person name="Rizkallah P.J."/>
            <person name="Fuller A."/>
            <person name="Oka S."/>
            <person name="Cole D.K."/>
            <person name="Sewell A.K."/>
            <person name="Takiguchi M."/>
        </authorList>
    </citation>
    <scope>X-RAY CRYSTALLOGRAPHY (2.99 ANGSTROMS) OF 25-300 (ALLELE B*51:01) IN COMPLEX WITH B2M AND PEPTIDE</scope>
    <scope>INTERACTION WITH TCR</scope>
    <scope>FUNCTION (ALLELE B*51:01)</scope>
</reference>
<reference key="83">
    <citation type="journal article" date="2015" name="Retrovirology">
        <title>A molecular switch in immunodominant HIV-1-specific CD8 T-cell epitopes shapes differential HLA-restricted escape.</title>
        <authorList>
            <person name="Kloverpris H.N."/>
            <person name="Cole D.K."/>
            <person name="Fuller A."/>
            <person name="Carlson J."/>
            <person name="Beck K."/>
            <person name="Schauenburg A.J."/>
            <person name="Rizkallah P.J."/>
            <person name="Buus S."/>
            <person name="Sewell A.K."/>
            <person name="Goulder P."/>
        </authorList>
    </citation>
    <scope>X-RAY CRYSTALLOGRAPHY (1.59 ANGSTROMS) OF 25-300 (ALLELE B*07:02) IN COMPLEX WITH B2M AND HIV-1 PEPTIDES</scope>
    <scope>DISULFIDE BOND</scope>
    <scope>FUNCTION (ALLELE B*07:02)</scope>
    <scope>DOMAIN</scope>
</reference>
<reference key="84">
    <citation type="journal article" date="2018" name="Nat. Commun.">
        <title>Divergent T-cell receptor recognition modes of a HLA-I restricted extended tumour-associated peptide.</title>
        <authorList>
            <person name="Chan K.F."/>
            <person name="Gully B.S."/>
            <person name="Gras S."/>
            <person name="Beringer D.X."/>
            <person name="Kjer-Nielsen L."/>
            <person name="Cebon J."/>
            <person name="McCluskey J."/>
            <person name="Chen W."/>
            <person name="Rossjohn J."/>
        </authorList>
    </citation>
    <scope>X-RAY CRYSTALLOGRAPHY (1.50 ANGSTROMS) (ALLELE B*07:02) IN COMPLEX WITH B2M AND PEPTIDE</scope>
    <scope>DISULFIDE BOND</scope>
    <scope>INTERACTION WITH TCR</scope>
    <scope>FUNCTION (ALLELE B*07:02)</scope>
</reference>
<reference key="85">
    <citation type="journal article" date="2002" name="Lancet">
        <title>Association between presence of HLA-B*5701, HLA-DR7, and HLA-DQ3 and hypersensitivity to HIV-1 reverse-transcriptase inhibitor abacavir.</title>
        <authorList>
            <person name="Mallal S."/>
            <person name="Nolan D."/>
            <person name="Witt C."/>
            <person name="Masel G."/>
            <person name="Martin A.M."/>
            <person name="Moore C."/>
            <person name="Sayer D."/>
            <person name="Castley A."/>
            <person name="Mamotte C."/>
            <person name="Maxwell D."/>
            <person name="James I."/>
            <person name="Christiansen F.T."/>
        </authorList>
    </citation>
    <scope>ASSOCIATION WITH ABACAVIR HYPERSENSITIVITY</scope>
</reference>
<reference key="86">
    <citation type="journal article" date="2004" name="Hum. Immunol.">
        <title>HLA-B27 in the Greek Cypriot population: distribution of subtypes in patients with ankylosing spondylitis and other HLA-B27-related diseases. The possible protective role of B*2707.</title>
        <authorList>
            <person name="Varnavidou-Nicolaidou A."/>
            <person name="Karpasitou K."/>
            <person name="Georgiou D."/>
            <person name="Stylianou G."/>
            <person name="Kokkofitou A."/>
            <person name="Michalis C."/>
            <person name="Constantina C."/>
            <person name="Gregoriadou C."/>
            <person name="Kyriakides G."/>
        </authorList>
    </citation>
    <scope>ASSOCIATION WITH SPDA1</scope>
    <scope>POSSIBLE PROTECTIVE ROLE OF ALLELE B*27:07</scope>
</reference>
<reference key="87">
    <citation type="journal article" date="2004" name="Nature">
        <title>Medical genetics: a marker for Stevens-Johnson syndrome.</title>
        <authorList>
            <person name="Chung W.-H."/>
            <person name="Hung S.-I."/>
            <person name="Hong H.-S."/>
            <person name="Hsih M.-S."/>
            <person name="Yang L.-C."/>
            <person name="Ho H.-C."/>
            <person name="Wu J.-Y."/>
            <person name="Chen Y.-T."/>
        </authorList>
    </citation>
    <scope>ASSOCIATION OF ALLELE B*15:02 WITH STEVENS-JOHNSON SYNDROME</scope>
</reference>
<reference key="88">
    <citation type="journal article" date="2012" name="Nat. Genet.">
        <title>Five amino acids in three HLA proteins explain most of the association between MHC and seropositive rheumatoid arthritis.</title>
        <authorList>
            <person name="Raychaudhuri S."/>
            <person name="Sandor C."/>
            <person name="Stahl E.A."/>
            <person name="Freudenberg J."/>
            <person name="Lee H.S."/>
            <person name="Jia X."/>
            <person name="Alfredsson L."/>
            <person name="Padyukov L."/>
            <person name="Klareskog L."/>
            <person name="Worthington J."/>
            <person name="Siminovitch K.A."/>
            <person name="Bae S.C."/>
            <person name="Plenge R.M."/>
            <person name="Gregersen P.K."/>
            <person name="de Bakker P.I."/>
        </authorList>
    </citation>
    <scope>INVOLVEMENT IN RA</scope>
    <scope>ASSOCIATION OF ALLELE GROUP B*8 WITH RHEUMATOID ARTHRITIS</scope>
    <scope>VARIANT ASP-33</scope>
</reference>
<reference key="89">
    <citation type="journal article" date="2013" name="Nat. Genet.">
        <title>Genome-wide association analysis identifies new susceptibility loci for Behcet's disease and epistasis between HLA-B*51 and ERAP1.</title>
        <authorList>
            <person name="Kirino Y."/>
            <person name="Bertsias G."/>
            <person name="Ishigatsubo Y."/>
            <person name="Mizuki N."/>
            <person name="Tugal-Tutkun I."/>
            <person name="Seyahi E."/>
            <person name="Ozyazgan Y."/>
            <person name="Sacli F.S."/>
            <person name="Erer B."/>
            <person name="Inoko H."/>
            <person name="Emrence Z."/>
            <person name="Cakar A."/>
            <person name="Abaci N."/>
            <person name="Ustek D."/>
            <person name="Satorius C."/>
            <person name="Ueda A."/>
            <person name="Takeno M."/>
            <person name="Kim Y."/>
            <person name="Wood G.M."/>
            <person name="Ombrello M.J."/>
            <person name="Meguro A."/>
            <person name="Guel A."/>
            <person name="Remmers E.F."/>
            <person name="Kastner D.L."/>
        </authorList>
    </citation>
    <scope>ASSOCIATION OF ALLELE GROUP B*51 WITH BEHCET DISEASE</scope>
</reference>
<reference key="90">
    <citation type="journal article" date="2017" name="PLoS Genet.">
        <title>Distinguishing functional polymorphism from random variation in the sequences of &gt;10,000 HLA-A, -B and -C alleles.</title>
        <authorList>
            <person name="Robinson J."/>
            <person name="Guethlein L.A."/>
            <person name="Cereb N."/>
            <person name="Yang S.Y."/>
            <person name="Norman P.J."/>
            <person name="Marsh S.G.E."/>
            <person name="Parham P."/>
        </authorList>
    </citation>
    <scope>POLYMORPHISM</scope>
</reference>
<feature type="signal peptide" evidence="58">
    <location>
        <begin position="1"/>
        <end position="24"/>
    </location>
</feature>
<feature type="chain" id="PRO_0000018833" description="HLA class I histocompatibility antigen, B alpha chain">
    <location>
        <begin position="25"/>
        <end position="362"/>
    </location>
</feature>
<feature type="topological domain" description="Extracellular" evidence="2">
    <location>
        <begin position="25"/>
        <end position="309"/>
    </location>
</feature>
<feature type="transmembrane region" description="Helical" evidence="2">
    <location>
        <begin position="310"/>
        <end position="333"/>
    </location>
</feature>
<feature type="topological domain" description="Cytoplasmic" evidence="2">
    <location>
        <begin position="334"/>
        <end position="362"/>
    </location>
</feature>
<feature type="domain" description="Ig-like C1-type">
    <location>
        <begin position="209"/>
        <end position="295"/>
    </location>
</feature>
<feature type="region of interest" description="VL9 epitope" evidence="57">
    <location>
        <begin position="3"/>
        <end position="11"/>
    </location>
</feature>
<feature type="region of interest" description="Alpha-1" evidence="2">
    <location>
        <begin position="25"/>
        <end position="114"/>
    </location>
</feature>
<feature type="region of interest" description="Alpha-2" evidence="2">
    <location>
        <begin position="115"/>
        <end position="206"/>
    </location>
</feature>
<feature type="region of interest" description="Alpha-3" evidence="2">
    <location>
        <begin position="207"/>
        <end position="298"/>
    </location>
</feature>
<feature type="region of interest" description="Connecting peptide" evidence="2">
    <location>
        <begin position="299"/>
        <end position="309"/>
    </location>
</feature>
<feature type="region of interest" description="Disordered" evidence="4">
    <location>
        <begin position="337"/>
        <end position="362"/>
    </location>
</feature>
<feature type="short sequence motif" description="Bw6 motif" evidence="41">
    <location>
        <begin position="101"/>
        <end position="107"/>
    </location>
</feature>
<feature type="compositionally biased region" description="Polar residues" evidence="4">
    <location>
        <begin position="346"/>
        <end position="362"/>
    </location>
</feature>
<feature type="binding site" evidence="42">
    <location>
        <position position="87"/>
    </location>
    <ligand>
        <name>a peptide antigen</name>
        <dbReference type="ChEBI" id="CHEBI:166823"/>
        <note>pathogen-derived peptide antigen</note>
    </ligand>
</feature>
<feature type="binding site" evidence="42">
    <location>
        <position position="108"/>
    </location>
    <ligand>
        <name>a peptide antigen</name>
        <dbReference type="ChEBI" id="CHEBI:166823"/>
        <note>pathogen-derived peptide antigen</note>
    </ligand>
</feature>
<feature type="binding site" evidence="42">
    <location>
        <position position="167"/>
    </location>
    <ligand>
        <name>a peptide antigen</name>
        <dbReference type="ChEBI" id="CHEBI:166823"/>
        <note>pathogen-derived peptide antigen</note>
    </ligand>
</feature>
<feature type="binding site" evidence="42">
    <location>
        <position position="170"/>
    </location>
    <ligand>
        <name>a peptide antigen</name>
        <dbReference type="ChEBI" id="CHEBI:166823"/>
        <note>pathogen-derived peptide antigen</note>
    </ligand>
</feature>
<feature type="binding site" evidence="42">
    <location>
        <position position="176"/>
    </location>
    <ligand>
        <name>a peptide antigen</name>
        <dbReference type="ChEBI" id="CHEBI:166823"/>
        <note>pathogen-derived peptide antigen</note>
    </ligand>
</feature>
<feature type="binding site" evidence="42">
    <location>
        <position position="183"/>
    </location>
    <ligand>
        <name>a peptide antigen</name>
        <dbReference type="ChEBI" id="CHEBI:166823"/>
        <note>pathogen-derived peptide antigen</note>
    </ligand>
</feature>
<feature type="binding site" evidence="42">
    <location>
        <position position="195"/>
    </location>
    <ligand>
        <name>a peptide antigen</name>
        <dbReference type="ChEBI" id="CHEBI:166823"/>
        <note>pathogen-derived peptide antigen</note>
    </ligand>
</feature>
<feature type="glycosylation site" description="N-linked (GlcNAc...) asparagine" evidence="28">
    <location>
        <position position="110"/>
    </location>
</feature>
<feature type="disulfide bond" evidence="3 22 42 50">
    <location>
        <begin position="125"/>
        <end position="188"/>
    </location>
</feature>
<feature type="disulfide bond" evidence="3 22 42 50">
    <location>
        <begin position="227"/>
        <end position="283"/>
    </location>
</feature>
<feature type="sequence variant" id="VAR_082483" description="In allele B*13:02, allele B*15:01, allele B*18:01, allele B*27:01, allele B*27:05, allele B*35:01, allele B*37:01, allele B*40:01, allele B*40:02, allele B*41:01, allele B*44:02, allele B*45:01, allele B*46:01, allele B*47:01, allele B*49:01, allele B*50:01, allele B*51:01, allele B*52:01, allele B*53:01, allele B*54:01, allele B*55:01, allele B*56:01, allele B*57:01, allele B*58:01, allele B*59:01, allele B*78:01 and allele B*82:01; dbSNP:rs9266206." evidence="5 9 11 12 13 14 20 21 24 30 34 35 39 45 46 47 51 52 53 56 59 61 63 66 68 70 71 77 78 79 81 82 83 84">
    <original>L</original>
    <variation>R</variation>
    <location>
        <position position="2"/>
    </location>
</feature>
<feature type="sequence variant" id="VAR_082484" description="In allele B*13:02, allele B*15:01, allele B*18:01, allele B*27:01, allele B*27:05, allele B*35:01, allele B*37:01, allele B*40:01, allele B*40:02, allele B*41:01, allele B*44:02, allele B*45:01, allele B*46:01, allele B*47:01, allele B*49:01, allele B*50:01, allele B*51:01, allele B*52:01, allele B*53:01, allele B*54:01, allele B*55:01, allele B*56:01, allele B*57:01, allele B*58:01, allele B*59:01, allele B*78:01 and allele B*82:01; dbSNP:rs1050458." evidence="5 9 11 12 13 14 20 21 24 30 34 35 39 45 46 47 51 52 53 56 59 61 63 66 68 70 71 77 78 79 81 82 83 84">
    <original>M</original>
    <variation>T</variation>
    <location>
        <position position="4"/>
    </location>
</feature>
<feature type="sequence variant" id="VAR_082485" description="In allele B*13:02, allele B*18:01, allele B*27:01, allele B*27:05, allele B*37:01, allele B*40:02, allele B*44:02, allele B*47:01, allele B*54:01, allele B*55:01, allele B*56:01, allele B*59:01 and allele B*82:01; dbSNP:rs1050462." evidence="9 11 14 35 46 52 53 56 63 66 77 78 81 82 83 84">
    <original>V</original>
    <variation>L</variation>
    <location>
        <position position="9"/>
    </location>
</feature>
<feature type="sequence variant" id="VAR_082486" description="In allele B*13:02, allele B*18:01, allele B*27:01, allele B*27:05, allele B*35:01, allele B*37:01, allele B*40:02, allele B*44:02, allele B*47:01, allele B*51:01, allele B*52:01, allele B*53:01, allele B*54:01, allele B*55:01, allele B*56:01, allele B*57:01, allele B*58:01, allele B*59:01, allele B*78:01, allele B*81:01 and allele B*82:01; dbSNP:rs1131156." evidence="5 9 11 13 14 20 21 24 30 34 35 45 46 47 51 52 53 56 63 66 70 72 73 77 78 79 81 82 83 84">
    <original>S</original>
    <variation>W</variation>
    <location>
        <position position="14"/>
    </location>
</feature>
<feature type="sequence variant" id="VAR_082487" description="In allele B*13:02, allele B*15:01, allele B*18:01, allele B*27:01, allele B*27:05, allele B*35:01, allele B*37:01, allele B*40:02, allele B*44:02, allele B*46:01, allele B*47:01, allele B*51:01, allele B*52:01, allele B*53:01, allele B*54:01, allele B*55:01, allele B*56:01, allele B*57:01, allele B*58:01, allele B*59:01, allele B*78:01, allele B*81:01 and allele B*82:01; dbSNP:rs1131159." evidence="5 9 11 13 14 20 21 24 30 34 35 45 46 47 51 52 53 56 61 63 66 68 70 71 72 73 77 78 79 81 82 83 84">
    <original>A</original>
    <variation>G</variation>
    <location>
        <position position="15"/>
    </location>
</feature>
<feature type="sequence variant" id="VAR_082488" description="In allele B*13:02, allele B*18:01, allele B*27:01, allele B*27:05, allele B*35:01, allele B*37:01, allele B*40:02, allele B*44:02, allele B*47:01, allele B*51:01, allele B*52:01, allele B*53:01, allele B*57:01, allele B*58:01, allele B*78:01 and allele B*81:01; dbSNP:rs1131165." evidence="5 9 11 13 14 20 21 30 34 35 45 46 47 51 52 53 56 63 72 73 77 81 82 83">
    <original>L</original>
    <variation>V</variation>
    <location>
        <position position="17"/>
    </location>
</feature>
<feature type="sequence variant" id="VAR_082489" description="In allele B*08:01; associated with increased risk for rheumatoid arthritis; dbSNP:rs2596492." evidence="9 33 46 85">
    <original>Y</original>
    <variation>D</variation>
    <location>
        <position position="33"/>
    </location>
</feature>
<feature type="sequence variant" id="VAR_082490" description="In allele B*18:01, allele B*27:01, allele B*27:05, allele B*37:01, allele B*40:01, allele B*40:02, allele B*41:01, allele B*45:01, allele B*49:01, allele B*50:01 and allele B*73:01; dbSNP:rs2596492." evidence="9 11 12 13 14 31 35 39 46 52 56 59 60 62 69 77 82 83">
    <original>Y</original>
    <variation>H</variation>
    <location>
        <position position="33"/>
    </location>
</feature>
<feature type="sequence variant" id="VAR_082491" description="In allele B*08:01, allele B*13:02, allele B*15:01, allele B*35:01, allele B*40:01, allele B*41:01, allele B*44:02, allele B*45:01, allele B*46:01, allele B*47:01, allele B*49:01, allele B*50:01, allele B*51:01, allele B*52:01, allele B*53:01, allele B*54:01, allele B*55:01, allele B*56:01, allele B*57:01, allele B*58:01, allele B*59:01, allele B*78:01 and allele B*82:01; dbSNP:rs1131170." evidence="5 9 12 13 20 21 24 30 34 35 39 45 46 47 51 53 59 61 63 66 68 70 71 77 78 79 81 82 84 85">
    <original>S</original>
    <variation>A</variation>
    <location>
        <position position="35"/>
    </location>
</feature>
<feature type="sequence variant" id="VAR_082492" description="In allele B*08:01, allele B*13:02, allele B*15:01, allele B*35:01, allele B*40:01, allele B*41:01, allele B*44:02, allele B*45:01, allele B*46:01, allele B*47:01, allele B*49:01, allele B*50:01, allele B*51:01, allele B*52:01, allele B*53:01, allele B*54:01, allele B*55:01, allele B*56:01, allele B*57:01, allele B*58:01, allele B*59:01, allele B*78:01 and allele B*82:01; dbSNP:rs1050486." evidence="5 9 12 13 20 21 24 30 34 35 39 45 46 47 51 53 59 61 63 66 68 70 71 77 78 79 81 82 84 85">
    <original>V</original>
    <variation>M</variation>
    <location>
        <position position="36"/>
    </location>
</feature>
<feature type="sequence variant" id="VAR_082493" description="In allele B*15:01, allele B*35:01, allele B*46:01, allele B*51:01, allele B*52:01, allele B*53:01, allele B*54:01, allele B*55:01, allele B*56:01, allele B*57:01, allele B*58:01, allele B*59:01 and allele B*78:01; dbSNP:rs713031." evidence="5 9 13 20 21 24 30 34 35 45 46 47 51 61 66 68 71 78 82 84">
    <original>S</original>
    <variation>A</variation>
    <location>
        <position position="48"/>
    </location>
</feature>
<feature type="sequence variant" id="VAR_082494" description="In allele B*13:02, allele B*27:01, allele B*27:05, allele B*40:01, allele B*40:02, allele B*41:01, allele B*44:02, allele B*45:01, allele B*47:01, allele B*49:01, allele B*50:01 and allele B*73:01; dbSNP:rs713031." evidence="9 11 12 13 14 31 39 46 52 53 56 59 60 62 63 69 77 81 83">
    <original>S</original>
    <variation>T</variation>
    <location>
        <position position="48"/>
    </location>
</feature>
<feature type="sequence variant" id="VAR_082495" description="In allele B*18:01; dbSNP:rs9266183." evidence="9 46">
    <original>D</original>
    <variation>G</variation>
    <location>
        <position position="54"/>
    </location>
</feature>
<feature type="sequence variant" id="VAR_082496" description="In allele B*27:01, allele B*27:05, allele B*40:01, allele B*40:02, allele B*41:01, allele B*44:02, allele B*45:01, allele B*47:01, allele B*49:01 and allele B*50:01; dbSNP:rs1050518." evidence="9 11 12 13 14 39 46 52 53 56 59 77 81 83">
    <original>Q</original>
    <variation>L</variation>
    <location>
        <position position="56"/>
    </location>
</feature>
<feature type="sequence variant" id="VAR_082497" description="In allele B*13:02, allele B*40:01, allele B*40:02, allele B*41:01, allele B*44:02, allele B*45:01, allele B*47:01, allele B*49:01 and allele B*50:01; dbSNP:rs1050529." evidence="9 11 12 13 14 39 46 53 59 63 77 81">
    <original>A</original>
    <variation>T</variation>
    <location>
        <position position="65"/>
    </location>
</feature>
<feature type="sequence variant" id="VAR_082498" description="In allele B*54:01; dbSNP:rs41562914." evidence="24">
    <original>E</original>
    <variation>G</variation>
    <location>
        <position position="69"/>
    </location>
</feature>
<feature type="sequence variant" id="VAR_082499" description="In allele B*40:01, allele B*40:02, allele B*41:01, allele B*44:02, allele B*45:01, allele B*47:01, allele B*49:01 and allele B*50:01; dbSNP:rs9266178." evidence="9 11 12 13 14 39 46 53 59 77 81">
    <original>E</original>
    <variation>K</variation>
    <location>
        <position position="69"/>
    </location>
</feature>
<feature type="sequence variant" id="VAR_082500" description="In allele B*13:02, allele B*15:01, allele B*46:01 and allele B*57:01; requires 2 nucleotide substitutions." evidence="34 35 46 53 61 63 68 71">
    <original>E</original>
    <variation>M</variation>
    <location>
        <position position="69"/>
    </location>
</feature>
<feature type="sequence variant" id="VAR_082501" description="In allele B*18:01, allele B*35:01, allele B*37:01, allele B*51:01, allele B*52:01, allele B*53:01, allele B*58:01 and allele B*78:01; requires 2 nucleotide substitutions." evidence="5 9 13 20 21 30 35 45 46 47 51 77 82">
    <original>E</original>
    <variation>T</variation>
    <location>
        <position position="69"/>
    </location>
</feature>
<feature type="sequence variant" id="VAR_082502" description="In allele B*13:02, allele B*15:01, allele B*46:01 and allele B*57:01; dbSNP:rs1050538." evidence="34 35 46 53 61 63 68 71">
    <original>E</original>
    <variation>A</variation>
    <location>
        <position position="70"/>
    </location>
</feature>
<feature type="sequence variant" id="VAR_082503" description="In allele B*54:01; dbSNP:rs145974360." evidence="24">
    <original>I</original>
    <variation>V</variation>
    <location>
        <position position="76"/>
    </location>
</feature>
<feature type="sequence variant" id="VAR_082504" description="In allele B*57:01 and allele B*58:01; dbSNP:rs141484466." evidence="5 34 35 51">
    <original>R</original>
    <variation>G</variation>
    <location>
        <position position="86"/>
    </location>
</feature>
<feature type="sequence variant" id="VAR_082505" description="In allele B*13:02, allele B*15:01, allele B*27:01, allele B*27:05, allele B*37:01, allele B*39:02, allele B*40:01, allele B*40:02, allele B*41:01, allele B*44:02, allele B*45:01, allele B*46:01, allele B*47:01, allele B*48:01, allele B*49:01, allele B*50:01, allele B*52:01, allele B*57:01 and allele B*58:01; requires 2 nucleotide substitutions." evidence="5 9 10 11 12 13 14 30 34 35 39 46 51 52 53 56 59 61 63 64 67 68 71 77 81 82 83">
    <original>N</original>
    <variation>E</variation>
    <location>
        <position position="87"/>
    </location>
</feature>
<feature type="sequence variant" id="VAR_082506" description="In allele B*57:01 and allele B*58:01; dbSNP:rs1131201." evidence="5 34 35 51">
    <original>Q</original>
    <variation>R</variation>
    <location>
        <position position="89"/>
    </location>
</feature>
<feature type="sequence variant" id="VAR_082507" description="In allele B*46:01." evidence="46">
    <original>I</original>
    <variation>K</variation>
    <location>
        <position position="90"/>
    </location>
</feature>
<feature type="sequence variant" id="VAR_082508" description="In allele B*57:01 and allele B*58:01; dbSNP:rs1131202." evidence="5 34 35 51">
    <original>I</original>
    <variation>N</variation>
    <location>
        <position position="90"/>
    </location>
</feature>
<feature type="sequence variant" id="VAR_082509" description="In allele B*14:01, allele B*27:01, allele B*27:05, allele B*38:01 and allele B*73:01; dbSNP:rs1071816." evidence="31 46 52 56 60 62 64 69 80 83">
    <original>Y</original>
    <variation>C</variation>
    <location>
        <position position="91"/>
    </location>
</feature>
<feature type="sequence variant" id="VAR_082510" description="In allele B*08:01, allele B*35:01, allele B*51:01, allele B*53:01, allele B*59:01 and allele B*78:01; dbSNP:rs1071816." evidence="9 13 20 21 35 45 46 47 66 78 82 85">
    <original>Y</original>
    <variation>F</variation>
    <location>
        <position position="91"/>
    </location>
</feature>
<feature type="sequence variant" id="VAR_082511" description="In allele B*57:01 and allele B*58:01; requires 2 nucleotide substitutions." evidence="5 34 35 51">
    <original>Y</original>
    <variation>M</variation>
    <location>
        <position position="91"/>
    </location>
</feature>
<feature type="sequence variant" id="VAR_082512" description="In allele B*13:02, allele B*15:01, allele B*18:01, allele B*37:01, allele B*39:02, allele B*40:01, allele B*40:02, allele B*41:01, allele B*44:02, allele B*45:01, allele B*47:01, allele B*48:01, allele B*49:01, allele B*50:01 and allele B*52:01; dbSNP:rs1071816." evidence="9 10 11 12 13 14 30 35 39 46 53 59 61 63 64 67 68 71 77 81 82">
    <original>Y</original>
    <variation>S</variation>
    <location>
        <position position="91"/>
    </location>
</feature>
<feature type="sequence variant" id="VAR_082513" description="In allele B*46:01; requires 2 nucleotide substitutions." evidence="46">
    <original>A</original>
    <variation>R</variation>
    <location>
        <position position="93"/>
    </location>
</feature>
<feature type="sequence variant" id="VAR_082514" description="In allele B*08:01, allele B*13:02, allele B*14:01, allele B*15:01, allele B*18:01, allele B*35:01, allele B*37:01, allele B*38:01, allele B*39:02, allele B*40:01, allele B*40:02, allele B*41:01, allele B*44:02, allele B*45:01, allele B*47:01, allele B*48:01, allele B*49:01, allele B*50:01, allele B*51:01, allele B*52:01, allele B*53:01, allele B*59:01 and allele B*78:01; dbSNP:rs1131204." evidence="9 10 11 12 13 14 20 21 30 35 39 45 46 47 53 59 61 63 64 66 67 68 71 77 78 80 81 82 85">
    <original>A</original>
    <variation>T</variation>
    <location>
        <position position="93"/>
    </location>
</feature>
<feature type="sequence variant" id="VAR_082515" description="In allele B*27:01, allele B*27:05 and allele B*73:01; dbSNP:rs1071817." evidence="31 52 56 60 62 69 83">
    <original>Q</original>
    <variation>K</variation>
    <location>
        <position position="94"/>
    </location>
</feature>
<feature type="sequence variant" id="VAR_082516" description="In allele B*08:01, allele B*13:02, allele B*14:01, allele B*15:01, allele B*18:01, allele B*35:01, allele B*37:01, allele B*38:01, allele B*39:02, allele B*40:01, allele B*40:02, allele B*41:01, allele B*44:02, allele B*45:01, allele B*47:01, allele B*48:01, allele B*49:01, allele B*50:01, allele B*51:01, allele B*52:01, allele B*53:01, allele B*59:01 and allele B*78:01; requires 2 nucleotide substitutions." evidence="9 10 11 12 13 14 20 21 30 35 39 45 46 47 53 59 61 63 64 66 67 68 71 77 78 80 81 82 85">
    <original>Q</original>
    <variation>N</variation>
    <location>
        <position position="94"/>
    </location>
</feature>
<feature type="sequence variant" id="VAR_082517" description="In allele B*57:01 and allele B*58:01; requires 2 nucleotide substitutions." evidence="5 34 35 51">
    <original>Q</original>
    <variation>S</variation>
    <location>
        <position position="94"/>
    </location>
</feature>
<feature type="sequence variant" id="VAR_082518" description="In allele B*08:01, allele B*13:02, allele B*14:01, allele B*15:01, allele B*18:01, allele B*35:01, allele B*37:01, allele B*38:01, allele B*39:02, allele B*40:01, allele B*40:02, allele B*41:01, allele B*44:02, allele B*45:01, allele B*47:01, allele B*48:01, allele B*49:01, allele B*50:01, allele B*51:01, allele B*52:01, allele B*53:01, allele B*59:01 and allele B*78:01; dbSNP:rs1131213." evidence="9 10 11 12 13 14 20 21 30 35 39 45 46 47 53 59 61 63 64 66 67 68 71 77 78 80 81 82 85">
    <original>A</original>
    <variation>T</variation>
    <location>
        <position position="95"/>
    </location>
</feature>
<feature type="sequence variant" id="VAR_082519" description="In allele B*13:02, allele B*15:01, allele B*18:01, allele B*27:01, allele B*35:01, allele B*37:01, allele B*38:01, allele B*40:01, allele B*40:02, allele B*41:01, allele B*44:02, allele B*45:01, allele B*47:01, allele B*48:01, allele B*49:01, allele B*50:01, allele B*51:01, allele B*52:01, allele B*53:01, allele B*57:01, allele B*58:01 and allele B*59:01; dbSNP:rs1131215." evidence="5 9 10 11 12 13 14 21 30 34 35 39 45 46 47 51 53 59 61 63 64 66 68 71 77 78 80 81 82 83">
    <original>D</original>
    <variation>Y</variation>
    <location>
        <position position="98"/>
    </location>
</feature>
<feature type="sequence variant" id="VAR_082520" description="In allele B*46:01 and allele B*73:01; dbSNP:rs41553715." evidence="31 46 60 62 69">
    <original>E</original>
    <variation>V</variation>
    <location>
        <position position="100"/>
    </location>
</feature>
<feature type="sequence variant" id="VAR_082521" description="In allele B*27:05, allele B*37:01 and allele B*47:01; requires 2 nucleotide substitutions." evidence="9 35 52 53 56 77 82">
    <original>S</original>
    <variation>D</variation>
    <location>
        <position position="101"/>
    </location>
</feature>
<feature type="sequence variant" id="VAR_082522" description="In allele B*73:01; dbSNP:rs1131217." evidence="31 60 62 69">
    <original>S</original>
    <variation>G</variation>
    <location>
        <position position="101"/>
    </location>
</feature>
<feature type="sequence variant" id="VAR_082523" description="In allele B*13:02, allele B*27:01, allele B*38:01, allele B*44:02, allele B*49:01, allele B*51:01, allele B*52:01, allele B*53:01, allele B*57:01, allele B*58:01 and allele B*59:01; dbSNP:rs1050388." evidence="5 12 21 30 34 35 45 46 51 53 63 64 66 78 80 83">
    <original>S</original>
    <variation>N</variation>
    <location>
        <position position="101"/>
    </location>
</feature>
<feature type="sequence variant" id="VAR_082524" description="In allele B*38:01, allele B*49:01, allele B*51:01, allele B*52:01, allele B*53:01, allele B*57:01 and allele B*59:01; part of Bw4 motif involved in the recognition of KIR3DL1; dbSNP:rs1131223." evidence="12 21 30 32 34 35 41 45 64 80">
    <original>N</original>
    <variation>I</variation>
    <location>
        <position position="104"/>
    </location>
</feature>
<feature type="sequence variant" id="VAR_082525" description="In allele B*13:02, allele B*27:01, allele B*27:05, allele B*37:01, allele B*44:02 and allele B*47:01; dbSNP:rs1131223." evidence="9 35 46 52 53 56 63 77 81 82 83">
    <original>N</original>
    <variation>T</variation>
    <location>
        <position position="104"/>
    </location>
</feature>
<feature type="sequence variant" id="VAR_082526" description="In allele B*13:02, allele B*27:01, allele B*38:01, allele B*44:02, allele B*49:01, allele B*51:01, allele B*52:01, allele B*53:01, allele B*57:01, allele B*58:01 and allele B*59:01; requires 2 nucleotide substitutions." evidence="5 12 21 30 34 35 45 46 51 53 63 64 66 78 80 81 83">
    <original>L</original>
    <variation>A</variation>
    <location>
        <position position="105"/>
    </location>
</feature>
<feature type="sequence variant" id="VAR_082527" description="In allele B*13:02, allele B*27:01, allele B*27:05, allele B*37:01, allele B*38:01, allele B*44:02, allele B*49:01, allele B*51:01, allele B*52:01, allele B*53:01, allele B*57:01, allele B*58:01 and allele B*59:01; dbSNP:rs3180379." evidence="5 12 21 30 34 35 45 46 51 52 53 56 63 64 66 77 78 80 81 82 83">
    <original>R</original>
    <variation>L</variation>
    <location>
        <position position="106"/>
    </location>
</feature>
<feature type="sequence variant" id="VAR_082528" description="In allele B*13:02, allele B*27:01, allele B*27:05, allele B*37:01, allele B*38:01, allele B*44:02, allele B*47:01, allele B*49:01, allele B*51:01, allele B*52:01, allele B*53:01, allele B*57:01, allele B*58:01 and allele B*59:01; part of Bw4 motif involved in the recognition of KIR3DL1; dbSNP:rs3180380." evidence="5 9 12 21 30 32 34 35 41 45 46 51 52 53 56 63 64 66 77 78 80 81 82 83">
    <original>G</original>
    <variation>R</variation>
    <location>
        <position position="107"/>
    </location>
</feature>
<feature type="sequence variant" id="VAR_082529" description="In allele B*73:01; dbSNP:rs41559314." evidence="31 60 62 69">
    <original>A</original>
    <variation>D</variation>
    <location>
        <position position="114"/>
    </location>
</feature>
<feature type="sequence variant" id="VAR_082530" description="In allele B*35:01, allele B*44:02, allele B*53:01, allele B*57:01 and allele B*58:01; dbSNP:rs12721827." evidence="5 21 34 35 46 47 51 81">
    <original>T</original>
    <variation>I</variation>
    <location>
        <position position="118"/>
    </location>
</feature>
<feature type="sequence variant" id="VAR_082531" description="In allele B*35:01, allele B*37:01, allele B*44:02, allele B*53:01, allele B*57:01 and allele B*58:01; dbSNP:rs12721829." evidence="5 21 35 46 47 51 77 81 82">
    <original>L</original>
    <variation>I</variation>
    <location>
        <position position="119"/>
    </location>
</feature>
<feature type="sequence variant" id="VAR_082532" description="In allele B*13:02, allele B*41:01, allele B*45:01, allele B*49:01, allele B*50:01, allele B*51:01, allele B*52:01, allele B*54:01, allele B*55:01, allele B*56:01, allele B*59:01, allele B*73:01 and allele B*78:01." evidence="9 12 13 20 24 30 31 35 45 46 53 60 62 63 66 69 77 78 82 84">
    <original>L</original>
    <variation>W</variation>
    <location>
        <position position="119"/>
    </location>
</feature>
<feature type="sequence variant" id="VAR_082533" description="In allele B*27:01 and allele B*27:05; dbSNP:rs1071652." evidence="52 56 83">
    <original>S</original>
    <variation>N</variation>
    <location>
        <position position="121"/>
    </location>
</feature>
<feature type="sequence variant" id="VAR_082534" description="In allele B*15:01, allele B*18:01, allele B*35:01, allele B*37:01, allele B*38:01, allele B*39:02, allele B*40:01, allele B*41:01, allele B*44:02, allele B*45:01, allele B*46:01, allele B*47:01, allele B*49:01, allele B*50:01, allele B*53:01, allele B*58:01, allele B*67:01 and allele B*82:01; dbSNP:rs1140412." evidence="5 9 12 13 21 35 39 46 47 51 53 59 61 64 67 68 70 71 77 79 80 81 82">
    <original>S</original>
    <variation>R</variation>
    <location>
        <position position="121"/>
    </location>
</feature>
<feature type="sequence variant" id="VAR_082535" description="In allele B*13:02, allele B*51:01, allele B*52:01, allele B*54:01, allele B*55:01, allele B*56:01, allele B*59:01, allele B*73:01 and allele B*78:01; dbSNP:rs1071652." evidence="13 20 24 30 31 35 45 46 53 60 62 63 66 69 78 82 84">
    <original>S</original>
    <variation>T</variation>
    <location>
        <position position="121"/>
    </location>
</feature>
<feature type="sequence variant" id="VAR_082536" description="In allele B*57:01; requires 2 nucleotide substitutions." evidence="34 35">
    <original>S</original>
    <variation>V</variation>
    <location>
        <position position="121"/>
    </location>
</feature>
<feature type="sequence variant" id="VAR_082537" description="In allele B*14:01." evidence="46">
    <original>S</original>
    <variation>W</variation>
    <location>
        <position position="121"/>
    </location>
</feature>
<feature type="sequence variant" id="VAR_082538" description="In allele B*47:01 and allele B*82:01; dbSNP:rs151341218." evidence="9 53 70 79">
    <original>Y</original>
    <variation>F</variation>
    <location>
        <position position="123"/>
    </location>
</feature>
<feature type="sequence variant" id="VAR_082539" description="In allele B*37:01; dbSNP:rs151341218." evidence="35 77 82">
    <original>Y</original>
    <variation>S</variation>
    <location>
        <position position="123"/>
    </location>
</feature>
<feature type="sequence variant" id="VAR_082540" description="In allele B*13:02, allele B*35:01, allele B*45:01, allele B*49:01, allele B*50:01, allele B*53:01, allele B*54:01, allele B*55:01, allele B*56:01, allele B*58:01, allele B*59:01 and allele B*82:01; dbSNP:rs1131112." evidence="5 9 12 13 21 24 46 47 51 53 63 66 70 77 78 79 84">
    <original>V</original>
    <variation>L</variation>
    <location>
        <position position="127"/>
    </location>
</feature>
<feature type="sequence variant" id="VAR_082541" description="In allele B*73:01; dbSNP:rs1131112." evidence="31 60 62 69">
    <original>V</original>
    <variation>M</variation>
    <location>
        <position position="127"/>
    </location>
</feature>
<feature type="sequence variant" id="VAR_082542" description="In allele B*14:01, allele B*27:01, allele B*27:05, allele B*37:01, allele B*44:02, allele B*45:01, allele B*47:01, allele B*49:01, allele B*50:01 and allele B*73:01; dbSNP:rs1050379." evidence="9 12 13 31 35 46 52 53 56 60 62 69 77 81 82 83">
    <original>H</original>
    <variation>Y</variation>
    <location>
        <position position="137"/>
    </location>
</feature>
<feature type="sequence variant" id="VAR_082543" description="In allele B*27:01, allele B*27:05 and allele B*47:01; dbSNP:rs709055." evidence="9 52 53 56 83">
    <original>D</original>
    <variation>H</variation>
    <location>
        <position position="138"/>
    </location>
</feature>
<feature type="sequence variant" id="VAR_082544" description="In allele B*08:01, allele B*13:02, allele B*14:01, allele B*37:01, allele B*38:01, allele B*39:02, allele B*40:01, allele B*40:02, allele B*41:01, allele B*42:01, allele B*45:01, allele B*48:01, allele B*49:01, allele B*50:01, allele B*51:01, allele B*52:01, allele B*54:01, allele B*55:01, allele B*56:01, allele B*59:01, allele B*67:01, allele B*73:01, allele B*78:01, allele B*81:01 and allele B*82:01; dbSNP:rs709055." evidence="9 10 11 12 13 14 20 24 30 31 35 39 45 46 53 59 60 62 63 64 66 67 69 70 72 73 77 78 79 80 82 84 85 88">
    <original>D</original>
    <variation>N</variation>
    <location>
        <position position="138"/>
    </location>
</feature>
<feature type="sequence variant" id="VAR_082545" description="In allele B*27:01, allele B*27:05, allele B*44:02 and allele B*47:01; dbSNP:rs9266150." evidence="9 46 52 53 56 81 83">
    <original>Y</original>
    <variation>D</variation>
    <location>
        <position position="140"/>
    </location>
</feature>
<feature type="sequence variant" id="VAR_082546" description="In allele B*14:01, allele B*37:01, allele B*38:01, allele B*39:02, allele B*67:01 and allele B*73:01; dbSNP:rs4997052." evidence="31 35 46 59 60 62 64 67 69 77 80 82">
    <original>Y</original>
    <variation>F</variation>
    <location>
        <position position="140"/>
    </location>
</feature>
<feature type="sequence variant" id="VAR_082547" description="In allele B*13:02, allele B*45:01, allele B*49:01, allele B*50:01, allele B*54:01, allele B*55:01, allele B*56:01, allele B*59:01 and allele B*82:01; requires 2 nucleotide substitutions; dbSNP:rs796516815." evidence="9 12 13 24 46 53 63 66 70 77 78 79 84">
    <original>Y</original>
    <variation>L</variation>
    <location>
        <position position="140"/>
    </location>
</feature>
<feature type="sequence variant" id="VAR_082548" description="In allele B*15:01, allele B*18:01, allele B*35:01, allele B*46:01, allele B*53:01, allele B*57:01 and allele B*58:01; dbSNP:rs4997052." evidence="5 9 21 34 35 46 47 51 61 68 71">
    <original>Y</original>
    <variation>S</variation>
    <location>
        <position position="140"/>
    </location>
</feature>
<feature type="sequence variant" id="VAR_082549" description="In allele B*13:02, allele B*14:01, allele B*15:01, allele B*18:01, allele B*27:01, allele B*27:05, allele B*35:01, allele B*37:01, allele B*38:01, allele B*39:02, allele B*44:02, allele B*45:01, allele B*46:01, allele B*47:01, allele B*49:01, allele B*50:01, allele B*51:01, allele B*52:01, allele B*53:01, allele B*54:01, allele B*55:01, allele B*56:01, allele B*57:01, allele B*58:01, allele B*59:01, allele B*67:01, allele B*78:01 and allele B*82:01; dbSNP:rs1050654." evidence="5 9 12 13 20 21 24 30 34 35 45 46 47 51 52 53 56 59 61 63 64 66 67 68 70 71 77 78 79 80 81 82 83 84 88">
    <original>R</original>
    <variation>S</variation>
    <location>
        <position position="155"/>
    </location>
</feature>
<feature type="sequence variant" id="VAR_082550" description="In allele B*40:01, allele B*48:01 and allele B*81:01; dbSNP:rs41541519." evidence="9 10 39 59 72 73">
    <original>T</original>
    <variation>S</variation>
    <location>
        <position position="167"/>
    </location>
</feature>
<feature type="sequence variant" id="VAR_082551" description="In allele B*13:02; dbSNP:rs12697943." evidence="46 53 63">
    <original>R</original>
    <variation>L</variation>
    <location>
        <position position="169"/>
    </location>
</feature>
<feature type="sequence variant" id="VAR_082552" description="In allele B*40:01, allele B*48:01 and allele B*81:01; dbSNP:rs41551018." evidence="9 10 39 59 72 73">
    <original>W</original>
    <variation>L</variation>
    <location>
        <position position="171"/>
    </location>
</feature>
<feature type="sequence variant" id="VAR_082553" description="In allele B*08:01, allele B*13:02, allele B*18:01, allele B*27:01, allele B*27:05, allele B*35:01, allele B*37:01, allele B*38:01, allele B*39:02, allele B*40:01, allele B*40:02, allele B*41:01, allele B*42:01, allele B*44:02, allele B*45:01, allele B*47:01, allele B*48:01, allele B*53:01, allele B*54:01, allele B*56:01, allele B*57:01, allele B*58:01, allele B*59:01, allele B*67:01, allele B*73:01, allele B*81:01 and allele B*82:01; dbSNP:rs151341293." evidence="5 9 10 11 13 14 21 24 31 34 35 39 46 47 51 52 53 56 59 60 62 63 64 66 67 69 70 72 73 77 78 79 80 81 82 83 85">
    <original>E</original>
    <variation>V</variation>
    <location>
        <position position="176"/>
    </location>
</feature>
<feature type="sequence variant" id="VAR_082554" description="In allele B*08:01, allele B*37:01, allele B*41:01, allele B*42:01, allele B*44:02, allele B*45:01 and allele B*82:01; requires 2 nucleotide substitutions; dbSNP:rs1203316963." evidence="9 13 35 46 70 77 79 81 82 85">
    <original>R</original>
    <variation>D</variation>
    <location>
        <position position="180"/>
    </location>
</feature>
<feature type="sequence variant" id="VAR_082555" description="In allele B*13:02, allele B*14:01, allele B*18:01, allele B*27:01, allele B*27:05, allele B*35:01, allele B*38:01, allele B*39:02, allele B*40:01, allele B*40:02, allele B*47:01, allele B*48:01, allele B*49:01, allele B*50:01, allele B*51:01, allele B*52:01, allele B*53:01, allele B*54:01, allele B*55:01, allele B*56:01, allele B*57:01, allele B*58:01, allele B*59:01, allele B*67:01, allele B*73:01, allele B*78:01 and allele B*81:01; dbSNP:rs697742." evidence="5 9 10 11 12 13 14 20 21 24 30 31 34 35 39 45 46 47 51 52 53 56 59 60 62 63 64 66 67 69 72 73 77 78 80 82 83 84">
    <original>R</original>
    <variation>L</variation>
    <location>
        <position position="180"/>
    </location>
</feature>
<feature type="sequence variant" id="VAR_082556" description="In allele B*15:01 and allele B*46:01; dbSNP:rs9266144." evidence="46 61 68 71">
    <original>R</original>
    <variation>W</variation>
    <location>
        <position position="180"/>
    </location>
</feature>
<feature type="sequence variant" id="VAR_082557" description="In allele B*38:01, allele B*39:02 and allele B*67:01; dbSNP:rs1050683." evidence="59 64 67 80">
    <original>A</original>
    <variation>T</variation>
    <location>
        <position position="182"/>
    </location>
</feature>
<feature type="sequence variant" id="VAR_082558" description="In allele B*82:01; dbSNP:rs41543920." evidence="70 79">
    <original>G</original>
    <variation>D</variation>
    <location>
        <position position="186"/>
    </location>
</feature>
<feature type="sequence variant" id="VAR_082559" description="In allele B*15:01, allele B*35:01, allele B*44:02, allele B*45:01, allele B*46:01, allele B*49:01, allele B*50:01, allele B*51:01, allele B*52:01, allele B*53:01, allele B*56:01, allele B*57:01, allele B*58:01, allele B*78:01 and allele B*82:01; requires 2 nucleotide substitutions; dbSNP:rs796093434." evidence="5 9 12 13 20 21 30 34 35 45 46 47 51 61 68 70 71 77 79 81 82">
    <original>E</original>
    <variation>L</variation>
    <location>
        <position position="187"/>
    </location>
</feature>
<feature type="sequence variant" id="VAR_082560" description="In allele B*08:01, allele B*14:01, allele B*18:01, allele B*37:01, allele B*38:01, allele B*39:02, allele B*41:01, allele B*42:01, allele B*54:01, allele B*55:01, allele B*59:01 and allele B*67:01; requires 2 nucleotide substitutions; dbSNP:rs796093434." evidence="9 24 46 59 64 66 67 78 80 84 85">
    <original>E</original>
    <variation>T</variation>
    <location>
        <position position="187"/>
    </location>
</feature>
<feature type="sequence variant" id="VAR_082561" description="In allele B*44:02, allele B*45:01 and allele B*82:01; dbSNP:rs1050692." evidence="9 13 46 70 79 81">
    <original>W</original>
    <variation>S</variation>
    <location>
        <position position="191"/>
    </location>
</feature>
<feature type="sequence variant" id="VAR_082562" description="In allele B*14:01, allele B*18:01, allele B*51:01, allele B*52:01, allele B*73:01 and allele B*78:01; dbSNP:rs1050696." evidence="9 13 20 30 31 35 45 46 60 62 69 82">
    <original>Y</original>
    <variation>H</variation>
    <location>
        <position position="195"/>
    </location>
</feature>
<feature type="sequence variant" id="VAR_082563" description="In allele B*13:02, allele B*14:01, allele B*15:01, allele B*18:01, allele B*27:01, allele B*27:05, allele B*35:01, allele B*37:01, allele B*38:01, allele B*39:02, allele B*40:02, allele B*44:02, allele B*45:01, allele B*46:01, allele B*47:01, allele B*49:01, allele B*50:01, allele B*51:01, allele B*52:01, allele B*53:01, allele B*54:01, allele B*55:01, allele B*56:01, allele B*57:01, allele B*58:01, allele B*59:01, allele B*67:01, allele B*73:01, allele B*78:01 and allele B*82:01; dbSNP:rs1131275." evidence="5 9 11 12 13 14 20 21 24 30 31 34 35 45 46 47 51 52 53 56 59 60 61 62 63 64 66 67 68 69 70 71 77 78 79 80 81 82 83 84">
    <original>D</original>
    <variation>E</variation>
    <location>
        <position position="201"/>
    </location>
</feature>
<feature type="sequence variant" id="VAR_082564" description="In allele B*08:01, allele B*13:02, allele B*14:01, allele B*15:01, allele B*18:01, allele B*27:01, allele B*27:05, allele B*35:01, allele B*37:01, allele B*38:01 allele B*39:02, allele B*40:02, allele B*41:01, allele B*42:01, allele B*44:02, allele B*45:01, allele B*46:01, allele B*47:01, allele B*49:01, allele B*50:01, allele B*51:01, allele B*52:01, allele B*53:01, allele B*54:01, allele B*55:01, allele B*56:01, allele B*57:01, allele B*58:01, allele B*59:01, allele B*67:01, allele B*73:01, allele B*78:01 and allele B*82:01; dbSNP:rs1131279." evidence="5 9 11 12 13 14 20 21 24 30 31 34 35 45 46 47 51 52 53 56 59 60 61 62 63 64 66 67 68 69 70 71 77 78 79 80 81 82 83 84 85">
    <original>K</original>
    <variation>T</variation>
    <location>
        <position position="202"/>
    </location>
</feature>
<feature type="sequence variant" id="VAR_082565" description="In allele B*13:02, allele B*14:01, allele B*15:01, allele B*18:01, allele B*27:01, allele B*27:05, allele B*35:01, allele B*37:01, allele B*38:01, allele B*39:02, allele B*40:02, allele B*44:02, allele B*45:01, allele B*46:01, allele B*47:01, allele B*49:01, allele B*50:01, allele B*51:01, allele B*52:01, allele B*53:01, allele B*54:01, allele B*55:01, allele B*56:01, allele B*57:01, allele B*58:01, allele B*59:01, allele B*67:01, allele B*73:01, allele B*78:01 and allele B*82:01; dbSNP:rs1131285." evidence="5 9 11 12 13 14 20 21 24 30 31 34 35 45 46 47 51 52 53 56 59 60 61 62 63 64 66 67 68 69 70 71 77 78 79 80 81 82 83 84">
    <original>E</original>
    <variation>Q</variation>
    <location>
        <position position="204"/>
    </location>
</feature>
<feature type="sequence variant" id="VAR_082566" description="In allele B*35:01, allele B*51:01, allele B*52:01, allele B*53:01, allele B*58:01 and allele B*78:01; dbSNP:rs1050341." evidence="5 13 20 21 30 35 45 47 51 82">
    <original>I</original>
    <variation>V</variation>
    <location>
        <position position="218"/>
    </location>
</feature>
<feature type="sequence variant" id="VAR_082567" description="In allele B*44:02; dbSNP:rs1050723." evidence="46 81">
    <original>A</original>
    <variation>V</variation>
    <location>
        <position position="223"/>
    </location>
</feature>
<feature type="sequence variant" id="VAR_082568" description="In allele B*73:01; dbSNP:rs41545916." evidence="31 60 62 69">
    <original>R</original>
    <variation>G</variation>
    <location>
        <position position="263"/>
    </location>
</feature>
<feature type="sequence variant" id="VAR_082569" description="In allele B*48:01, allele B*81:01; dbSNP:rs2308488." evidence="9 10 72 73">
    <original>A</original>
    <variation>T</variation>
    <location>
        <position position="269"/>
    </location>
</feature>
<feature type="sequence variant" id="VAR_082570" description="In allele B*73:01; dbSNP:rs41542113." evidence="31 60 62 69">
    <original>E</original>
    <variation>Q</variation>
    <location>
        <position position="277"/>
    </location>
</feature>
<feature type="sequence variant" id="VAR_082571" description="In allele B*73:01; dbSNP:rs1611623." evidence="31 60 62 69">
    <original>P</original>
    <variation>Q</variation>
    <location>
        <position position="291"/>
    </location>
</feature>
<feature type="sequence variant" id="VAR_082572" description="In allele B*73:01; dbSNP:rs41541515." evidence="31 60 62 69">
    <original>K</original>
    <variation>E</variation>
    <location>
        <position position="292"/>
    </location>
</feature>
<feature type="sequence variant" id="VAR_082573" description="In allele B*73:01; requires 2 nucleotide substitutions." evidence="31 60 62 69">
    <original>L</original>
    <variation>C</variation>
    <location>
        <position position="294"/>
    </location>
</feature>
<feature type="sequence variant" id="VAR_082574" description="In allele B*73:01; dbSNP:rs2308500." evidence="31 60 62 69">
    <original>E</original>
    <variation>K</variation>
    <location>
        <position position="299"/>
    </location>
</feature>
<feature type="sequence variant" id="VAR_082575" description="In allele B*15:01, allele B*18:01, allele B*35:01, allele B*37:01, allele B*45:01, allele B*46:01, allele B*49:01, allele B*50:01, allele B*51:01, allele B*52:01, allele B*53:01, allele B*54:01, allele B*55:01, allele B*56:01, allele B*58:01, allele B*59:01, allele B*73:01, allele B*78:01 and allele B*82:01; dbSNP:rs1131500." evidence="5 9 12 13 20 21 24 30 31 35 45 46 47 51 60 61 62 66 68 69 70 71 77 78 79 82 84">
    <original>V</original>
    <variation>I</variation>
    <location>
        <position position="306"/>
    </location>
</feature>
<feature type="sequence variant" id="VAR_082576" description="In allele B*73:01." evidence="31 60 62 69">
    <original>AVVVIG</original>
    <variation>VVTVAVV</variation>
    <location>
        <begin position="319"/>
        <end position="324"/>
    </location>
</feature>
<feature type="sequence variant" id="VAR_082577" description="In allele B*15:01, allele B*18:01, allele B*35:01, allele B*37:01, allele B*45:01, allele B*46:01, allele B*49:01, allele B*50:01, allele B*51:01, allele B*52:01, allele B*53:01, allele B*54:01, allele B*55:01, allele B*56:01, allele B*58:01, allele B*59:01, allele B*78:01 and allele B*82:01; dbSNP:rs1051488." evidence="5 9 12 13 20 21 24 30 35 45 46 47 51 61 66 68 70 71 77 78 79 82 84">
    <original>A</original>
    <variation>T</variation>
    <location>
        <position position="329"/>
    </location>
</feature>
<feature type="sequence variant" id="VAR_082578" description="In allele B*47:01; dbSNP:rs41548215." evidence="9 53">
    <original>M</original>
    <variation>V</variation>
    <location>
        <position position="331"/>
    </location>
</feature>
<feature type="sequence variant" id="VAR_082579" description="In allele B*14:01, allele B*15:01, allele B*18:01, allele B*35:01, allele B*37:01, allele B*38:01, allele B*39:02, allele B*45:01, allele B*46:01, allele B*49:01, allele B*50:01, allele B*51:01, allele B*52:01, allele B*53:01, allele B*54:01, allele B*55:01, allele B*56:01, allele B*58:01, allele B*59:01, allele B*67:01, allele B*73:01, allele B*78:01 and allele B*82:01; dbSNP:rs2308655." evidence="5 9 12 13 20 21 24 30 31 35 45 46 47 51 59 60 61 62 64 66 67 68 69 70 71 77 78 79 80 82 84">
    <original>C</original>
    <variation>S</variation>
    <location>
        <position position="349"/>
    </location>
</feature>
<feature type="strand" evidence="89">
    <location>
        <begin position="27"/>
        <end position="36"/>
    </location>
</feature>
<feature type="strand" evidence="89">
    <location>
        <begin position="41"/>
        <end position="43"/>
    </location>
</feature>
<feature type="strand" evidence="89">
    <location>
        <begin position="45"/>
        <end position="52"/>
    </location>
</feature>
<feature type="strand" evidence="89">
    <location>
        <begin position="55"/>
        <end position="61"/>
    </location>
</feature>
<feature type="strand" evidence="89">
    <location>
        <begin position="64"/>
        <end position="66"/>
    </location>
</feature>
<feature type="turn" evidence="91">
    <location>
        <begin position="67"/>
        <end position="69"/>
    </location>
</feature>
<feature type="strand" evidence="97">
    <location>
        <begin position="70"/>
        <end position="73"/>
    </location>
</feature>
<feature type="helix" evidence="89">
    <location>
        <begin position="74"/>
        <end position="76"/>
    </location>
</feature>
<feature type="helix" evidence="96">
    <location>
        <begin position="77"/>
        <end position="79"/>
    </location>
</feature>
<feature type="helix" evidence="89">
    <location>
        <begin position="81"/>
        <end position="108"/>
    </location>
</feature>
<feature type="strand" evidence="89">
    <location>
        <begin position="113"/>
        <end position="115"/>
    </location>
</feature>
<feature type="strand" evidence="89">
    <location>
        <begin position="118"/>
        <end position="127"/>
    </location>
</feature>
<feature type="strand" evidence="95">
    <location>
        <begin position="129"/>
        <end position="131"/>
    </location>
</feature>
<feature type="strand" evidence="89">
    <location>
        <begin position="133"/>
        <end position="142"/>
    </location>
</feature>
<feature type="strand" evidence="89">
    <location>
        <begin position="145"/>
        <end position="150"/>
    </location>
</feature>
<feature type="strand" evidence="89">
    <location>
        <begin position="157"/>
        <end position="161"/>
    </location>
</feature>
<feature type="helix" evidence="89">
    <location>
        <begin position="162"/>
        <end position="173"/>
    </location>
</feature>
<feature type="helix" evidence="89">
    <location>
        <begin position="176"/>
        <end position="185"/>
    </location>
</feature>
<feature type="helix" evidence="89">
    <location>
        <begin position="187"/>
        <end position="198"/>
    </location>
</feature>
<feature type="turn" evidence="89">
    <location>
        <begin position="199"/>
        <end position="204"/>
    </location>
</feature>
<feature type="strand" evidence="89">
    <location>
        <begin position="210"/>
        <end position="219"/>
    </location>
</feature>
<feature type="strand" evidence="89">
    <location>
        <begin position="222"/>
        <end position="235"/>
    </location>
</feature>
<feature type="strand" evidence="89">
    <location>
        <begin position="238"/>
        <end position="243"/>
    </location>
</feature>
<feature type="strand" evidence="94">
    <location>
        <begin position="246"/>
        <end position="248"/>
    </location>
</feature>
<feature type="helix" evidence="89">
    <location>
        <begin position="249"/>
        <end position="251"/>
    </location>
</feature>
<feature type="strand" evidence="93">
    <location>
        <begin position="252"/>
        <end position="254"/>
    </location>
</feature>
<feature type="strand" evidence="89">
    <location>
        <begin position="261"/>
        <end position="263"/>
    </location>
</feature>
<feature type="strand" evidence="89">
    <location>
        <begin position="265"/>
        <end position="274"/>
    </location>
</feature>
<feature type="turn" evidence="92">
    <location>
        <begin position="275"/>
        <end position="277"/>
    </location>
</feature>
<feature type="helix" evidence="89">
    <location>
        <begin position="278"/>
        <end position="280"/>
    </location>
</feature>
<feature type="strand" evidence="89">
    <location>
        <begin position="281"/>
        <end position="286"/>
    </location>
</feature>
<feature type="strand" evidence="90">
    <location>
        <begin position="290"/>
        <end position="292"/>
    </location>
</feature>
<feature type="strand" evidence="89">
    <location>
        <begin position="294"/>
        <end position="296"/>
    </location>
</feature>
<proteinExistence type="evidence at protein level"/>
<organism>
    <name type="scientific">Homo sapiens</name>
    <name type="common">Human</name>
    <dbReference type="NCBI Taxonomy" id="9606"/>
    <lineage>
        <taxon>Eukaryota</taxon>
        <taxon>Metazoa</taxon>
        <taxon>Chordata</taxon>
        <taxon>Craniata</taxon>
        <taxon>Vertebrata</taxon>
        <taxon>Euteleostomi</taxon>
        <taxon>Mammalia</taxon>
        <taxon>Eutheria</taxon>
        <taxon>Euarchontoglires</taxon>
        <taxon>Primates</taxon>
        <taxon>Haplorrhini</taxon>
        <taxon>Catarrhini</taxon>
        <taxon>Hominidae</taxon>
        <taxon>Homo</taxon>
    </lineage>
</organism>
<keyword id="KW-0002">3D-structure</keyword>
<keyword id="KW-1064">Adaptive immunity</keyword>
<keyword id="KW-1003">Cell membrane</keyword>
<keyword id="KW-0903">Direct protein sequencing</keyword>
<keyword id="KW-1015">Disulfide bond</keyword>
<keyword id="KW-0256">Endoplasmic reticulum</keyword>
<keyword id="KW-0325">Glycoprotein</keyword>
<keyword id="KW-0945">Host-virus interaction</keyword>
<keyword id="KW-0391">Immunity</keyword>
<keyword id="KW-0399">Innate immunity</keyword>
<keyword id="KW-0472">Membrane</keyword>
<keyword id="KW-0490">MHC I</keyword>
<keyword id="KW-0597">Phosphoprotein</keyword>
<keyword id="KW-1267">Proteomics identification</keyword>
<keyword id="KW-1185">Reference proteome</keyword>
<keyword id="KW-0732">Signal</keyword>
<keyword id="KW-0812">Transmembrane</keyword>
<keyword id="KW-1133">Transmembrane helix</keyword>
<protein>
    <recommendedName>
        <fullName>HLA class I histocompatibility antigen, B alpha chain</fullName>
    </recommendedName>
    <alternativeName>
        <fullName>Human leukocyte antigen B</fullName>
        <shortName>HLA-B</shortName>
    </alternativeName>
</protein>
<sequence>MLVMAPRTVLLLLSAALALTETWAGSHSMRYFYTSVSRPGRGEPRFISVGYVDDTQFVRFDSDAASPREEPRAPWIEQEGPEYWDRNTQIYKAQAQTDRESLRNLRGYYNQSEAGSHTLQSMYGCDVGPDGRLLRGHDQYAYDGKDYIALNEDLRSWTAADTAAQITQRKWEAAREAEQRRAYLEGECVEWLRRYLENGKDKLERADPPKTHVTHHPISDHEATLRCWALGFYPAEITLTWQRDGEDQTQDTELVETRPAGDRTFQKWAAVVVPSGEEQRYTCHVQHEGLPKPLTLRWEPSSQSTVPIVGIVAGLAVLAVVVIGAVVAAVMCRRKSSGGKGGSYSQAACSDSAQGSDVSLTA</sequence>
<evidence type="ECO:0000250" key="1">
    <source>
        <dbReference type="UniProtKB" id="P04439"/>
    </source>
</evidence>
<evidence type="ECO:0000255" key="2"/>
<evidence type="ECO:0000255" key="3">
    <source>
        <dbReference type="PROSITE-ProRule" id="PRU00114"/>
    </source>
</evidence>
<evidence type="ECO:0000256" key="4">
    <source>
        <dbReference type="SAM" id="MobiDB-lite"/>
    </source>
</evidence>
<evidence type="ECO:0000269" key="5">
    <source>
    </source>
</evidence>
<evidence type="ECO:0000269" key="6">
    <source>
    </source>
</evidence>
<evidence type="ECO:0000269" key="7">
    <source>
    </source>
</evidence>
<evidence type="ECO:0000269" key="8">
    <source>
    </source>
</evidence>
<evidence type="ECO:0000269" key="9">
    <source>
    </source>
</evidence>
<evidence type="ECO:0000269" key="10">
    <source>
    </source>
</evidence>
<evidence type="ECO:0000269" key="11">
    <source>
    </source>
</evidence>
<evidence type="ECO:0000269" key="12">
    <source>
    </source>
</evidence>
<evidence type="ECO:0000269" key="13">
    <source>
    </source>
</evidence>
<evidence type="ECO:0000269" key="14">
    <source>
    </source>
</evidence>
<evidence type="ECO:0000269" key="15">
    <source>
    </source>
</evidence>
<evidence type="ECO:0000269" key="16">
    <source>
    </source>
</evidence>
<evidence type="ECO:0000269" key="17">
    <source>
    </source>
</evidence>
<evidence type="ECO:0000269" key="18">
    <source>
    </source>
</evidence>
<evidence type="ECO:0000269" key="19">
    <source>
    </source>
</evidence>
<evidence type="ECO:0000269" key="20">
    <source>
    </source>
</evidence>
<evidence type="ECO:0000269" key="21">
    <source>
    </source>
</evidence>
<evidence type="ECO:0000269" key="22">
    <source>
    </source>
</evidence>
<evidence type="ECO:0000269" key="23">
    <source>
    </source>
</evidence>
<evidence type="ECO:0000269" key="24">
    <source>
    </source>
</evidence>
<evidence type="ECO:0000269" key="25">
    <source>
    </source>
</evidence>
<evidence type="ECO:0000269" key="26">
    <source>
    </source>
</evidence>
<evidence type="ECO:0000269" key="27">
    <source>
    </source>
</evidence>
<evidence type="ECO:0000269" key="28">
    <source>
    </source>
</evidence>
<evidence type="ECO:0000269" key="29">
    <source>
    </source>
</evidence>
<evidence type="ECO:0000269" key="30">
    <source>
    </source>
</evidence>
<evidence type="ECO:0000269" key="31">
    <source>
    </source>
</evidence>
<evidence type="ECO:0000269" key="32">
    <source>
    </source>
</evidence>
<evidence type="ECO:0000269" key="33">
    <source>
    </source>
</evidence>
<evidence type="ECO:0000269" key="34">
    <source>
    </source>
</evidence>
<evidence type="ECO:0000269" key="35">
    <source>
    </source>
</evidence>
<evidence type="ECO:0000269" key="36">
    <source>
    </source>
</evidence>
<evidence type="ECO:0000269" key="37">
    <source>
    </source>
</evidence>
<evidence type="ECO:0000269" key="38">
    <source>
    </source>
</evidence>
<evidence type="ECO:0000269" key="39">
    <source>
    </source>
</evidence>
<evidence type="ECO:0000269" key="40">
    <source>
    </source>
</evidence>
<evidence type="ECO:0000269" key="41">
    <source>
    </source>
</evidence>
<evidence type="ECO:0000269" key="42">
    <source>
    </source>
</evidence>
<evidence type="ECO:0000269" key="43">
    <source>
    </source>
</evidence>
<evidence type="ECO:0000269" key="44">
    <source>
    </source>
</evidence>
<evidence type="ECO:0000269" key="45">
    <source>
    </source>
</evidence>
<evidence type="ECO:0000269" key="46">
    <source>
    </source>
</evidence>
<evidence type="ECO:0000269" key="47">
    <source>
    </source>
</evidence>
<evidence type="ECO:0000269" key="48">
    <source>
    </source>
</evidence>
<evidence type="ECO:0000269" key="49">
    <source>
    </source>
</evidence>
<evidence type="ECO:0000269" key="50">
    <source>
    </source>
</evidence>
<evidence type="ECO:0000269" key="51">
    <source>
    </source>
</evidence>
<evidence type="ECO:0000269" key="52">
    <source>
    </source>
</evidence>
<evidence type="ECO:0000269" key="53">
    <source>
    </source>
</evidence>
<evidence type="ECO:0000269" key="54">
    <source>
    </source>
</evidence>
<evidence type="ECO:0000269" key="55">
    <source>
    </source>
</evidence>
<evidence type="ECO:0000269" key="56">
    <source>
    </source>
</evidence>
<evidence type="ECO:0000269" key="57">
    <source>
    </source>
</evidence>
<evidence type="ECO:0000269" key="58">
    <source>
    </source>
</evidence>
<evidence type="ECO:0000269" key="59">
    <source>
    </source>
</evidence>
<evidence type="ECO:0000269" key="60">
    <source>
    </source>
</evidence>
<evidence type="ECO:0000269" key="61">
    <source>
    </source>
</evidence>
<evidence type="ECO:0000269" key="62">
    <source>
    </source>
</evidence>
<evidence type="ECO:0000269" key="63">
    <source>
    </source>
</evidence>
<evidence type="ECO:0000269" key="64">
    <source>
    </source>
</evidence>
<evidence type="ECO:0000269" key="65">
    <source>
    </source>
</evidence>
<evidence type="ECO:0000269" key="66">
    <source>
    </source>
</evidence>
<evidence type="ECO:0000269" key="67">
    <source>
    </source>
</evidence>
<evidence type="ECO:0000269" key="68">
    <source>
    </source>
</evidence>
<evidence type="ECO:0000269" key="69">
    <source>
    </source>
</evidence>
<evidence type="ECO:0000269" key="70">
    <source>
    </source>
</evidence>
<evidence type="ECO:0000269" key="71">
    <source>
    </source>
</evidence>
<evidence type="ECO:0000269" key="72">
    <source>
    </source>
</evidence>
<evidence type="ECO:0000269" key="73">
    <source>
    </source>
</evidence>
<evidence type="ECO:0000269" key="74">
    <source>
    </source>
</evidence>
<evidence type="ECO:0000269" key="75">
    <source>
    </source>
</evidence>
<evidence type="ECO:0000269" key="76">
    <source>
    </source>
</evidence>
<evidence type="ECO:0000269" key="77">
    <source ref="37"/>
</evidence>
<evidence type="ECO:0000269" key="78">
    <source ref="38"/>
</evidence>
<evidence type="ECO:0000269" key="79">
    <source ref="40"/>
</evidence>
<evidence type="ECO:0000269" key="80">
    <source ref="41"/>
</evidence>
<evidence type="ECO:0000269" key="81">
    <source ref="42"/>
</evidence>
<evidence type="ECO:0000269" key="82">
    <source ref="44"/>
</evidence>
<evidence type="ECO:0000269" key="83">
    <source ref="46"/>
</evidence>
<evidence type="ECO:0000269" key="84">
    <source ref="47"/>
</evidence>
<evidence type="ECO:0000269" key="85">
    <source ref="48"/>
</evidence>
<evidence type="ECO:0000305" key="86">
    <source>
    </source>
</evidence>
<evidence type="ECO:0000312" key="87">
    <source>
        <dbReference type="HGNC" id="HGNC:4932"/>
    </source>
</evidence>
<evidence type="ECO:0007744" key="88">
    <source>
    </source>
</evidence>
<evidence type="ECO:0007829" key="89">
    <source>
        <dbReference type="PDB" id="1K5N"/>
    </source>
</evidence>
<evidence type="ECO:0007829" key="90">
    <source>
        <dbReference type="PDB" id="3CZF"/>
    </source>
</evidence>
<evidence type="ECO:0007829" key="91">
    <source>
        <dbReference type="PDB" id="4QRS"/>
    </source>
</evidence>
<evidence type="ECO:0007829" key="92">
    <source>
        <dbReference type="PDB" id="4U1L"/>
    </source>
</evidence>
<evidence type="ECO:0007829" key="93">
    <source>
        <dbReference type="PDB" id="4U1M"/>
    </source>
</evidence>
<evidence type="ECO:0007829" key="94">
    <source>
        <dbReference type="PDB" id="4U1S"/>
    </source>
</evidence>
<evidence type="ECO:0007829" key="95">
    <source>
        <dbReference type="PDB" id="5T70"/>
    </source>
</evidence>
<evidence type="ECO:0007829" key="96">
    <source>
        <dbReference type="PDB" id="5WMR"/>
    </source>
</evidence>
<evidence type="ECO:0007829" key="97">
    <source>
        <dbReference type="PDB" id="6BJ8"/>
    </source>
</evidence>
<name>HLAB_HUMAN</name>
<accession>P01889</accession>
<accession>A0A2I6Q7B5</accession>
<accession>B0V0B8</accession>
<accession>G3GN01</accession>
<accession>O02862</accession>
<accession>O02956</accession>
<accession>O02957</accession>
<accession>O02960</accession>
<accession>O19555</accession>
<accession>O19556</accession>
<accession>O19595</accession>
<accession>O19615</accession>
<accession>O19624</accession>
<accession>O19625</accession>
<accession>O19627</accession>
<accession>O19641</accession>
<accession>O19651</accession>
<accession>O19675</accession>
<accession>O19692</accession>
<accession>O19758</accession>
<accession>O19779</accession>
<accession>O19783</accession>
<accession>O46702</accession>
<accession>O62897</accession>
<accession>O62901</accession>
<accession>O62915</accession>
<accession>O62917</accession>
<accession>O62919</accession>
<accession>O77933</accession>
<accession>O77959</accession>
<accession>O78053</accession>
<accession>O78138</accession>
<accession>O78160</accession>
<accession>O78163</accession>
<accession>O78172</accession>
<accession>O78173</accession>
<accession>O78180</accession>
<accession>O78217</accession>
<accession>O95730</accession>
<accession>O98140</accession>
<accession>P01890</accession>
<accession>P03989</accession>
<accession>P10317</accession>
<accession>P10318</accession>
<accession>P10319</accession>
<accession>P10320</accession>
<accession>P18463</accession>
<accession>P18464</accession>
<accession>P18465</accession>
<accession>P19373</accession>
<accession>P30460</accession>
<accession>P30461</accession>
<accession>P30462</accession>
<accession>P30463</accession>
<accession>P30464</accession>
<accession>P30465</accession>
<accession>P30466</accession>
<accession>P30467</accession>
<accession>P30468</accession>
<accession>P30469</accession>
<accession>P30470</accession>
<accession>P30471</accession>
<accession>P30472</accession>
<accession>P30473</accession>
<accession>P30474</accession>
<accession>P30475</accession>
<accession>P30476</accession>
<accession>P30477</accession>
<accession>P30478</accession>
<accession>P30479</accession>
<accession>P30480</accession>
<accession>P30481</accession>
<accession>P30482</accession>
<accession>P30483</accession>
<accession>P30484</accession>
<accession>P30485</accession>
<accession>P30486</accession>
<accession>P30487</accession>
<accession>P30488</accession>
<accession>P30489</accession>
<accession>P30490</accession>
<accession>P30491</accession>
<accession>P30492</accession>
<accession>P30493</accession>
<accession>P30494</accession>
<accession>P30495</accession>
<accession>P30496</accession>
<accession>P30497</accession>
<accession>P30498</accession>
<accession>P30513</accession>
<accession>P30685</accession>
<accession>P79489</accession>
<accession>P79490</accession>
<accession>P79496</accession>
<accession>P79504</accession>
<accession>P79523</accession>
<accession>P79524</accession>
<accession>P79542</accession>
<accession>P79555</accession>
<accession>Q04826</accession>
<accession>Q08136</accession>
<accession>Q29633</accession>
<accession>Q29636</accession>
<accession>Q29638</accession>
<accession>Q29661</accession>
<accession>Q29665</accession>
<accession>Q29678</accession>
<accession>Q29679</accession>
<accession>Q29681</accession>
<accession>Q29693</accession>
<accession>Q29695</accession>
<accession>Q29697</accession>
<accession>Q29718</accession>
<accession>Q29742</accession>
<accession>Q29749</accession>
<accession>Q29762</accession>
<accession>Q29764</accession>
<accession>Q29829</accession>
<accession>Q29836</accession>
<accession>Q29842</accession>
<accession>Q29845</accession>
<accession>Q29846</accession>
<accession>Q29847</accession>
<accession>Q29848</accession>
<accession>Q29850</accession>
<accession>Q29851</accession>
<accession>Q29852</accession>
<accession>Q29854</accession>
<accession>Q29855</accession>
<accession>Q29857</accession>
<accession>Q29858</accession>
<accession>Q29861</accession>
<accession>Q29924</accession>
<accession>Q29925</accession>
<accession>Q29933</accession>
<accession>Q29935</accession>
<accession>Q29936</accession>
<accession>Q29940</accession>
<accession>Q29953</accession>
<accession>Q29961</accession>
<accession>Q29982</accession>
<accession>Q30173</accession>
<accession>Q30198</accession>
<accession>Q31603</accession>
<accession>Q31610</accession>
<accession>Q31612</accession>
<accession>Q31613</accession>
<accession>Q546L8</accession>
<accession>Q546M4</accession>
<accession>Q5JP37</accession>
<accession>Q5QT24</accession>
<accession>Q5RIP1</accession>
<accession>Q5SRJ2</accession>
<accession>Q5TK76</accession>
<accession>Q5TK77</accession>
<accession>Q860I4</accession>
<accession>Q861B5</accession>
<accession>Q8HWF0</accession>
<accession>Q8MGQ3</accession>
<accession>Q8MHN4</accession>
<accession>Q8SNC5</accession>
<accession>Q95343</accession>
<accession>Q95344</accession>
<accession>Q95365</accession>
<accession>Q95369</accession>
<accession>Q95392</accession>
<accession>Q95HA3</accession>
<accession>Q95HA8</accession>
<accession>Q95HM9</accession>
<accession>Q95IA6</accession>
<accession>Q95IB8</accession>
<accession>Q95IH5</accession>
<accession>Q95J00</accession>
<accession>Q96IT9</accession>
<accession>Q9BCM6</accession>
<accession>Q9BCM7</accession>
<accession>Q9BCM8</accession>
<accession>Q9BD06</accession>
<accession>Q9BD38</accession>
<accession>Q9BD43</accession>
<accession>Q9GIL3</accession>
<accession>Q9GIM3</accession>
<accession>Q9GIX1</accession>
<accession>Q9GIY5</accession>
<accession>Q9GIZ0</accession>
<accession>Q9GIZ9</accession>
<accession>Q9GJ00</accession>
<accession>Q9GJ17</accession>
<accession>Q9GJ20</accession>
<accession>Q9GJ23</accession>
<accession>Q9GJ31</accession>
<accession>Q9GJF0</accession>
<accession>Q9GJM7</accession>
<accession>Q9MX21</accession>
<accession>Q9MY37</accession>
<accession>Q9MY42</accession>
<accession>Q9MY43</accession>
<accession>Q9MY61</accession>
<accession>Q9MY75</accession>
<accession>Q9MY78</accession>
<accession>Q9MY79</accession>
<accession>Q9MY84</accession>
<accession>Q9MY92</accession>
<accession>Q9MY93</accession>
<accession>Q9MY94</accession>
<accession>Q9MYB8</accession>
<accession>Q9MYC3</accession>
<accession>Q9MYC7</accession>
<accession>Q9MYF4</accession>
<accession>Q9MYG1</accession>
<accession>Q9TP35</accession>
<accession>Q9TP36</accession>
<accession>Q9TP37</accession>
<accession>Q9TP95</accession>
<accession>Q9TPQ7</accession>
<accession>Q9TPQ9</accession>
<accession>Q9TPR2</accession>
<accession>Q9TPR4</accession>
<accession>Q9TPS6</accession>
<accession>Q9TPT2</accession>
<accession>Q9TPT4</accession>
<accession>Q9TPT6</accession>
<accession>Q9TPV2</accession>
<accession>Q9TQG1</accession>
<accession>Q9TQH3</accession>
<accession>Q9TQH6</accession>
<accession>Q9TQH7</accession>
<accession>Q9TQH8</accession>
<accession>Q9TQH9</accession>
<accession>Q9TQM2</accession>
<accession>Q9TQN4</accession>
<accession>Q9TQN6</accession>
<accession>Q9UQS8</accession>
<accession>Q9UQT0</accession>
<comment type="function">
    <text evidence="26 36 40 42 50 65 76">Antigen-presenting major histocompatibility complex class I (MHCI) molecule. In complex with B2M/beta 2 microglobulin displays primarily viral and tumor-derived peptides on antigen-presenting cells for recognition by alpha-beta T cell receptor (TCR) on HLA-B-restricted CD8-positive T cells, guiding antigen-specific T cell immune response to eliminate infected or transformed cells (PubMed:23209413, PubMed:25808313, PubMed:29531227, PubMed:9620674). May also present self-peptides derived from the signal sequence of secreted or membrane proteins, although T cells specific for these peptides are usually inactivated to prevent autoreactivity (PubMed:18991276, PubMed:7743181). Both the peptide and the MHC molecule are recognized by TCR, the peptide is responsible for the fine specificity of antigen recognition and MHC residues account for the MHC restriction of T cells (PubMed:24600035, PubMed:29531227, PubMed:9620674). Typically presents intracellular peptide antigens of 8 to 13 amino acids that arise from cytosolic proteolysis via constitutive proteasome and IFNG-induced immunoproteasome (PubMed:23209413). Can bind different peptides containing allele-specific binding motifs, which are mainly defined by anchor residues at position 2 and 9 (PubMed:25808313, PubMed:29531227).</text>
</comment>
<comment type="function">
    <text evidence="42 50 54 65">Allele B*07:02: Displays peptides sharing a common signature motif, namely a Pro residue at position 2 and mainly a Leu anchor residue at the C-terminus (PubMed:7743181). Presents a long peptide (APRGPHGGAASGL) derived from the cancer-testis antigen CTAG1A/NY-ESO-1, eliciting a polyclonal CD8-positive T cell response against tumor cells (PubMed:29531227). Presents viral epitopes derived from HIV-1 gag-pol (TPQDLNTML) and Nef (RPQVPLRPM) (PubMed:25808313). Presents an immunodominant epitope derived from SARS-CoV-2 N/nucleoprotein (SPRWYFYYL) (PubMed:32887977). Displays self-peptides including a peptide derived from the signal sequence of HLA-DPB1 (APRTVALTA) (PubMed:7743181).</text>
</comment>
<comment type="function">
    <text evidence="76">Allele B*08:01: Presents to CD8-positive T cells viral epitopes derived from EBV/HHV-4 EBNA3 (QAKWRLQTL), eliciting cytotoxic T cell response.</text>
</comment>
<comment type="function">
    <text evidence="23">Allele B*13:02: Presents multiple HIV-1 epitopes derived from gag (RQANFLGKI, GQMREPRGSDI), nef (RQDILDLWI), gag-pol (RQYDQILIE, GQGQWTYQI) and rev (LQLPPLERL), all having in common a Gln residue at position 2 and mainly hydrophobic amino acids Leu, Ile or Val at the C-terminus. Associated with successful control of HIV-1 infection.</text>
</comment>
<comment type="function">
    <text evidence="8 15 26 38">Allele B*18:01: Preferentially presents octomeric and nonameric peptides sharing a common motif, namely a Glu at position 2 and Phe or Tyr anchor residues at the C-terminus (PubMed:14978097, PubMed:18991276, PubMed:23749632). Presents an EBV/HHV-4 epitope derived from BZLF1 (SELEIKRY) (PubMed:23749632). May present to CD8-positive T cells an antigenic peptide derived from MAGEA3 (MEVDPIGHLY), triggering an anti-tumor immune response (PubMed:12366779). May display a broad repertoire of self-peptides with a preference for peptides derived from RNA-binding proteins (PubMed:14978097).</text>
</comment>
<comment type="function">
    <text evidence="17 19 25 27 29 74 76">Allele B*27:05: Presents to CD8-positive T cells immunodominant viral epitopes derived from HCV POLG (ARMILMTHF), HIV-1 gag (KRWIILGLNK), IAV NP (SRYWAIRTR), SARS-CoV-2 N/nucleoprotein (QRNAPRITF), EBV/HHV-4 EBNA4 (HRCQAIRKK) and EBV/HHV-4 EBNA6 (RRIYDLIEL), conferring longterm protection against viral infection (PubMed:15113903, PubMed:18385228, PubMed:19139562, PubMed:32887977, PubMed:9620674). Can present self-peptides derived from cytosolic and nuclear proteins. All peptides carry an Arg at position 2 (PubMed:1922338). The peptide-bound form interacts with NK cell inhibitory receptor KIR3DL1 and inhibits NK cell activation in a peptide-specific way, being particularly sensitive to the nature of the amino acid side chain at position 8 of the antigenic peptide (PubMed:15657948, PubMed:8879234). KIR3DL1 fails to recognize HLA-B*27:05 in complex with B2M and EBV/HHV-4 EBNA6 (RRIYDLIEL) peptide, which can lead to increased activation of NK cells during infection (PubMed:15657948). May present an altered repertoire of peptides in the absence of TAP1-TAP2 and TAPBPL (PubMed:9620674).</text>
</comment>
<comment type="function">
    <text evidence="26 54">Allele B*40:01: Presents immunodominant viral epitopes derived from EBV/HHV-4 LMP2 (IEDPPFNSL) and SARS-CoV-2 N/nucleoprotein (MEVTPSGTWL), triggering memory CD8-positive T cell response (PubMed:18991276, PubMed:32887977). Displays self-peptides sharing a signature motif, namely a Glu at position 2 and a Leu anchor residue at the C-terminus (PubMed:18991276).</text>
</comment>
<comment type="function">
    <text evidence="26">Allele B*41:01: Displays self-peptides sharing a signature motif, namely a Glu at position 2 and Ala or Pro anchor residues at the C-terminus.</text>
</comment>
<comment type="function">
    <text evidence="26 76">Allele B*44:02: Presents immunodominant viral epitopes derived from EBV/HHV-4 EBNA4 (VEITPYKPTW) and EBNA6 (AEGGVGWRHW, EENLLDFVRF), triggering memory CD8-positive T cell response (PubMed:18991276, PubMed:9620674). Displays self-peptides sharing a signature motif, namely a Glu at position 2 and Phe, Tyr or Trp anchor residues at the C-terminus (PubMed:18991276).</text>
</comment>
<comment type="function">
    <text evidence="26">Allele B*45:01: Displays self-peptides sharing a signature motif, namely a Glu at position 2 and Ala or Pro anchor residues at the C-terminus.</text>
</comment>
<comment type="function">
    <text evidence="48">Allele B*46:01: Preferentially presents nonameric peptides sharing a signature motif, namely Ala and Leu at position 2 and Tyr, Phe, Leu, or Met anchor residues at the C-terminus. The peptide-bound form interacts with KIR2DL3 and inhibits NK cell cytotoxic response in a peptide-specific way.</text>
</comment>
<comment type="function">
    <text evidence="26">Allele B*47:01: Displays self-peptides sharing a signature motif, namely an Asp at position 2 and Leu or Met anchor residues at the C-terminus.</text>
</comment>
<comment type="function">
    <text evidence="26">Allele B*49:01: Displays self-peptides sharing a signature motif, namely a Glu at position 2 and Ile or Val anchor residues at the C-terminus.</text>
</comment>
<comment type="function">
    <text evidence="26">Allele B*50:01: Displays self-peptides sharing a signature motif, namely a Glu at position 2 and Ala or Pro anchor residues at the C-terminus.</text>
</comment>
<comment type="function">
    <text evidence="40">Allele B*51:01: Presents an octomeric HIV-1 epitope derived from gag-pol (TAFTIPSI) to the public TRAV17/TRBV7-3 TCR clonotype, strongly suppressing HIV-1 replication.</text>
</comment>
<comment type="function">
    <text evidence="65">Allele B*54:01: Displays peptides sharing a common signature motif, namely a Pro residue at position 2 and Ala anchor residue at the C-terminus.</text>
</comment>
<comment type="function">
    <text evidence="65">Allele B*55:01: Displays peptides sharing a common signature motif, namely a Pro residue at position 2 and Ala anchor residue at the C-terminus.</text>
</comment>
<comment type="function">
    <text evidence="65">Allele B*56:01: Displays peptides sharing a common signature motif, namely a Pro residue at position 2 and Ala anchor residue at the C-terminus.</text>
</comment>
<comment type="function">
    <text evidence="32 41 55">Allele B*57:01: The peptide-bound form recognizes KIR3DL1 and inhibits NK cell cytotoxic response. Presents HIV gag peptides (immunodominant KAFSPEVIPMF and subdominant KALGPAATL epitopes) predominantly to CD8-positive T cell clones expressing a TRAV41-containing TCR, triggering HLA-B-restricted T cell responses.</text>
</comment>
<comment type="function">
    <text evidence="65">Allele B*67:01: Displays peptides sharing a common signature motif, namely a Pro residue at position 2 and Leu anchor residue at the C-terminus.</text>
</comment>
<comment type="subunit">
    <text evidence="19 22 32 40 41 42 43 44 48 50 75 76">Heterotrimer that consists of an alpha chain HLA-B, a beta chain B2M and a peptide (peptide-HLA-B-B2M) (PubMed:15657948, PubMed:17057332, PubMed:22020283, PubMed:24600035, PubMed:25808313, PubMed:29531227). Early in biogenesis, HLA-B-B2M dimer interacts with the components of the peptide-loading complex composed of TAPBP, TAP1-TAP2, TAPBPL, PDIA3/ERP57 and CALR (PubMed:26416272, PubMed:26439010, PubMed:9036970, PubMed:9620674). Interacts with TAP1-TAP2 transporter via TAPBP; this interaction is obligatory for the loading of peptide epitopes delivered to the ER by TAP1-TAP2 transporter (PubMed:9036970, PubMed:9620674). Interacts with TAPBPL; TAPBPL binds peptide-free HLA-B-B2M complexes or those loaded with low affinity peptides, likely facilitating peptide exchange for higher affinity peptides (PubMed:26439010). Only optimally assembled peptide-HLA-B-B2M trimer translocates to the surface of antigen-presenting cells, where it interacts with TCR and CD8 coreceptor on the surface of T cells. HLA-B (via polymorphic alpha-1 and alpha-2 domains) interacts with antigen-specific TCR (via CDR1, CDR2 and CDR3 domains) (PubMed:24600035, PubMed:29531227). One HLA-B molecule (mainly via nonpolymorphic alpha-3 domain) interacts with one CD8A homodimer (via CDR-like loop); this interaction ensures peptide-HLA-B-B2M recognition by CD8-positive T cells only (PubMed:29531227). Allele B*57:01 interacts (via Bw4 motif) with KIR3DL1 (via Ig-like C2-type domain); this interaction may interfere with peptide binding (PubMed:22020283, PubMed:25480565). Allele B*46:01 interacts with KIR2DL3 (PubMed:28514659).</text>
</comment>
<comment type="subunit">
    <text evidence="6">(Microbial infection) Interacts with HTLV-1 accessory protein p12I.</text>
</comment>
<comment type="interaction">
    <interactant intactId="EBI-1046513">
        <id>P01889</id>
    </interactant>
    <interactant intactId="EBI-8684277">
        <id>P43626</id>
        <label>KIR2DL1</label>
    </interactant>
    <organismsDiffer>false</organismsDiffer>
    <experiments>2</experiments>
</comment>
<comment type="interaction">
    <interactant intactId="EBI-1046513">
        <id>P01889</id>
    </interactant>
    <interactant intactId="EBI-8632435">
        <id>P43628</id>
        <label>KIR2DL3</label>
    </interactant>
    <organismsDiffer>false</organismsDiffer>
    <experiments>2</experiments>
</comment>
<comment type="interaction">
    <interactant intactId="EBI-1046513">
        <id>P01889</id>
    </interactant>
    <interactant intactId="EBI-13916812">
        <id>P43632</id>
        <label>KIR2DS4</label>
    </interactant>
    <organismsDiffer>false</organismsDiffer>
    <experiments>2</experiments>
</comment>
<comment type="interaction">
    <interactant intactId="EBI-1046513">
        <id>P01889</id>
    </interactant>
    <interactant intactId="EBI-3910993">
        <id>P43629</id>
        <label>KIR3DL1</label>
    </interactant>
    <organismsDiffer>false</organismsDiffer>
    <experiments>3</experiments>
</comment>
<comment type="interaction">
    <interactant intactId="EBI-1046513">
        <id>P01889</id>
    </interactant>
    <interactant intactId="EBI-15316524">
        <id>Q14943</id>
        <label>KIR3DS1</label>
    </interactant>
    <organismsDiffer>false</organismsDiffer>
    <experiments>7</experiments>
</comment>
<comment type="interaction">
    <interactant intactId="EBI-1046513">
        <id>P01889</id>
    </interactant>
    <interactant intactId="EBI-2816428">
        <id>Q8N423</id>
        <label>LILRB2</label>
    </interactant>
    <organismsDiffer>false</organismsDiffer>
    <experiments>7</experiments>
</comment>
<comment type="interaction">
    <interactant intactId="EBI-1046513">
        <id>P01889</id>
    </interactant>
    <interactant intactId="EBI-12017416">
        <id>Q9BX59</id>
        <label>TAPBPL</label>
    </interactant>
    <organismsDiffer>false</organismsDiffer>
    <experiments>3</experiments>
</comment>
<comment type="subcellular location">
    <subcellularLocation>
        <location evidence="41 44 76">Cell membrane</location>
        <topology evidence="2">Single-pass type I membrane protein</topology>
    </subcellularLocation>
    <subcellularLocation>
        <location evidence="86">Endoplasmic reticulum membrane</location>
        <topology evidence="2">Single-pass type I membrane protein</topology>
    </subcellularLocation>
</comment>
<comment type="domain">
    <text evidence="32 41 42">The alpha-1 domain is a structural part of the peptide-binding cleft (PubMed:25808313). Residues 101-107 determine Bw4/Bw6 motifs, which serologically distinguish HLA-B alleles. Each HLA-B allele possesses either the Bw4 or Bw6 motif. Only HLA-B alleles bearing the Bw4 epitope are recognized by NK cell inhibitory receptor KIR3DL1 (PubMed:22020283, PubMed:25480565).</text>
</comment>
<comment type="domain">
    <text evidence="1 42">The alpha-2 domain is a structural part of the peptide-binding cleft (PubMed:25808313). Mediates the interaction with TAP1-TAP2 complex (By similarity).</text>
</comment>
<comment type="domain">
    <text evidence="1">The alpha-3 Ig-like domain mediates the interaction with CD8 coreceptor.</text>
</comment>
<comment type="domain">
    <text evidence="57">The VL9 peptide/epitope (VMAPRT[V/L][L/V/I/F]L) derived from the signal sequence is loaded onto HLA-E and enables HLA-E expression at the plasma membrane. Distinct VL9 peptides presented by HLA-E variably affect its recognition by KLRD1-KLRC1 or KLRD1-KLRC2 receptors on NK cells. Most HLA-B allotypes contain VL9 peptides with low affinity for HLA-E. The VL9 peptide derived from HLA-B*07, B*08, B*14, B*38, B*39, B*42 and B*48 allotypes, displays high affinity for HLA-E yet fails to drive NK cell activation. It outcompetes other VL9 peptides derived from HLA-A and HLA-C for binding to HLA-E, lowering the threshold of NK cell activation.</text>
</comment>
<comment type="polymorphism">
    <text evidence="49 57">The most polymorphic of the mammalian genome. Polymorphic residues encode for alpha-1 and alpha-2 domains of the peptide-binding cleft, where they contribute to variations in peptide binding and TCR recognition among different alleles. The human population is estimated to have millions of HLA-B alleles. But only 17 common HLA-A alleles are considered core alleles, representing all functionally significant variation (polymorphism) in alpha-1 and alpha-2 domains. These are: B*07:02; B*08:01; B*13:02; B*15:01; B*18:01; B*27:05; B*35:01; B*37:01; B*38:01; B*40:01; B*44:02; B*45:01; B*51:01; B*54:01; B*57:01 and B*73:01. Among these, B*07:02; B*15:01; B*18:01; B*37:01; B*51:01; B*54:01; B*57:01 and B*73:01, were likely passed by introgression from archaic to modern humans. Functional alleles of more recent origin (non-core) were derived by recombination (PubMed:28650991). The sequence shown is that of B*07:02. The sequences of core alleles and common representative alleles of serologically distinct allele groups are described as variants of B*07:02. Allelic variations of HLA-B signal peptide regulate HLA-E recognition by KLRD1-KLRC1 and KLRD1-KLRC2 receptors in viral infection and tumorigenesis by affecting its processing and by changing the affinity of HLA-E-VL9 complex for KLRD1-KLRC1 and KLRD1-KLRC2 receptors.</text>
</comment>
<comment type="disease">
    <disease id="DI-02879">
        <name>Stevens-Johnson syndrome</name>
        <acronym>SJS</acronym>
        <description>A rare blistering mucocutaneous disease that share clinical and histopathologic features with toxic epidermal necrolysis. Both disorders are characterized by high fever, malaise, and a rapidly developing blistering exanthema of macules and target-like lesions accompanied by mucosal involvement. Stevens-Johnson syndrome is a milder disease characterized by destruction and detachment of the skin epithelium and mucous membranes involving less than 10% of the body surface area. Ocular symptoms include ulcerative conjunctivitis, keratitis, iritis, uveitis and sometimes blindness. It can be caused by a severe adverse reaction to particular types of medication, although Mycoplasma infections may induce some cases.</description>
        <dbReference type="MIM" id="608579"/>
    </disease>
    <text evidence="16">Disease susceptibility is associated with variants affecting the gene represented in this entry. Increased susceptibility to Stevens-Johnson syndrome is conferred by allele B*15:02.</text>
</comment>
<comment type="disease">
    <disease id="DI-02696">
        <name>Spondyloarthropathy 1</name>
        <acronym>SPDA1</acronym>
        <description>A chronic rheumatic disease with multifactorial inheritance. It includes a spectrum of related disorders comprising ankylosing spondylitis, a subset of psoriatic arthritis, reactive arthritis (e.g. Reiter syndrome), arthritis associated with inflammatory bowel disease and undifferentiated spondyloarthropathy. These disorders may occur simultaneously or sequentially in the same patient, probably representing various phenotypic expressions of the same disease. Ankylosing spondylitis is the form of rheumatoid arthritis affecting the spine and is considered the prototype of seronegative spondyloarthropathies. It produces pain and stiffness as a result of inflammation of the sacroiliac, intervertebral, and costovertebral joints.</description>
        <dbReference type="MIM" id="106300"/>
    </disease>
    <text evidence="18">Disease susceptibility is associated with variants affecting the gene represented in this entry. A restricted number of HLA-B*27 subtypes can be associated with ankylosing spondylitis and other B*27-related diseases, and an elevated frequency of the B*27:02 allele in ankylosing spondylitis patients is identified. The allele B*27:07 seems to have a protective role in some populations because it was found only in the healthy controls.</text>
</comment>
<comment type="disease">
    <text evidence="37">There is evidence that HLA-B*51 is associated with susceptibility to Behcet disease (BD). However, it is not certain whether HLA-B*51 itself or a closely linked gene is responsible for susceptibility. The world distribution of HLA-B*51 in healthy people corresponds to the global distribution of BD; in Southern hemisphere countries (Africa, South Pacific, etc.) and in some parts of Europe, the prevalence of HLA-B*51 in healthy people is low or null, corresponding to a low prevalence of BD. The wide variation that exists in the relative risk of HLA-B*51 would support other nongenetic risk factors.</text>
</comment>
<comment type="disease">
    <text evidence="7">The presence of allele B*57:01 is associated with increased susceptibility to abacavir hypersensitivity [MIM:142830] in HIV-1 patients.</text>
</comment>
<comment type="disease">
    <text evidence="33">Allele group B*08 is associated with increased susceptibility to rheumatoid arthritis, where affected individuals have antibodies to cyclic citrullinated peptide (anti-CCP-positive rheumatoid arthritis).</text>
</comment>